<name>LDLR_HUMAN</name>
<keyword id="KW-0002">3D-structure</keyword>
<keyword id="KW-0025">Alternative splicing</keyword>
<keyword id="KW-1003">Cell membrane</keyword>
<keyword id="KW-0153">Cholesterol metabolism</keyword>
<keyword id="KW-0168">Coated pit</keyword>
<keyword id="KW-0903">Direct protein sequencing</keyword>
<keyword id="KW-0225">Disease variant</keyword>
<keyword id="KW-1015">Disulfide bond</keyword>
<keyword id="KW-0245">EGF-like domain</keyword>
<keyword id="KW-0254">Endocytosis</keyword>
<keyword id="KW-0967">Endosome</keyword>
<keyword id="KW-0325">Glycoprotein</keyword>
<keyword id="KW-0333">Golgi apparatus</keyword>
<keyword id="KW-1183">Host cell receptor for virus entry</keyword>
<keyword id="KW-0945">Host-virus interaction</keyword>
<keyword id="KW-0427">LDL</keyword>
<keyword id="KW-0443">Lipid metabolism</keyword>
<keyword id="KW-0445">Lipid transport</keyword>
<keyword id="KW-0458">Lysosome</keyword>
<keyword id="KW-0472">Membrane</keyword>
<keyword id="KW-0597">Phosphoprotein</keyword>
<keyword id="KW-1267">Proteomics identification</keyword>
<keyword id="KW-0675">Receptor</keyword>
<keyword id="KW-1185">Reference proteome</keyword>
<keyword id="KW-0677">Repeat</keyword>
<keyword id="KW-0732">Signal</keyword>
<keyword id="KW-0753">Steroid metabolism</keyword>
<keyword id="KW-1207">Sterol metabolism</keyword>
<keyword id="KW-0812">Transmembrane</keyword>
<keyword id="KW-1133">Transmembrane helix</keyword>
<keyword id="KW-0813">Transport</keyword>
<keyword id="KW-0832">Ubl conjugation</keyword>
<comment type="function">
    <text evidence="51 52 59">Binds low density lipoprotein /LDL, the major cholesterol-carrying lipoprotein of plasma, and transports it into cells by endocytosis. In order to be internalized, the receptor-ligand complexes must first cluster into clathrin-coated pits. Forms a ternary complex with PGRMC1 and TMEM97 receptors which increases LDLR-mediated LDL internalization (PubMed:30443021).</text>
</comment>
<comment type="function">
    <text evidence="15 24">(Microbial infection) Acts as a receptor for hepatitis C virus in hepatocytes, but not through a direct interaction with viral proteins.</text>
</comment>
<comment type="function">
    <text evidence="45">(Microbial infection) Acts as a receptor for Vesicular stomatitis virus.</text>
</comment>
<comment type="function">
    <text evidence="20">(Microbial infection) In case of HIV-1 infection, may function as a receptor for extracellular Tat in neurons, mediating its internalization in uninfected cells.</text>
</comment>
<comment type="function">
    <text evidence="56">(Microbial infection) Acts as a receptor for Crimean-Congo hemorrhagic fever virus (CCHFV).</text>
</comment>
<comment type="function">
    <text evidence="57">(Microbial infection) Acts as a receptor for many Alphavirus, including Getah virus (GETV), Ross river virus (RRV) and Semliki Forest virus.</text>
</comment>
<comment type="subunit">
    <text evidence="3 23 26 30 34 40 43 52">Interacts (via NPXY motif) with DAB2 (via PID domain); the interaction is impaired by tyrosine phosphorylation of the NPXY motif (By similarity). Interacts (via NPXY motif) with LDLRAP1 (via PID domain) (PubMed:12221107, PubMed:22509010). Interacts with ARRB1 (PubMed:12944399). Interacts with SNX17 (PubMed:14739284). Interacts with the full-length immature form of PCSK9 (via C-terminus) (PubMed:17461796, PubMed:21149300). Interacts with PGRMC1 and TMEM97; the interaction increases LDL internalization (PubMed:30443021).</text>
</comment>
<comment type="subunit">
    <text evidence="54">(Microbial infection) Interacts with C.difficile toxin TcdA, suggesting that it may contribute to TcdA toxin entry into cells.</text>
</comment>
<comment type="subunit">
    <text evidence="45">(Microbial infection) Interacts with vesicular stomatitis virus glycoprotein.</text>
</comment>
<comment type="subunit">
    <text evidence="56">(Microbial infection) Interacts with Crimean-Congo hemorrhagic fever virus (CCHFV) glycoprotein C.</text>
</comment>
<comment type="subunit">
    <text evidence="57">(Microbial infection) Interacts with Getah virus (GETV) E2-E1 spike protein complex.</text>
</comment>
<comment type="subunit">
    <text evidence="20">(Microbial infection) May interact with HIV-1 Tat.</text>
</comment>
<comment type="interaction">
    <interactant intactId="EBI-988319">
        <id>P01130</id>
    </interactant>
    <interactant intactId="EBI-3926040">
        <id>P04114</id>
        <label>APOB</label>
    </interactant>
    <organismsDiffer>false</organismsDiffer>
    <experiments>4</experiments>
</comment>
<comment type="interaction">
    <interactant intactId="EBI-988319">
        <id>P01130</id>
    </interactant>
    <interactant intactId="EBI-1222467">
        <id>P02649</id>
        <label>APOE</label>
    </interactant>
    <organismsDiffer>false</organismsDiffer>
    <experiments>4</experiments>
</comment>
<comment type="interaction">
    <interactant intactId="EBI-988319">
        <id>P01130</id>
    </interactant>
    <interactant intactId="EBI-2114682">
        <id>P02749</id>
        <label>APOH</label>
    </interactant>
    <organismsDiffer>false</organismsDiffer>
    <experiments>3</experiments>
</comment>
<comment type="interaction">
    <interactant intactId="EBI-988319">
        <id>P01130</id>
    </interactant>
    <interactant intactId="EBI-988319">
        <id>P01130</id>
        <label>LDLR</label>
    </interactant>
    <organismsDiffer>false</organismsDiffer>
    <experiments>3</experiments>
</comment>
<comment type="interaction">
    <interactant intactId="EBI-988319">
        <id>P01130</id>
    </interactant>
    <interactant intactId="EBI-715927">
        <id>P30533</id>
        <label>LRPAP1</label>
    </interactant>
    <organismsDiffer>false</organismsDiffer>
    <experiments>4</experiments>
</comment>
<comment type="interaction">
    <interactant intactId="EBI-988319">
        <id>P01130</id>
    </interactant>
    <interactant intactId="EBI-3923617">
        <id>Q9H2K0</id>
        <label>MTIF3</label>
    </interactant>
    <organismsDiffer>false</organismsDiffer>
    <experiments>3</experiments>
</comment>
<comment type="interaction">
    <interactant intactId="EBI-988319">
        <id>P01130</id>
    </interactant>
    <interactant intactId="EBI-7539251">
        <id>Q8NBP7</id>
        <label>PCSK9</label>
    </interactant>
    <organismsDiffer>false</organismsDiffer>
    <experiments>10</experiments>
</comment>
<comment type="interaction">
    <interactant intactId="EBI-988319">
        <id>P01130</id>
    </interactant>
    <interactant intactId="EBI-15656131">
        <id>Q8NBP7-1</id>
        <label>PCSK9</label>
    </interactant>
    <organismsDiffer>false</organismsDiffer>
    <experiments>4</experiments>
</comment>
<comment type="interaction">
    <interactant intactId="EBI-988319">
        <id>P01130</id>
    </interactant>
    <interactant intactId="EBI-11741437">
        <id>Q08117-2</id>
        <label>TLE5</label>
    </interactant>
    <organismsDiffer>false</organismsDiffer>
    <experiments>3</experiments>
</comment>
<comment type="interaction">
    <interactant intactId="EBI-988319">
        <id>P01130</id>
    </interactant>
    <interactant intactId="EBI-9250714">
        <id>D3ZAR1</id>
        <label>Ldlrap1</label>
    </interactant>
    <organismsDiffer>true</organismsDiffer>
    <experiments>3</experiments>
</comment>
<comment type="interaction">
    <interactant intactId="EBI-988319">
        <id>P01130</id>
    </interactant>
    <interactant intactId="EBI-25474821">
        <id>P0DTC2</id>
        <label>S</label>
    </interactant>
    <organismsDiffer>true</organismsDiffer>
    <experiments>4</experiments>
</comment>
<comment type="subcellular location">
    <subcellularLocation>
        <location evidence="34 39">Cell membrane</location>
        <topology evidence="2">Single-pass type I membrane protein</topology>
    </subcellularLocation>
    <subcellularLocation>
        <location evidence="85">Membrane</location>
        <location evidence="85">Clathrin-coated pit</location>
    </subcellularLocation>
    <subcellularLocation>
        <location evidence="34">Golgi apparatus</location>
    </subcellularLocation>
    <subcellularLocation>
        <location evidence="34">Early endosome</location>
    </subcellularLocation>
    <subcellularLocation>
        <location evidence="34">Late endosome</location>
    </subcellularLocation>
    <subcellularLocation>
        <location evidence="34">Lysosome</location>
    </subcellularLocation>
    <text evidence="52 53">Rapidly endocytosed upon ligand binding. Localized at cell membrane, probably in lipid rafts, in serum-starved conditions (PubMed:30443021).</text>
</comment>
<comment type="alternative products">
    <event type="alternative splicing"/>
    <isoform>
        <id>P01130-1</id>
        <name>1</name>
        <sequence type="displayed"/>
    </isoform>
    <isoform>
        <id>P01130-2</id>
        <name>2</name>
        <sequence type="described" ref="VSP_043053 VSP_043054"/>
    </isoform>
    <isoform>
        <id>P01130-3</id>
        <name>3</name>
        <sequence type="described" ref="VSP_055014 VSP_055015"/>
    </isoform>
    <isoform>
        <id>P01130-4</id>
        <name>4</name>
        <sequence type="described" ref="VSP_043595"/>
    </isoform>
    <isoform>
        <id>P01130-5</id>
        <name>5</name>
        <sequence type="described" ref="VSP_045525"/>
    </isoform>
    <isoform>
        <id>P01130-6</id>
        <name>6</name>
        <sequence type="described" ref="VSP_047413"/>
    </isoform>
</comment>
<comment type="domain">
    <text evidence="43">The NPXY motif mediates the interaction with the clathrin adapter DAB2 and with LDLRAP1 which are involved in receptor internalization. A few residues outside the motif also play a role in the interaction.</text>
</comment>
<comment type="PTM">
    <text evidence="25 31 36 39 51">N- and O-glycosylated.</text>
</comment>
<comment type="PTM">
    <text evidence="39">Ubiquitinated by MYLIP leading to degradation.</text>
</comment>
<comment type="disease" evidence="9 10 12 13 14 16 17 18 19 21 22 27 28 29 32 33 35 37 38 41 42 43 44 46 47 48 49 50 55 58 60 61 62 63 64 65 66 67 68 69 70 71 72 73 74 75 76 77 78 79 80 81 82 83">
    <disease id="DI-01577">
        <name>Hypercholesterolemia, familial, 1</name>
        <acronym>FHCL1</acronym>
        <description>A form of hypercholesterolemia, a disorder of lipoprotein metabolism characterized by elevated serum low-density lipoprotein (LDL) cholesterol levels, which result in excess deposition of cholesterol in tissues and leads to xanthelasma, xanthomas, accelerated atherosclerosis and increased risk of premature coronary heart disease. FHCL1 inheritance is autosomal dominant.</description>
        <dbReference type="MIM" id="143890"/>
    </disease>
    <text>The disease is caused by variants affecting the gene represented in this entry.</text>
</comment>
<comment type="similarity">
    <text evidence="87">Belongs to the LDLR family.</text>
</comment>
<comment type="sequence caution" evidence="87">
    <conflict type="erroneous initiation">
        <sequence resource="EMBL-CDS" id="BAD92646"/>
    </conflict>
    <text>Extended N-terminus.</text>
</comment>
<comment type="online information" name="LDLR">
    <link uri="https://databases.lovd.nl/shared/genes/LDLR"/>
    <text>LDLR mutation database</text>
</comment>
<organism>
    <name type="scientific">Homo sapiens</name>
    <name type="common">Human</name>
    <dbReference type="NCBI Taxonomy" id="9606"/>
    <lineage>
        <taxon>Eukaryota</taxon>
        <taxon>Metazoa</taxon>
        <taxon>Chordata</taxon>
        <taxon>Craniata</taxon>
        <taxon>Vertebrata</taxon>
        <taxon>Euteleostomi</taxon>
        <taxon>Mammalia</taxon>
        <taxon>Eutheria</taxon>
        <taxon>Euarchontoglires</taxon>
        <taxon>Primates</taxon>
        <taxon>Haplorrhini</taxon>
        <taxon>Catarrhini</taxon>
        <taxon>Hominidae</taxon>
        <taxon>Homo</taxon>
    </lineage>
</organism>
<evidence type="ECO:0000250" key="1"/>
<evidence type="ECO:0000250" key="2">
    <source>
        <dbReference type="UniProtKB" id="P01131"/>
    </source>
</evidence>
<evidence type="ECO:0000250" key="3">
    <source>
        <dbReference type="UniProtKB" id="P35951"/>
    </source>
</evidence>
<evidence type="ECO:0000250" key="4">
    <source>
        <dbReference type="UniProtKB" id="P35952"/>
    </source>
</evidence>
<evidence type="ECO:0000255" key="5"/>
<evidence type="ECO:0000255" key="6">
    <source>
        <dbReference type="PROSITE-ProRule" id="PRU00076"/>
    </source>
</evidence>
<evidence type="ECO:0000255" key="7">
    <source>
        <dbReference type="PROSITE-ProRule" id="PRU00124"/>
    </source>
</evidence>
<evidence type="ECO:0000256" key="8">
    <source>
        <dbReference type="SAM" id="MobiDB-lite"/>
    </source>
</evidence>
<evidence type="ECO:0000269" key="9">
    <source>
    </source>
</evidence>
<evidence type="ECO:0000269" key="10">
    <source>
    </source>
</evidence>
<evidence type="ECO:0000269" key="11">
    <source>
    </source>
</evidence>
<evidence type="ECO:0000269" key="12">
    <source>
    </source>
</evidence>
<evidence type="ECO:0000269" key="13">
    <source>
    </source>
</evidence>
<evidence type="ECO:0000269" key="14">
    <source>
    </source>
</evidence>
<evidence type="ECO:0000269" key="15">
    <source>
    </source>
</evidence>
<evidence type="ECO:0000269" key="16">
    <source>
    </source>
</evidence>
<evidence type="ECO:0000269" key="17">
    <source>
    </source>
</evidence>
<evidence type="ECO:0000269" key="18">
    <source>
    </source>
</evidence>
<evidence type="ECO:0000269" key="19">
    <source>
    </source>
</evidence>
<evidence type="ECO:0000269" key="20">
    <source>
    </source>
</evidence>
<evidence type="ECO:0000269" key="21">
    <source>
    </source>
</evidence>
<evidence type="ECO:0000269" key="22">
    <source>
    </source>
</evidence>
<evidence type="ECO:0000269" key="23">
    <source>
    </source>
</evidence>
<evidence type="ECO:0000269" key="24">
    <source>
    </source>
</evidence>
<evidence type="ECO:0000269" key="25">
    <source>
    </source>
</evidence>
<evidence type="ECO:0000269" key="26">
    <source>
    </source>
</evidence>
<evidence type="ECO:0000269" key="27">
    <source>
    </source>
</evidence>
<evidence type="ECO:0000269" key="28">
    <source>
    </source>
</evidence>
<evidence type="ECO:0000269" key="29">
    <source>
    </source>
</evidence>
<evidence type="ECO:0000269" key="30">
    <source>
    </source>
</evidence>
<evidence type="ECO:0000269" key="31">
    <source>
    </source>
</evidence>
<evidence type="ECO:0000269" key="32">
    <source>
    </source>
</evidence>
<evidence type="ECO:0000269" key="33">
    <source>
    </source>
</evidence>
<evidence type="ECO:0000269" key="34">
    <source>
    </source>
</evidence>
<evidence type="ECO:0000269" key="35">
    <source>
    </source>
</evidence>
<evidence type="ECO:0000269" key="36">
    <source>
    </source>
</evidence>
<evidence type="ECO:0000269" key="37">
    <source>
    </source>
</evidence>
<evidence type="ECO:0000269" key="38">
    <source>
    </source>
</evidence>
<evidence type="ECO:0000269" key="39">
    <source>
    </source>
</evidence>
<evidence type="ECO:0000269" key="40">
    <source>
    </source>
</evidence>
<evidence type="ECO:0000269" key="41">
    <source>
    </source>
</evidence>
<evidence type="ECO:0000269" key="42">
    <source>
    </source>
</evidence>
<evidence type="ECO:0000269" key="43">
    <source>
    </source>
</evidence>
<evidence type="ECO:0000269" key="44">
    <source>
    </source>
</evidence>
<evidence type="ECO:0000269" key="45">
    <source>
    </source>
</evidence>
<evidence type="ECO:0000269" key="46">
    <source>
    </source>
</evidence>
<evidence type="ECO:0000269" key="47">
    <source>
    </source>
</evidence>
<evidence type="ECO:0000269" key="48">
    <source>
    </source>
</evidence>
<evidence type="ECO:0000269" key="49">
    <source>
    </source>
</evidence>
<evidence type="ECO:0000269" key="50">
    <source>
    </source>
</evidence>
<evidence type="ECO:0000269" key="51">
    <source>
    </source>
</evidence>
<evidence type="ECO:0000269" key="52">
    <source>
    </source>
</evidence>
<evidence type="ECO:0000269" key="53">
    <source>
    </source>
</evidence>
<evidence type="ECO:0000269" key="54">
    <source>
    </source>
</evidence>
<evidence type="ECO:0000269" key="55">
    <source>
    </source>
</evidence>
<evidence type="ECO:0000269" key="56">
    <source>
    </source>
</evidence>
<evidence type="ECO:0000269" key="57">
    <source>
    </source>
</evidence>
<evidence type="ECO:0000269" key="58">
    <source>
    </source>
</evidence>
<evidence type="ECO:0000269" key="59">
    <source>
    </source>
</evidence>
<evidence type="ECO:0000269" key="60">
    <source>
    </source>
</evidence>
<evidence type="ECO:0000269" key="61">
    <source>
    </source>
</evidence>
<evidence type="ECO:0000269" key="62">
    <source>
    </source>
</evidence>
<evidence type="ECO:0000269" key="63">
    <source>
    </source>
</evidence>
<evidence type="ECO:0000269" key="64">
    <source>
    </source>
</evidence>
<evidence type="ECO:0000269" key="65">
    <source>
    </source>
</evidence>
<evidence type="ECO:0000269" key="66">
    <source>
    </source>
</evidence>
<evidence type="ECO:0000269" key="67">
    <source>
    </source>
</evidence>
<evidence type="ECO:0000269" key="68">
    <source>
    </source>
</evidence>
<evidence type="ECO:0000269" key="69">
    <source>
    </source>
</evidence>
<evidence type="ECO:0000269" key="70">
    <source>
    </source>
</evidence>
<evidence type="ECO:0000269" key="71">
    <source>
    </source>
</evidence>
<evidence type="ECO:0000269" key="72">
    <source>
    </source>
</evidence>
<evidence type="ECO:0000269" key="73">
    <source>
    </source>
</evidence>
<evidence type="ECO:0000269" key="74">
    <source>
    </source>
</evidence>
<evidence type="ECO:0000269" key="75">
    <source>
    </source>
</evidence>
<evidence type="ECO:0000269" key="76">
    <source>
    </source>
</evidence>
<evidence type="ECO:0000269" key="77">
    <source>
    </source>
</evidence>
<evidence type="ECO:0000269" key="78">
    <source>
    </source>
</evidence>
<evidence type="ECO:0000269" key="79">
    <source>
    </source>
</evidence>
<evidence type="ECO:0000269" key="80">
    <source>
    </source>
</evidence>
<evidence type="ECO:0000269" key="81">
    <source>
    </source>
</evidence>
<evidence type="ECO:0000269" key="82">
    <source>
    </source>
</evidence>
<evidence type="ECO:0000269" key="83">
    <source ref="75"/>
</evidence>
<evidence type="ECO:0000303" key="84">
    <source>
    </source>
</evidence>
<evidence type="ECO:0000303" key="85">
    <source>
    </source>
</evidence>
<evidence type="ECO:0000303" key="86">
    <source ref="7"/>
</evidence>
<evidence type="ECO:0000305" key="87"/>
<evidence type="ECO:0007829" key="88">
    <source>
        <dbReference type="PDB" id="1AJJ"/>
    </source>
</evidence>
<evidence type="ECO:0007829" key="89">
    <source>
        <dbReference type="PDB" id="1D2J"/>
    </source>
</evidence>
<evidence type="ECO:0007829" key="90">
    <source>
        <dbReference type="PDB" id="1F5Y"/>
    </source>
</evidence>
<evidence type="ECO:0007829" key="91">
    <source>
        <dbReference type="PDB" id="1F8Z"/>
    </source>
</evidence>
<evidence type="ECO:0007829" key="92">
    <source>
        <dbReference type="PDB" id="1HJ7"/>
    </source>
</evidence>
<evidence type="ECO:0007829" key="93">
    <source>
        <dbReference type="PDB" id="1HZ8"/>
    </source>
</evidence>
<evidence type="ECO:0007829" key="94">
    <source>
        <dbReference type="PDB" id="1IJQ"/>
    </source>
</evidence>
<evidence type="ECO:0007829" key="95">
    <source>
        <dbReference type="PDB" id="1LDL"/>
    </source>
</evidence>
<evidence type="ECO:0007829" key="96">
    <source>
        <dbReference type="PDB" id="1LDR"/>
    </source>
</evidence>
<evidence type="ECO:0007829" key="97">
    <source>
        <dbReference type="PDB" id="1XFE"/>
    </source>
</evidence>
<evidence type="ECO:0007829" key="98">
    <source>
        <dbReference type="PDB" id="2FCW"/>
    </source>
</evidence>
<evidence type="ECO:0007829" key="99">
    <source>
        <dbReference type="PDB" id="2LGP"/>
    </source>
</evidence>
<evidence type="ECO:0007829" key="100">
    <source>
        <dbReference type="PDB" id="2W2N"/>
    </source>
</evidence>
<evidence type="ECO:0007829" key="101">
    <source>
        <dbReference type="PDB" id="3P5B"/>
    </source>
</evidence>
<evidence type="ECO:0007829" key="102">
    <source>
        <dbReference type="PDB" id="3SO6"/>
    </source>
</evidence>
<evidence type="ECO:0007829" key="103">
    <source>
        <dbReference type="PDB" id="5OYL"/>
    </source>
</evidence>
<sequence>MGPWGWKLRWTVALLLAAAGTAVGDRCERNEFQCQDGKCISYKWVCDGSAECQDGSDESQETCLSVTCKSGDFSCGGRVNRCIPQFWRCDGQVDCDNGSDEQGCPPKTCSQDEFRCHDGKCISRQFVCDSDRDCLDGSDEASCPVLTCGPASFQCNSSTCIPQLWACDNDPDCEDGSDEWPQRCRGLYVFQGDSSPCSAFEFHCLSGECIHSSWRCDGGPDCKDKSDEENCAVATCRPDEFQCSDGNCIHGSRQCDREYDCKDMSDEVGCVNVTLCEGPNKFKCHSGECITLDKVCNMARDCRDWSDEPIKECGTNECLDNNGGCSHVCNDLKIGYECLCPDGFQLVAQRRCEDIDECQDPDTCSQLCVNLEGGYKCQCEEGFQLDPHTKACKAVGSIAYLFFTNRHEVRKMTLDRSEYTSLIPNLRNVVALDTEVASNRIYWSDLSQRMICSTQLDRAHGVSSYDTVISRDIQAPDGLAVDWIHSNIYWTDSVLGTVSVADTKGVKRKTLFRENGSKPRAIVVDPVHGFMYWTDWGTPAKIKKGGLNGVDIYSLVTENIQWPNGITLDLLSGRLYWVDSKLHSISSIDVNGGNRKTILEDEKRLAHPFSLAVFEDKVFWTDIINEAIFSANRLTGSDVNLLAENLLSPEDMVLFHNLTQPRGVNWCERTTLSNGGCQYLCLPAPQINPHSPKFTCACPDGMLLARDMRSCLTEAEAAVATQETSTVRLKVSSTAVRTQHTTTRPVPDTSRLPGATPGLTTVEIVTMSHQALGDVAGRGNEKKPSSVRALSIVLPIVLLVFLCLGVFLLWKNWRLKNINSINFDNPVYQKTTEDEVHICHNQDGYSYPSRQMVSLEDDVA</sequence>
<feature type="signal peptide" evidence="2">
    <location>
        <begin position="1"/>
        <end position="21"/>
    </location>
</feature>
<feature type="chain" id="PRO_0000017312" description="Low-density lipoprotein receptor">
    <location>
        <begin position="22"/>
        <end position="860"/>
    </location>
</feature>
<feature type="topological domain" description="Extracellular" evidence="2">
    <location>
        <begin position="22"/>
        <end position="788"/>
    </location>
</feature>
<feature type="transmembrane region" description="Helical" evidence="5">
    <location>
        <begin position="789"/>
        <end position="810"/>
    </location>
</feature>
<feature type="topological domain" description="Cytoplasmic" evidence="43">
    <location>
        <begin position="811"/>
        <end position="860"/>
    </location>
</feature>
<feature type="domain" description="LDL-receptor class A 1" evidence="7">
    <location>
        <begin position="25"/>
        <end position="65"/>
    </location>
</feature>
<feature type="domain" description="LDL-receptor class A 2" evidence="7">
    <location>
        <begin position="66"/>
        <end position="106"/>
    </location>
</feature>
<feature type="domain" description="LDL-receptor class A 3" evidence="7">
    <location>
        <begin position="107"/>
        <end position="145"/>
    </location>
</feature>
<feature type="domain" description="LDL-receptor class A 4" evidence="7">
    <location>
        <begin position="146"/>
        <end position="186"/>
    </location>
</feature>
<feature type="domain" description="LDL-receptor class A 5" evidence="7">
    <location>
        <begin position="195"/>
        <end position="233"/>
    </location>
</feature>
<feature type="domain" description="LDL-receptor class A 6" evidence="7">
    <location>
        <begin position="234"/>
        <end position="272"/>
    </location>
</feature>
<feature type="domain" description="LDL-receptor class A 7" evidence="7">
    <location>
        <begin position="274"/>
        <end position="313"/>
    </location>
</feature>
<feature type="domain" description="EGF-like 1" evidence="6">
    <location>
        <begin position="314"/>
        <end position="353"/>
    </location>
</feature>
<feature type="domain" description="EGF-like 2; calcium-binding" evidence="6">
    <location>
        <begin position="354"/>
        <end position="393"/>
    </location>
</feature>
<feature type="repeat" description="LDL-receptor class B 1">
    <location>
        <begin position="397"/>
        <end position="438"/>
    </location>
</feature>
<feature type="repeat" description="LDL-receptor class B 2">
    <location>
        <begin position="439"/>
        <end position="485"/>
    </location>
</feature>
<feature type="repeat" description="LDL-receptor class B 3">
    <location>
        <begin position="486"/>
        <end position="528"/>
    </location>
</feature>
<feature type="repeat" description="LDL-receptor class B 4">
    <location>
        <begin position="529"/>
        <end position="572"/>
    </location>
</feature>
<feature type="repeat" description="LDL-receptor class B 5">
    <location>
        <begin position="573"/>
        <end position="615"/>
    </location>
</feature>
<feature type="repeat" description="LDL-receptor class B 6">
    <location>
        <begin position="616"/>
        <end position="658"/>
    </location>
</feature>
<feature type="domain" description="EGF-like 3" evidence="6">
    <location>
        <begin position="663"/>
        <end position="712"/>
    </location>
</feature>
<feature type="region of interest" description="Binding to Getah virus E1-E2 spike glycoproteins" evidence="57">
    <location>
        <begin position="146"/>
        <end position="233"/>
    </location>
</feature>
<feature type="region of interest" description="Clustered O-linked oligosaccharides">
    <location>
        <begin position="721"/>
        <end position="768"/>
    </location>
</feature>
<feature type="region of interest" description="Disordered" evidence="8">
    <location>
        <begin position="734"/>
        <end position="755"/>
    </location>
</feature>
<feature type="region of interest" description="Required for MYLIP-triggered down-regulation of LDLR" evidence="39">
    <location>
        <begin position="811"/>
        <end position="860"/>
    </location>
</feature>
<feature type="short sequence motif" description="NPXY motif" evidence="43">
    <location>
        <begin position="823"/>
        <end position="828"/>
    </location>
</feature>
<feature type="compositionally biased region" description="Polar residues" evidence="8">
    <location>
        <begin position="734"/>
        <end position="744"/>
    </location>
</feature>
<feature type="modified residue" description="Phosphothreonine" evidence="4">
    <location>
        <position position="724"/>
    </location>
</feature>
<feature type="glycosylation site" description="N-linked (GlcNAc...) asparagine" evidence="5">
    <location>
        <position position="97"/>
    </location>
</feature>
<feature type="glycosylation site" description="N-linked (GlcNAc...) asparagine" evidence="39">
    <location>
        <position position="156"/>
    </location>
</feature>
<feature type="glycosylation site" description="N-linked (GlcNAc...) asparagine" evidence="39">
    <location>
        <position position="272"/>
    </location>
</feature>
<feature type="glycosylation site" description="N-linked (GlcNAc...) asparagine" evidence="5">
    <location>
        <position position="515"/>
    </location>
</feature>
<feature type="glycosylation site" description="N-linked (GlcNAc...) asparagine" evidence="25 31 36">
    <location>
        <position position="657"/>
    </location>
</feature>
<feature type="disulfide bond">
    <location>
        <begin position="27"/>
        <end position="39"/>
    </location>
</feature>
<feature type="disulfide bond">
    <location>
        <begin position="34"/>
        <end position="52"/>
    </location>
</feature>
<feature type="disulfide bond">
    <location>
        <begin position="46"/>
        <end position="63"/>
    </location>
</feature>
<feature type="disulfide bond">
    <location>
        <begin position="68"/>
        <end position="82"/>
    </location>
</feature>
<feature type="disulfide bond">
    <location>
        <begin position="75"/>
        <end position="95"/>
    </location>
</feature>
<feature type="disulfide bond">
    <location>
        <begin position="89"/>
        <end position="104"/>
    </location>
</feature>
<feature type="disulfide bond" evidence="1">
    <location>
        <begin position="109"/>
        <end position="121"/>
    </location>
</feature>
<feature type="disulfide bond">
    <location>
        <begin position="116"/>
        <end position="134"/>
    </location>
</feature>
<feature type="disulfide bond">
    <location>
        <begin position="128"/>
        <end position="143"/>
    </location>
</feature>
<feature type="disulfide bond">
    <location>
        <begin position="148"/>
        <end position="160"/>
    </location>
</feature>
<feature type="disulfide bond">
    <location>
        <begin position="155"/>
        <end position="173"/>
    </location>
</feature>
<feature type="disulfide bond">
    <location>
        <begin position="167"/>
        <end position="184"/>
    </location>
</feature>
<feature type="disulfide bond">
    <location>
        <begin position="197"/>
        <end position="209"/>
    </location>
</feature>
<feature type="disulfide bond">
    <location>
        <begin position="204"/>
        <end position="222"/>
    </location>
</feature>
<feature type="disulfide bond">
    <location>
        <begin position="216"/>
        <end position="231"/>
    </location>
</feature>
<feature type="disulfide bond">
    <location>
        <begin position="236"/>
        <end position="248"/>
    </location>
</feature>
<feature type="disulfide bond">
    <location>
        <begin position="243"/>
        <end position="261"/>
    </location>
</feature>
<feature type="disulfide bond">
    <location>
        <begin position="255"/>
        <end position="270"/>
    </location>
</feature>
<feature type="disulfide bond">
    <location>
        <begin position="276"/>
        <end position="289"/>
    </location>
</feature>
<feature type="disulfide bond">
    <location>
        <begin position="284"/>
        <end position="302"/>
    </location>
</feature>
<feature type="disulfide bond">
    <location>
        <begin position="296"/>
        <end position="313"/>
    </location>
</feature>
<feature type="disulfide bond">
    <location>
        <begin position="318"/>
        <end position="329"/>
    </location>
</feature>
<feature type="disulfide bond">
    <location>
        <begin position="325"/>
        <end position="338"/>
    </location>
</feature>
<feature type="disulfide bond">
    <location>
        <begin position="340"/>
        <end position="352"/>
    </location>
</feature>
<feature type="disulfide bond">
    <location>
        <begin position="358"/>
        <end position="368"/>
    </location>
</feature>
<feature type="disulfide bond">
    <location>
        <begin position="364"/>
        <end position="377"/>
    </location>
</feature>
<feature type="disulfide bond">
    <location>
        <begin position="379"/>
        <end position="392"/>
    </location>
</feature>
<feature type="disulfide bond">
    <location>
        <begin position="667"/>
        <end position="681"/>
    </location>
</feature>
<feature type="disulfide bond">
    <location>
        <begin position="677"/>
        <end position="696"/>
    </location>
</feature>
<feature type="disulfide bond">
    <location>
        <begin position="698"/>
        <end position="711"/>
    </location>
</feature>
<feature type="splice variant" id="VSP_047413" description="In isoform 6." evidence="84">
    <location>
        <begin position="35"/>
        <end position="155"/>
    </location>
</feature>
<feature type="splice variant" id="VSP_043595" description="In isoform 4." evidence="84">
    <original>LSVTCKSGDFSCGGRVNRCIPQFWRCDGQVDCDNGSDEQGCP</original>
    <variation>S</variation>
    <location>
        <begin position="64"/>
        <end position="105"/>
    </location>
</feature>
<feature type="splice variant" id="VSP_055014" description="In isoform 3." evidence="84">
    <location>
        <begin position="105"/>
        <end position="272"/>
    </location>
</feature>
<feature type="splice variant" id="VSP_043053" description="In isoform 2." evidence="84">
    <location>
        <begin position="106"/>
        <end position="232"/>
    </location>
</feature>
<feature type="splice variant" id="VSP_055015" description="In isoform 3." evidence="84">
    <original>V</original>
    <variation>L</variation>
    <location>
        <position position="273"/>
    </location>
</feature>
<feature type="splice variant" id="VSP_043054" description="In isoform 2." evidence="84">
    <location>
        <begin position="663"/>
        <end position="713"/>
    </location>
</feature>
<feature type="splice variant" id="VSP_045525" description="In isoform 5." evidence="86">
    <location>
        <begin position="850"/>
        <end position="851"/>
    </location>
</feature>
<feature type="sequence variant" id="VAR_011862" description="In dbSNP:rs5931." evidence="11">
    <original>G</original>
    <variation>R</variation>
    <location>
        <position position="2"/>
    </location>
</feature>
<feature type="sequence variant" id="VAR_005304" description="In FHCL1; pathogenic; San Francisco; dbSNP:rs2228671." evidence="76">
    <original>C</original>
    <variation>W</variation>
    <location>
        <position position="27"/>
    </location>
</feature>
<feature type="sequence variant" id="VAR_013949" description="In FHCL1; dbSNP:rs121908041." evidence="21">
    <original>C</original>
    <variation>S</variation>
    <location>
        <position position="46"/>
    </location>
</feature>
<feature type="sequence variant" id="VAR_005305" description="In FHCL1; Cape Town-1; retards receptor transport from the endoplasmic reticulum to the cell surface." evidence="17 55">
    <location>
        <begin position="47"/>
        <end position="48"/>
    </location>
</feature>
<feature type="sequence variant" id="VAR_007979" description="In FHCL1; dbSNP:rs137853960." evidence="9">
    <original>A</original>
    <variation>S</variation>
    <location>
        <position position="50"/>
    </location>
</feature>
<feature type="sequence variant" id="VAR_072827" description="In FHCL1; uncertain significance; dbSNP:rs137853960." evidence="33">
    <original>A</original>
    <variation>T</variation>
    <location>
        <position position="50"/>
    </location>
</feature>
<feature type="sequence variant" id="VAR_005306" description="In FHCL1; Paris-4; dbSNP:rs879254418." evidence="27">
    <original>C</original>
    <variation>Y</variation>
    <location>
        <position position="52"/>
    </location>
</feature>
<feature type="sequence variant" id="VAR_007980" description="In FHCL1; dbSNP:rs878854026." evidence="73">
    <original>S</original>
    <variation>P</variation>
    <location>
        <position position="56"/>
    </location>
</feature>
<feature type="sequence variant" id="VAR_005307" description="In FHCL1; uncertain significance; dbSNP:rs370860696." evidence="76">
    <original>R</original>
    <variation>C</variation>
    <location>
        <position position="78"/>
    </location>
</feature>
<feature type="sequence variant" id="VAR_005308" description="In FHCL1; pathogenic; French Canadian-4; dbSNP:rs121908025." evidence="14 44 76">
    <original>W</original>
    <variation>G</variation>
    <location>
        <position position="87"/>
    </location>
</feature>
<feature type="sequence variant" id="VAR_005309" description="In FHCL1; dbSNP:rs875989894." evidence="32 76">
    <original>C</original>
    <variation>Y</variation>
    <location>
        <position position="89"/>
    </location>
</feature>
<feature type="sequence variant" id="VAR_005310" description="In FHCL1; pathogenic; London-4; dbSNP:rs771019366." evidence="76">
    <original>D</original>
    <variation>G</variation>
    <location>
        <position position="90"/>
    </location>
</feature>
<feature type="sequence variant" id="VAR_005311" description="In FHCL1; pathogenic; dbSNP:rs749038326." evidence="76">
    <original>D</original>
    <variation>N</variation>
    <location>
        <position position="90"/>
    </location>
</feature>
<feature type="sequence variant" id="VAR_005312" description="In FHCL1; likely pathogenic; Durban-1; dbSNP:rs749038326." evidence="68">
    <original>D</original>
    <variation>Y</variation>
    <location>
        <position position="90"/>
    </location>
</feature>
<feature type="sequence variant" id="VAR_005313" description="In FHCL1; dbSNP:rs774467219." evidence="10">
    <original>Q</original>
    <variation>E</variation>
    <location>
        <position position="92"/>
    </location>
</feature>
<feature type="sequence variant" id="VAR_005314" description="In FHCL1; dbSNP:rs879254456." evidence="10">
    <original>C</original>
    <variation>G</variation>
    <location>
        <position position="95"/>
    </location>
</feature>
<feature type="sequence variant" id="VAR_005315" description="In FHCL1; pathogenic; Lancashire; 6% of American English; dbSNP:rs144172724." evidence="32 76">
    <original>E</original>
    <variation>K</variation>
    <location>
        <position position="101"/>
    </location>
</feature>
<feature type="sequence variant" id="VAR_059375" description="In dbSNP:rs13306510.">
    <original>P</original>
    <variation>S</variation>
    <location>
        <position position="105"/>
    </location>
</feature>
<feature type="sequence variant" id="VAR_005316" description="In FHCL1; uncertain significance; Munster-1; dbSNP:rs140807148." evidence="27">
    <original>C</original>
    <variation>R</variation>
    <location>
        <position position="109"/>
    </location>
</feature>
<feature type="sequence variant" id="VAR_005317" description="In FHCL1; does not affect receptor expression at the cell surface; results in reduced LDL binding; results in reduced LDL uptake and internalization; dbSNP:rs879254482." evidence="10 48">
    <original>C</original>
    <variation>R</variation>
    <location>
        <position position="116"/>
    </location>
</feature>
<feature type="sequence variant" id="VAR_062371" description="In FHCL1; dbSNP:rs879254514." evidence="18">
    <original>C</original>
    <variation>F</variation>
    <location>
        <position position="134"/>
    </location>
</feature>
<feature type="sequence variant" id="VAR_062372" description="In FHCL1; dbSNP:rs879254515." evidence="18">
    <original>C</original>
    <variation>W</variation>
    <location>
        <position position="134"/>
    </location>
</feature>
<feature type="sequence variant" id="VAR_065780" description="In FHCL1; dbSNP:rs879254517." evidence="41">
    <original>D</original>
    <variation>H</variation>
    <location>
        <position position="139"/>
    </location>
</feature>
<feature type="sequence variant" id="VAR_005318" description="In FHCL1; pathogenic; Philippines/Durban-2/Japan; dbSNP:rs748944640." evidence="14 62 68">
    <original>E</original>
    <variation>K</variation>
    <location>
        <position position="140"/>
    </location>
</feature>
<feature type="sequence variant" id="VAR_072828" description="In FHCL1; dbSNP:rs875989901." evidence="22">
    <original>C</original>
    <variation>R</variation>
    <location>
        <position position="143"/>
    </location>
</feature>
<feature type="sequence variant" id="VAR_072829" description="In FHCL1; dbSNP:rs879254526." evidence="22">
    <original>C</original>
    <variation>Y</variation>
    <location>
        <position position="148"/>
    </location>
</feature>
<feature type="sequence variant" id="VAR_005319" description="In FHCL1; Germany; dbSNP:rs879254535." evidence="27">
    <original>C</original>
    <variation>G</variation>
    <location>
        <position position="155"/>
    </location>
</feature>
<feature type="sequence variant" id="VAR_072830" description="In FHCL1; results in defective LDL binding; does not affect receptor expression at the cell surface; dbSNP:rs879254536." evidence="37 47">
    <original>C</original>
    <variation>Y</variation>
    <location>
        <position position="155"/>
    </location>
</feature>
<feature type="sequence variant" id="VAR_005320" description="In FHCL1; uncertain significance; dbSNP:rs879254541." evidence="46 76">
    <original>C</original>
    <variation>Y</variation>
    <location>
        <position position="160"/>
    </location>
</feature>
<feature type="sequence variant" id="VAR_072831" description="In FHCL1; uncertain significance; dbSNP:rs879254549." evidence="46">
    <original>D</original>
    <variation>A</variation>
    <location>
        <position position="168"/>
    </location>
</feature>
<feature type="sequence variant" id="VAR_005321" description="In FHCL1; Sephardic/Safed; 10% of the Sephardic Jews; dbSNP:rs200727689." evidence="69">
    <original>D</original>
    <variation>H</variation>
    <location>
        <position position="168"/>
    </location>
</feature>
<feature type="sequence variant" id="VAR_005322" description="In FHCL1; does not affect receptor expression at the cell surface; results in reduced LDL binding; results in reduced LDL uptake and internalization; dbSNP:rs200727689." evidence="48 76">
    <original>D</original>
    <variation>N</variation>
    <location>
        <position position="168"/>
    </location>
</feature>
<feature type="sequence variant" id="VAR_005323" description="In FHCL1; dbSNP:rs200727689." evidence="71">
    <original>D</original>
    <variation>Y</variation>
    <location>
        <position position="168"/>
    </location>
</feature>
<feature type="sequence variant" id="VAR_013950" description="May contribute to familial hypercholesterolemia; dbSNP:rs879254554." evidence="17">
    <original>D</original>
    <variation>H</variation>
    <location>
        <position position="172"/>
    </location>
</feature>
<feature type="sequence variant" id="VAR_072832" description="In FHCL1; does not affect receptor expression at the cell surface; results in reduced LDL binding; results in reduced LDL uptake and internalization; dbSNP:rs879254554." evidence="14 48">
    <original>D</original>
    <variation>N</variation>
    <location>
        <position position="172"/>
    </location>
</feature>
<feature type="sequence variant" id="VAR_005324" description="In FHCL1; Greece-1; dbSNP:rs879254558." evidence="27">
    <original>C</original>
    <variation>R</variation>
    <location>
        <position position="173"/>
    </location>
</feature>
<feature type="sequence variant" id="VAR_005325" description="In FHCL1; dbSNP:rs769318035." evidence="77">
    <original>C</original>
    <variation>W</variation>
    <location>
        <position position="173"/>
    </location>
</feature>
<feature type="sequence variant" id="VAR_005326" description="In FHCL1; Afrikaner-3; 5-10% of Afrikaners; dbSNP:rs121908033." evidence="49">
    <original>D</original>
    <variation>N</variation>
    <location>
        <position position="175"/>
    </location>
</feature>
<feature type="sequence variant" id="VAR_007981" description="In FHCL1; dbSNP:rs121908033." evidence="73">
    <original>D</original>
    <variation>Y</variation>
    <location>
        <position position="175"/>
    </location>
</feature>
<feature type="sequence variant" id="VAR_005327" description="In FHCL1; pathogenic; Puerto Rico; dbSNP:rs121908026." evidence="10 46 76 80">
    <original>S</original>
    <variation>L</variation>
    <location>
        <position position="177"/>
    </location>
</feature>
<feature type="sequence variant" id="VAR_072833" description="In FHCL1; dbSNP:rs879254571." evidence="22">
    <original>C</original>
    <variation>W</variation>
    <location>
        <position position="184"/>
    </location>
</feature>
<feature type="sequence variant" id="VAR_013951" description="In FHCL1; pathogenic; Glasco; dbSNP:rs121908039." evidence="46 81">
    <original>C</original>
    <variation>Y</variation>
    <location>
        <position position="184"/>
    </location>
</feature>
<feature type="sequence variant" id="VAR_005328" description="In FHCL1; likely pathogenic; Shreveport; dbSNP:rs376459828." evidence="27">
    <original>C</original>
    <variation>F</variation>
    <location>
        <position position="197"/>
    </location>
</feature>
<feature type="sequence variant" id="VAR_005330" description="In FHCL1; dbSNP:rs730882085." evidence="72">
    <original>C</original>
    <variation>R</variation>
    <location>
        <position position="197"/>
    </location>
</feature>
<feature type="sequence variant" id="VAR_005329" description="In FHCL1; El Salvador-1; dbSNP:rs376459828." evidence="27">
    <original>C</original>
    <variation>Y</variation>
    <location>
        <position position="197"/>
    </location>
</feature>
<feature type="sequence variant" id="VAR_065781" description="In FHCL1; dbSNP:rs879254589." evidence="41">
    <original>E</original>
    <variation>K</variation>
    <location>
        <position position="201"/>
    </location>
</feature>
<feature type="sequence variant" id="VAR_072834" description="In FHCL1; uncertain significance; dbSNP:rs879254603." evidence="33">
    <original>H</original>
    <variation>L</variation>
    <location>
        <position position="211"/>
    </location>
</feature>
<feature type="sequence variant" id="VAR_005331" description="In FHCL1; pathogenic; Piscataway/Lithuania." evidence="32 35 80">
    <location>
        <position position="218"/>
    </location>
</feature>
<feature type="sequence variant" id="VAR_005332" description="In FHCL1; pathogenic; Padova; dbSNP:rs373822756." evidence="10 32 33 46 65 76">
    <original>D</original>
    <variation>G</variation>
    <location>
        <position position="221"/>
    </location>
</feature>
<feature type="sequence variant" id="VAR_007982" description="In FHCL1; dbSNP:rs875989906." evidence="9 32">
    <original>D</original>
    <variation>N</variation>
    <location>
        <position position="221"/>
    </location>
</feature>
<feature type="sequence variant" id="VAR_005333" description="In FHCL1; pathogenic; dbSNP:rs875989906." evidence="10 65">
    <original>D</original>
    <variation>Y</variation>
    <location>
        <position position="221"/>
    </location>
</feature>
<feature type="sequence variant" id="VAR_062373" description="In FHCL1; likely pathogenic; dbSNP:rs730882086." evidence="18">
    <original>C</original>
    <variation>Y</variation>
    <location>
        <position position="222"/>
    </location>
</feature>
<feature type="sequence variant" id="VAR_005335" description="In FHCL1; Italy-2; dbSNP:rs879254630." evidence="27">
    <original>D</original>
    <variation>G</variation>
    <location>
        <position position="224"/>
    </location>
</feature>
<feature type="sequence variant" id="VAR_005334" description="In FHCL1; Portugal; dbSNP:rs387906303." evidence="27">
    <original>D</original>
    <variation>N</variation>
    <location>
        <position position="224"/>
    </location>
</feature>
<feature type="sequence variant" id="VAR_005336" description="In FHCL1; dbSNP:rs879254630." evidence="65">
    <original>D</original>
    <variation>V</variation>
    <location>
        <position position="224"/>
    </location>
</feature>
<feature type="sequence variant" id="VAR_005337" description="In FHCL1; Miami-1; dbSNP:rs879254635." evidence="27">
    <original>S</original>
    <variation>P</variation>
    <location>
        <position position="226"/>
    </location>
</feature>
<feature type="sequence variant" id="VAR_005338" description="In FHCL1; Afrikaner-1/Maine; 65-70% of Afrikaner Americans; dbSNP:rs121908028." evidence="49 76">
    <original>D</original>
    <variation>E</variation>
    <location>
        <position position="227"/>
    </location>
</feature>
<feature type="sequence variant" id="VAR_005339" description="In Chieti-3." evidence="16">
    <original>E</original>
    <variation>CK</variation>
    <location>
        <position position="228"/>
    </location>
</feature>
<feature type="sequence variant" id="VAR_005341" description="In FHCL1; pathogenic; French Canadian-3/Mexico; 2% of French Canadians; dbSNP:rs121908029." evidence="44 46">
    <original>E</original>
    <variation>K</variation>
    <location>
        <position position="228"/>
    </location>
</feature>
<feature type="sequence variant" id="VAR_005340" description="In FHCL1; Tulsa-2; dbSNP:rs121908029." evidence="46">
    <original>E</original>
    <variation>Q</variation>
    <location>
        <position position="228"/>
    </location>
</feature>
<feature type="sequence variant" id="VAR_005342" description="In FHCL1; dbSNP:rs746091400." evidence="70">
    <original>C</original>
    <variation>G</variation>
    <location>
        <position position="231"/>
    </location>
</feature>
<feature type="sequence variant" id="VAR_005343" description="In FHCL1; pathogenic; Charlotte; dbSNP:rs768563000." evidence="27">
    <original>E</original>
    <variation>K</variation>
    <location>
        <position position="240"/>
    </location>
</feature>
<feature type="sequence variant" id="VAR_072835" description="In FHCL1; likely pathogenic; dbSNP:rs879254659." evidence="14">
    <original>C</original>
    <variation>R</variation>
    <location>
        <position position="243"/>
    </location>
</feature>
<feature type="sequence variant" id="VAR_005344" description="In FHCL1; Bretagne-1; dbSNP:rs879254663." evidence="27">
    <original>C</original>
    <variation>F</variation>
    <location>
        <position position="248"/>
    </location>
</feature>
<feature type="sequence variant" id="VAR_005345" description="In FHCL1; dbSNP:rs879254663." evidence="72">
    <original>C</original>
    <variation>Y</variation>
    <location>
        <position position="248"/>
    </location>
</feature>
<feature type="sequence variant" id="VAR_013952" description="In FHCL1; uncertain significance; dbSNP:rs150673992." evidence="17">
    <original>R</original>
    <variation>W</variation>
    <location>
        <position position="253"/>
    </location>
</feature>
<feature type="sequence variant" id="VAR_062374" description="In FHCL1; dbSNP:rs879254667." evidence="18 38">
    <original>Q</original>
    <variation>P</variation>
    <location>
        <position position="254"/>
    </location>
</feature>
<feature type="sequence variant" id="VAR_065782" description="In FHCL1; dbSNP:rs879254668." evidence="41">
    <original>C</original>
    <variation>S</variation>
    <location>
        <position position="255"/>
    </location>
</feature>
<feature type="sequence variant" id="VAR_005346" description="In FHCL1; Nevers; dbSNP:rs879254670." evidence="27">
    <original>D</original>
    <variation>G</variation>
    <location>
        <position position="256"/>
    </location>
</feature>
<feature type="sequence variant" id="VAR_072836" description="Does not affect receptor expression at the cell surface; does not affect LDL binding; does not affect LDL uptake and internalization; dbSNP:rs200990725." evidence="22 48">
    <original>R</original>
    <variation>W</variation>
    <location>
        <position position="257"/>
    </location>
</feature>
<feature type="sequence variant" id="VAR_013953" description="In FHCL1; rare mutation; strongly reduced receptor activity; dbSNP:rs121908040." evidence="12">
    <original>C</original>
    <variation>F</variation>
    <location>
        <position position="261"/>
    </location>
</feature>
<feature type="sequence variant" id="VAR_005347" description="In FHCL1; pathogenic; Cincinnati-1; dbSNP:rs139043155." evidence="27 33">
    <original>D</original>
    <variation>E</variation>
    <location>
        <position position="266"/>
    </location>
</feature>
<feature type="sequence variant" id="VAR_005348" description="In FHCL1; Miami-2; dbSNP:rs879254683." evidence="27">
    <original>C</original>
    <variation>Y</variation>
    <location>
        <position position="270"/>
    </location>
</feature>
<feature type="sequence variant" id="VAR_062375" description="In FHCL1; dbSNP:rs879254692." evidence="18">
    <original>C</original>
    <variation>R</variation>
    <location>
        <position position="276"/>
    </location>
</feature>
<feature type="sequence variant" id="VAR_072837" description="In FHCL1; uncertain significance; dbSNP:rs146651743." evidence="46">
    <original>C</original>
    <variation>W</variation>
    <location>
        <position position="276"/>
    </location>
</feature>
<feature type="sequence variant" id="VAR_005349" description="In FHCL1; dbSNP:rs730882089." evidence="83">
    <original>C</original>
    <variation>Y</variation>
    <location>
        <position position="276"/>
    </location>
</feature>
<feature type="sequence variant" id="VAR_005350" description="In FHCL1; uncertain significance; dbSNP:rs148698650." evidence="10 33 63 66">
    <original>E</original>
    <variation>K</variation>
    <location>
        <position position="277"/>
    </location>
</feature>
<feature type="sequence variant" id="VAR_072838" description="In FHCL1; uncertain significance; dbSNP:rs730882091." evidence="46">
    <original>H</original>
    <variation>Y</variation>
    <location>
        <position position="285"/>
    </location>
</feature>
<feature type="sequence variant" id="VAR_005351" description="In FHCL1; likely pathogenic; Greece-2; dbSNP:rs140241383." evidence="27 33 76">
    <original>S</original>
    <variation>R</variation>
    <location>
        <position position="286"/>
    </location>
</feature>
<feature type="sequence variant" id="VAR_007983" description="In FHCL1; pathogenic; dbSNP:rs368657165." evidence="9">
    <original>E</original>
    <variation>K</variation>
    <location>
        <position position="288"/>
    </location>
</feature>
<feature type="sequence variant" id="VAR_072839" description="In FHCL1; likely pathogenic; does not affect receptor expression at the cell surface; results in reduced LDL binding; results in reduced LDL uptake and internalization; dbSNP:rs767618089." evidence="37 48">
    <original>R</original>
    <variation>G</variation>
    <location>
        <position position="300"/>
    </location>
</feature>
<feature type="sequence variant" id="VAR_005352" description="In FHCL1; dbSNP:rs879254714." evidence="72">
    <original>D</original>
    <variation>A</variation>
    <location>
        <position position="301"/>
    </location>
</feature>
<feature type="sequence variant" id="VAR_072840" description="In FHCL1; does not affect receptor expression at the cell surface; results in reduced LDL binding; results in reduced LDL uptake and internalization; dbSNP:rs879254714." evidence="37 46 48">
    <original>D</original>
    <variation>G</variation>
    <location>
        <position position="301"/>
    </location>
</feature>
<feature type="sequence variant" id="VAR_005354" description="In FHCL1; dbSNP:rs879254716." evidence="72">
    <original>C</original>
    <variation>W</variation>
    <location>
        <position position="302"/>
    </location>
</feature>
<feature type="sequence variant" id="VAR_005353" description="In FHCL1; dbSNP:rs879254715." evidence="10">
    <original>C</original>
    <variation>Y</variation>
    <location>
        <position position="302"/>
    </location>
</feature>
<feature type="sequence variant" id="VAR_005356" description="In FHCL1; likely pathogenic; Baltimore-1; dbSNP:rs875989909." evidence="27">
    <original>D</original>
    <variation>E</variation>
    <location>
        <position position="304"/>
    </location>
</feature>
<feature type="sequence variant" id="VAR_005355" description="In FHCL1; pathogenic; Denver-2; dbSNP:rs121908030." evidence="27 41">
    <original>D</original>
    <variation>N</variation>
    <location>
        <position position="304"/>
    </location>
</feature>
<feature type="sequence variant" id="VAR_005357" description="In FHCL1; uncertain significance; Amsterdam; dbSNP:rs11547917." evidence="14">
    <original>S</original>
    <variation>L</variation>
    <location>
        <position position="306"/>
    </location>
</feature>
<feature type="sequence variant" id="VAR_005358" description="In FHCL1; dbSNP:rs875989911 and dbSNP:rs875989910." evidence="76">
    <original>C</original>
    <variation>Y</variation>
    <location>
        <position position="313"/>
    </location>
</feature>
<feature type="sequence variant" id="VAR_072841" description="In FHCL1; uncertain significance; dbSNP:rs72658858." evidence="33">
    <original>G</original>
    <variation>R</variation>
    <location>
        <position position="314"/>
    </location>
</feature>
<feature type="sequence variant" id="VAR_005360" description="In FHCL1; Trieste; dbSNP:rs879254739." evidence="46 67">
    <original>C</original>
    <variation>F</variation>
    <location>
        <position position="318"/>
    </location>
</feature>
<feature type="sequence variant" id="VAR_062376" description="In FHCL1; dbSNP:rs879254738." evidence="18">
    <original>C</original>
    <variation>R</variation>
    <location>
        <position position="318"/>
    </location>
</feature>
<feature type="sequence variant" id="VAR_005359" description="In FHCL1; Mexico-1; leads to a defect in the intracellular transport of the receptor; dbSNP:rs879254739." evidence="27">
    <original>C</original>
    <variation>Y</variation>
    <location>
        <position position="318"/>
    </location>
</feature>
<feature type="sequence variant" id="VAR_072842" description="In FHCL1; pathogenic; dbSNP:rs879254747." evidence="46">
    <original>S</original>
    <variation>C</variation>
    <location>
        <position position="326"/>
    </location>
</feature>
<feature type="sequence variant" id="VAR_005361" description="In FHCL1; uncertain significance; dbSNP:rs747507019." evidence="76">
    <original>H</original>
    <variation>Y</variation>
    <location>
        <position position="327"/>
    </location>
</feature>
<feature type="sequence variant" id="VAR_067196" description="In FHCL1; dbSNP:rs761954844." evidence="42">
    <original>C</original>
    <variation>F</variation>
    <location>
        <position position="329"/>
    </location>
</feature>
<feature type="sequence variant" id="VAR_005362" description="In FHCL1; dbSNP:rs761954844." evidence="79">
    <original>C</original>
    <variation>Y</variation>
    <location>
        <position position="329"/>
    </location>
</feature>
<feature type="sequence variant" id="VAR_005363" description="In FHCL1; likely pathogenic; Paris-6; dbSNP:rs544453230." evidence="27">
    <original>G</original>
    <variation>S</variation>
    <location>
        <position position="335"/>
    </location>
</feature>
<feature type="sequence variant" id="VAR_005364" description="In FHCL1; dbSNP:rs879254753." evidence="13 62">
    <original>C</original>
    <variation>S</variation>
    <location>
        <position position="338"/>
    </location>
</feature>
<feature type="sequence variant" id="VAR_005365" description="In FHCL1; uncertain significance; New York-1; dbSNP:rs780563386." evidence="27">
    <original>D</original>
    <variation>E</variation>
    <location>
        <position position="342"/>
    </location>
</feature>
<feature type="sequence variant" id="VAR_005366" description="In FHCL1; benign; dbSNP:rs139361635." evidence="76">
    <original>D</original>
    <variation>N</variation>
    <location>
        <position position="342"/>
    </location>
</feature>
<feature type="sequence variant" id="VAR_005367" description="In FHCL1; pathogenic; Picardie; dbSNP:rs730882096." evidence="27 46">
    <original>G</original>
    <variation>S</variation>
    <location>
        <position position="343"/>
    </location>
</feature>
<feature type="sequence variant" id="VAR_005368" description="In FHCL1; likely pathogenic; dbSNP:rs875989914." evidence="72 76">
    <original>R</original>
    <variation>P</variation>
    <location>
        <position position="350"/>
    </location>
</feature>
<feature type="sequence variant" id="VAR_072843" description="In FHCL1; uncertain significance; dbSNP:rs879254769." evidence="33">
    <original>C</original>
    <variation>R</variation>
    <location>
        <position position="352"/>
    </location>
</feature>
<feature type="sequence variant" id="VAR_005369" description="In FHCL1; likely pathogenic; Mexico-2; dbSNP:rs193922566." evidence="27">
    <original>C</original>
    <variation>Y</variation>
    <location>
        <position position="352"/>
    </location>
</feature>
<feature type="sequence variant" id="VAR_005370" description="In FHCL1; uncertain significance; Munster-2; dbSNP:rs755449669." evidence="27">
    <original>D</original>
    <variation>G</variation>
    <location>
        <position position="354"/>
    </location>
</feature>
<feature type="sequence variant" id="VAR_005371" description="In FHCL1; uncertain significance; Oklahoma; dbSNP:rs755449669." evidence="27">
    <original>D</original>
    <variation>V</variation>
    <location>
        <position position="354"/>
    </location>
</feature>
<feature type="sequence variant" id="VAR_007984" description="In FHCL1; dbSNP:rs767767730." evidence="38 73">
    <original>D</original>
    <variation>Y</variation>
    <location>
        <position position="356"/>
    </location>
</feature>
<feature type="sequence variant" id="VAR_005372" description="In FHCL1; likely pathogenic; Paris-7; dbSNP:rs879254781." evidence="27">
    <original>E</original>
    <variation>K</variation>
    <location>
        <position position="357"/>
    </location>
</feature>
<feature type="sequence variant" id="VAR_062377" description="In FHCL1; dbSNP:rs875989915." evidence="32 38">
    <original>C</original>
    <variation>Y</variation>
    <location>
        <position position="358"/>
    </location>
</feature>
<feature type="sequence variant" id="VAR_005373" description="In FHCL1; uncertain significance; Mexico-3; dbSNP:rs879254787." evidence="27">
    <original>C</original>
    <variation>R</variation>
    <location>
        <position position="364"/>
    </location>
</feature>
<feature type="sequence variant" id="VAR_007985" description="In FHCL1; dbSNP:rs746982741." evidence="71">
    <original>Q</original>
    <variation>R</variation>
    <location>
        <position position="366"/>
    </location>
</feature>
<feature type="sequence variant" id="VAR_005374" description="In FHCL1; dbSNP:rs879254791." evidence="77">
    <original>C</original>
    <variation>R</variation>
    <location>
        <position position="368"/>
    </location>
</feature>
<feature type="sequence variant" id="VAR_072844" description="In FHCL1; uncertain significance; dbSNP:rs768430352." evidence="46">
    <original>C</original>
    <variation>Y</variation>
    <location>
        <position position="368"/>
    </location>
</feature>
<feature type="sequence variant" id="VAR_062378" description="In FHCL1; dbSNP:rs879254792." evidence="18">
    <original>N</original>
    <variation>T</variation>
    <location>
        <position position="370"/>
    </location>
</feature>
<feature type="sequence variant" id="VAR_072845" description="In FHCL1; uncertain significance; dbSNP:rs879254797." evidence="46">
    <original>G</original>
    <variation>D</variation>
    <location>
        <position position="373"/>
    </location>
</feature>
<feature type="sequence variant" id="VAR_005375" description="In FHCL1; uncertain significance; Naples-1; dbSNP:rs879254803." evidence="27">
    <original>C</original>
    <variation>R</variation>
    <location>
        <position position="379"/>
    </location>
</feature>
<feature type="sequence variant" id="VAR_007986" description="In FHCL1; dbSNP:rs879254804." evidence="82">
    <original>C</original>
    <variation>Y</variation>
    <location>
        <position position="379"/>
    </location>
</feature>
<feature type="sequence variant" id="VAR_024519" description="In dbSNP:rs11669576.">
    <original>A</original>
    <variation>T</variation>
    <location>
        <position position="391"/>
    </location>
</feature>
<feature type="sequence variant" id="VAR_005376" description="In FHCL1; dbSNP:rs875989918." evidence="76">
    <original>A</original>
    <variation>D</variation>
    <location>
        <position position="399"/>
    </location>
</feature>
<feature type="sequence variant" id="VAR_005377" description="In FHCL1; uncertain significance; Pori; dbSNP:rs121908038." evidence="61">
    <original>L</original>
    <variation>H</variation>
    <location>
        <position position="401"/>
    </location>
</feature>
<feature type="sequence variant" id="VAR_007987" description="In FHCL1; dbSNP:rs146200173." evidence="73">
    <original>L</original>
    <variation>V</variation>
    <location>
        <position position="401"/>
    </location>
</feature>
<feature type="sequence variant" id="VAR_008995" description="In FHCL1; dbSNP:rs879254831." evidence="13">
    <original>F</original>
    <variation>L</variation>
    <location>
        <position position="403"/>
    </location>
</feature>
<feature type="sequence variant" id="VAR_072846" description="In FHCL1; uncertain significance; dbSNP:rs879254834." evidence="14">
    <original>T</original>
    <variation>P</variation>
    <location>
        <position position="404"/>
    </location>
</feature>
<feature type="sequence variant" id="VAR_013954" description="In FHCL1; likely pathogenic; dbSNP:rs552422789." evidence="17">
    <original>R</original>
    <variation>Q</variation>
    <location>
        <position position="406"/>
    </location>
</feature>
<feature type="sequence variant" id="VAR_072847" description="In FHCL1; pathogenic; dbSNP:rs121908043." evidence="46">
    <original>R</original>
    <variation>W</variation>
    <location>
        <position position="406"/>
    </location>
</feature>
<feature type="sequence variant" id="VAR_005378" description="In FHCL1; likely pathogenic; Algeria-1; dbSNP:rs137943601." evidence="17 33">
    <original>E</original>
    <variation>K</variation>
    <location>
        <position position="408"/>
    </location>
</feature>
<feature type="sequence variant" id="VAR_005379" description="In FHCL1; uncertain significance; dbSNP:rs748554592." evidence="79">
    <original>L</original>
    <variation>R</variation>
    <location>
        <position position="414"/>
    </location>
</feature>
<feature type="sequence variant" id="VAR_062379" description="In FHCL1; uncertain significance; dbSNP:rs879254845." evidence="18">
    <original>D</original>
    <variation>G</variation>
    <location>
        <position position="415"/>
    </location>
</feature>
<feature type="sequence variant" id="VAR_005380" description="In FHCL1; uncertain significance; dbSNP:rs773658037." evidence="78">
    <original>R</original>
    <variation>Q</variation>
    <location>
        <position position="416"/>
    </location>
</feature>
<feature type="sequence variant" id="VAR_005381" description="In FHCL1; results in reduced receptor expression at the cell surface due to defective receptor recycling; dbSNP:rs570942190." evidence="37 47 73 76">
    <original>R</original>
    <variation>W</variation>
    <location>
        <position position="416"/>
    </location>
</feature>
<feature type="sequence variant" id="VAR_005382" description="In FHCL1; dbSNP:rs879254849." evidence="63">
    <original>I</original>
    <variation>T</variation>
    <location>
        <position position="423"/>
    </location>
</feature>
<feature type="sequence variant" id="VAR_005383" description="In FHCL1; Afrikaner-2; 20-30% of Afrikaners and 2% of FHCL1 Dutch; dbSNP:rs28942078." evidence="46 49 66 78 79">
    <original>V</original>
    <variation>M</variation>
    <location>
        <position position="429"/>
    </location>
</feature>
<feature type="sequence variant" id="VAR_005384" description="In FHCL1; pathogenic; Algeria-2; dbSNP:rs28942079." evidence="13 33">
    <original>A</original>
    <variation>T</variation>
    <location>
        <position position="431"/>
    </location>
</feature>
<feature type="sequence variant" id="VAR_007988" description="In FHCL1; dbSNP:rs730882100." evidence="9">
    <original>L</original>
    <variation>V</variation>
    <location>
        <position position="432"/>
    </location>
</feature>
<feature type="sequence variant" id="VAR_005385" description="In FHCL1; Osaka-3; dbSNP:rs121908036." evidence="28">
    <original>D</original>
    <variation>H</variation>
    <location>
        <position position="433"/>
    </location>
</feature>
<feature type="sequence variant" id="VAR_005386" description="In FHCL1; likely pathogenic; Algeria-3; dbSNP:rs745343524." evidence="10">
    <original>T</original>
    <variation>K</variation>
    <location>
        <position position="434"/>
    </location>
</feature>
<feature type="sequence variant" id="VAR_005388" description="In FHCL1; uncertain significance; Rouen; dbSNP:rs5933." evidence="27">
    <original>I</original>
    <variation>M</variation>
    <location>
        <position position="441"/>
    </location>
</feature>
<feature type="sequence variant" id="VAR_005387" description="In FHCL1; uncertain significance; Russia-1; dbSNP:rs879254862." evidence="27">
    <original>I</original>
    <variation>N</variation>
    <location>
        <position position="441"/>
    </location>
</feature>
<feature type="sequence variant" id="VAR_072848" description="In FHCL1; uncertain significance; dbSNP:rs879254863." evidence="33">
    <original>Y</original>
    <variation>H</variation>
    <location>
        <position position="442"/>
    </location>
</feature>
<feature type="sequence variant" id="VAR_005389" description="In FHCL1; North Platt; dbSNP:rs879254867." evidence="27">
    <original>W</original>
    <variation>C</variation>
    <location>
        <position position="443"/>
    </location>
</feature>
<feature type="sequence variant" id="VAR_062380" description="In FHCL1; dbSNP:rs879254874." evidence="19 38">
    <original>I</original>
    <variation>T</variation>
    <location>
        <position position="451"/>
    </location>
</feature>
<feature type="sequence variant" id="VAR_072849" description="In FHCL1; likely pathogenic; results in reduced receptor expression at the cell surface due to defective receptor recycling; dbSNP:rs879254879." evidence="37 47">
    <original>T</original>
    <variation>N</variation>
    <location>
        <position position="454"/>
    </location>
</feature>
<feature type="sequence variant" id="VAR_011863" description="In dbSNP:rs5932." evidence="11">
    <original>V</original>
    <variation>I</variation>
    <location>
        <position position="468"/>
    </location>
</feature>
<feature type="sequence variant" id="VAR_065783" description="In FHCL1; uncertain significance; dbSNP:rs879254891." evidence="41">
    <original>R</original>
    <variation>G</variation>
    <location>
        <position position="471"/>
    </location>
</feature>
<feature type="sequence variant" id="VAR_005390" description="In FHCL1; pathogenic; New York-2; dbSNP:rs144614838." evidence="27">
    <original>G</original>
    <variation>R</variation>
    <location>
        <position position="478"/>
    </location>
</feature>
<feature type="sequence variant" id="VAR_062381" description="In FHCL1; dbSNP:rs879254900." evidence="32">
    <original>L</original>
    <variation>P</variation>
    <location>
        <position position="479"/>
    </location>
</feature>
<feature type="sequence variant" id="VAR_005391" description="In FHCL1; dbSNP:rs139624145." evidence="32 76">
    <original>D</original>
    <variation>H</variation>
    <location>
        <position position="482"/>
    </location>
</feature>
<feature type="sequence variant" id="VAR_005392" description="In FHCL1; uncertain significance; dbSNP:rs879254905." evidence="76">
    <original>W</original>
    <variation>R</variation>
    <location>
        <position position="483"/>
    </location>
</feature>
<feature type="sequence variant" id="VAR_005394" description="In FHCL1; Milan; dbSNP:rs879254906." evidence="27">
    <original>H</original>
    <variation>R</variation>
    <location>
        <position position="485"/>
    </location>
</feature>
<feature type="sequence variant" id="VAR_005393" description="In FHCL1." evidence="64">
    <location>
        <position position="487"/>
    </location>
</feature>
<feature type="sequence variant" id="VAR_072850" description="In FHCL1; uncertain significance; dbSNP:rs373646964." evidence="46">
    <original>D</original>
    <variation>N</variation>
    <location>
        <position position="492"/>
    </location>
</feature>
<feature type="sequence variant" id="VAR_005395" description="In FHCL1; Kuwait; dbSNP:rs28942080." evidence="33">
    <original>V</original>
    <variation>M</variation>
    <location>
        <position position="523"/>
    </location>
</feature>
<feature type="sequence variant" id="VAR_005396" description="In FHCL1; uncertain significance; Cincinnati-3; dbSNP:rs730882106." evidence="76">
    <original>P</original>
    <variation>S</variation>
    <location>
        <position position="526"/>
    </location>
</feature>
<feature type="sequence variant" id="VAR_005397" description="In Saint Omer; retention in the ER; dbSNP:rs28942081." evidence="39">
    <original>G</original>
    <variation>D</variation>
    <location>
        <position position="546"/>
    </location>
</feature>
<feature type="sequence variant" id="VAR_005398" description="In FHCL1; Genoa; dbSNP:rs28941776." evidence="46 76">
    <original>G</original>
    <variation>D</variation>
    <location>
        <position position="549"/>
    </location>
</feature>
<feature type="sequence variant" id="VAR_005399" description="In FHCL1; dbSNP:rs397509365." evidence="9 14 46 60 74">
    <original>N</original>
    <variation>H</variation>
    <location>
        <position position="564"/>
    </location>
</feature>
<feature type="sequence variant" id="VAR_005400" description="In FHCL1; Sicily; dbSNP:rs758194385." evidence="80">
    <original>N</original>
    <variation>S</variation>
    <location>
        <position position="564"/>
    </location>
</feature>
<feature type="sequence variant" id="VAR_005401" description="In FHCL1; Naples-2; dbSNP:rs28942082." evidence="27">
    <original>G</original>
    <variation>V</variation>
    <location>
        <position position="565"/>
    </location>
</feature>
<feature type="sequence variant" id="VAR_008996" description="In FHCL1; dbSNP:rs746959386." evidence="13">
    <original>L</original>
    <variation>V</variation>
    <location>
        <position position="568"/>
    </location>
</feature>
<feature type="sequence variant" id="VAR_072851" description="In FHCL1; uncertain significance; dbSNP:rs185098634." evidence="22">
    <original>R</original>
    <variation>C</variation>
    <location>
        <position position="574"/>
    </location>
</feature>
<feature type="sequence variant" id="VAR_072852" description="In FHCL1; likely pathogenic; dbSNP:rs777188764." evidence="46">
    <original>R</original>
    <variation>H</variation>
    <location>
        <position position="574"/>
    </location>
</feature>
<feature type="sequence variant" id="VAR_072853" description="In FHCL1; pathogenic; results in loss of receptor expression at the cell surface; dbSNP:rs879255000." evidence="33 47">
    <original>W</original>
    <variation>G</variation>
    <location>
        <position position="577"/>
    </location>
</feature>
<feature type="sequence variant" id="VAR_072854" description="In FHCL1; uncertain significance; dbSNP:rs138947766." evidence="14">
    <original>W</original>
    <variation>S</variation>
    <location>
        <position position="577"/>
    </location>
</feature>
<feature type="sequence variant" id="VAR_005402" description="In FHCL1; Cincinnati-4; less than 2% receptor activity; dbSNP:rs875989929." evidence="14 63">
    <original>D</original>
    <variation>N</variation>
    <location>
        <position position="579"/>
    </location>
</feature>
<feature type="sequence variant" id="VAR_062382" description="In FHCL1; dbSNP:rs875989929." evidence="18">
    <original>D</original>
    <variation>Y</variation>
    <location>
        <position position="579"/>
    </location>
</feature>
<feature type="sequence variant" id="VAR_072855" description="In FHCL1; uncertain significance; dbSNP:rs879255012." evidence="33">
    <original>I</original>
    <variation>T</variation>
    <location>
        <position position="585"/>
    </location>
</feature>
<feature type="sequence variant" id="VAR_005403" description="In FHCL1; pathogenic; Sicily; dbSNP:rs137929307." evidence="80">
    <original>G</original>
    <variation>E</variation>
    <location>
        <position position="592"/>
    </location>
</feature>
<feature type="sequence variant" id="VAR_072856" description="In FHCL1; pathogenic; dbSNP:rs373371572." evidence="46">
    <original>R</original>
    <variation>W</variation>
    <location>
        <position position="595"/>
    </location>
</feature>
<feature type="sequence variant" id="VAR_005404" description="In FHCL1; uncertain significance; London-5; dbSNP:rs879255025." evidence="27">
    <original>L</original>
    <variation>S</variation>
    <location>
        <position position="599"/>
    </location>
</feature>
<feature type="sequence variant" id="VAR_072857" description="In FHCL1; uncertain significance; dbSNP:rs753707206." evidence="46">
    <original>D</original>
    <variation>H</variation>
    <location>
        <position position="601"/>
    </location>
</feature>
<feature type="sequence variant" id="VAR_007989" description="In FHCL1; dbSNP:rs879255034." evidence="82">
    <original>P</original>
    <variation>S</variation>
    <location>
        <position position="608"/>
    </location>
</feature>
<feature type="sequence variant" id="VAR_005405" description="In FHCL1; dbSNP:rs746118995." evidence="76">
    <original>R</original>
    <variation>C</variation>
    <location>
        <position position="633"/>
    </location>
</feature>
<feature type="sequence variant" id="VAR_072858" description="In FHCL1; dbSNP:rs794728584." evidence="22">
    <original>V</original>
    <variation>D</variation>
    <location>
        <position position="639"/>
    </location>
</feature>
<feature type="sequence variant" id="VAR_005406" description="In FHCL1; dbSNP:rs879255081." evidence="76">
    <original>P</original>
    <variation>L</variation>
    <location>
        <position position="649"/>
    </location>
</feature>
<feature type="sequence variant" id="VAR_005407" description="In FHCL1; likely pathogenic; French Canadian-2; 5% of French Canadians; dbSNP:rs28942083." evidence="10 44">
    <original>C</original>
    <variation>Y</variation>
    <location>
        <position position="667"/>
    </location>
</feature>
<feature type="sequence variant" id="VAR_005408" description="In FHCL1; New York-3; dbSNP:rs775092314." evidence="32">
    <original>C</original>
    <variation>R</variation>
    <location>
        <position position="677"/>
    </location>
</feature>
<feature type="sequence variant" id="VAR_005409" description="In FHCL1; uncertain significance; Issoire; dbSNP:rs879255119." evidence="27">
    <original>L</original>
    <variation>P</variation>
    <location>
        <position position="682"/>
    </location>
</feature>
<feature type="sequence variant" id="VAR_005410" description="In FHCL1; Gujerat/Zambia/Belgian/Dutch/Sweden/Japan; dbSNP:rs28942084." evidence="29 32 33 46 50 62 75">
    <original>P</original>
    <variation>L</variation>
    <location>
        <position position="685"/>
    </location>
</feature>
<feature type="sequence variant" id="VAR_013955" description="In FHCL1; uncertain significance; dbSNP:rs201573863." evidence="17 46">
    <original>P</original>
    <variation>L</variation>
    <location>
        <position position="699"/>
    </location>
</feature>
<feature type="sequence variant" id="VAR_005412" description="In FHCL1; uncertain significance; dbSNP:rs759858813." evidence="10">
    <original>D</original>
    <variation>E</variation>
    <location>
        <position position="700"/>
    </location>
</feature>
<feature type="sequence variant" id="VAR_008997" description="In FHCL1; dbSNP:rs869320652." evidence="13">
    <original>E</original>
    <variation>K</variation>
    <location>
        <position position="714"/>
    </location>
</feature>
<feature type="sequence variant" id="VAR_005413" description="In FHCL1; benign; Paris-9; dbSNP:rs45508991." evidence="14 76">
    <original>T</original>
    <variation>I</variation>
    <location>
        <position position="726"/>
    </location>
</feature>
<feature type="sequence variant" id="VAR_072859" description="In dbSNP:rs767546791." evidence="22">
    <original>T</original>
    <variation>I</variation>
    <location>
        <position position="742"/>
    </location>
</feature>
<feature type="sequence variant" id="VAR_005414" description="In FHCL1; uncertain significance; Russia-2; dbSNP:rs761123215." evidence="27">
    <original>I</original>
    <variation>F</variation>
    <location>
        <position position="792"/>
    </location>
</feature>
<feature type="sequence variant" id="VAR_005415" description="In FHCL1; dbSNP:rs750518671." evidence="46 66">
    <original>V</original>
    <variation>M</variation>
    <location>
        <position position="797"/>
    </location>
</feature>
<feature type="sequence variant" id="VAR_005416" description="In FHCL1; dbSNP:rs879255195." evidence="74">
    <location>
        <begin position="799"/>
        <end position="801"/>
    </location>
</feature>
<feature type="sequence variant" id="VAR_072860" description="In FHCL1; uncertain significance; dbSNP:rs879255208." evidence="22">
    <original>V</original>
    <variation>D</variation>
    <location>
        <position position="806"/>
    </location>
</feature>
<feature type="sequence variant" id="VAR_011864" description="In FHCL1; uncertain significance; dbSNP:rs5928." evidence="11 17 46">
    <original>R</original>
    <variation>Q</variation>
    <location>
        <position position="814"/>
    </location>
</feature>
<feature type="sequence variant" id="VAR_005417" description="In FHCL1.">
    <location>
        <begin position="820"/>
        <end position="822"/>
    </location>
</feature>
<feature type="sequence variant" id="VAR_072861" description="In FHCL1; pathogenic; does not affect receptor expression at the cell surface; does not affect LDL binding; results in impaired LDL uptake and internalization; dbSNP:rs374045590." evidence="14 47">
    <original>N</original>
    <variation>K</variation>
    <location>
        <position position="825"/>
    </location>
</feature>
<feature type="sequence variant" id="VAR_062383" description="In FHCL1; dbSNP:rs879255217." evidence="38">
    <original>P</original>
    <variation>S</variation>
    <location>
        <position position="826"/>
    </location>
</feature>
<feature type="sequence variant" id="VAR_005418" description="In FHCL1; uncertain significance; New York-5; dbSNP:rs137853964." evidence="27">
    <original>V</original>
    <variation>I</variation>
    <location>
        <position position="827"/>
    </location>
</feature>
<feature type="sequence variant" id="VAR_005419" description="In FHCL1; J.D.Bari/Syria; 2-fold decreased affinity for LDLRAP1; dbSNP:rs28942085." evidence="43 58">
    <original>Y</original>
    <variation>C</variation>
    <location>
        <position position="828"/>
    </location>
</feature>
<feature type="sequence variant" id="VAR_005420" description="In FHCL1; likely pathogenic; Turku; dbSNP:rs121908037." evidence="61">
    <original>G</original>
    <variation>D</variation>
    <location>
        <position position="844"/>
    </location>
</feature>
<feature type="mutagenesis site" description="Partial loss of binding to Getah virus E2-E1 spike glycoproteins." evidence="57">
    <original>W</original>
    <variation>I</variation>
    <location>
        <position position="165"/>
    </location>
</feature>
<feature type="mutagenesis site" description="Partial loss of binding to Getah virus E2-E1 spike glycoproteins." evidence="57">
    <original>D</original>
    <variation>K</variation>
    <location>
        <position position="168"/>
    </location>
</feature>
<feature type="mutagenesis site" description="Partial loss of binding to Getah virus E2-E1 spike glycoproteins." evidence="57">
    <original>D</original>
    <variation>K</variation>
    <location>
        <position position="175"/>
    </location>
</feature>
<feature type="mutagenesis site" description="Partial loss of binding to Getah virus E2-E1 spike glycoproteins." evidence="57">
    <original>E</original>
    <variation>R</variation>
    <location>
        <position position="208"/>
    </location>
</feature>
<feature type="mutagenesis site" description="Partial loss of binding to Getah virus E2-E1 spike glycoproteins." evidence="57">
    <original>W</original>
    <variation>I</variation>
    <location>
        <position position="214"/>
    </location>
</feature>
<feature type="mutagenesis site" description="Partial loss of binding to Getah virus E2-E1 spike glycoproteins." evidence="57">
    <original>D</original>
    <variation>K</variation>
    <location>
        <position position="217"/>
    </location>
</feature>
<feature type="mutagenesis site" description="Partial loss of binding to Getah virus E2-E1 spike glycoproteins." evidence="57">
    <original>D</original>
    <variation>K</variation>
    <location>
        <position position="224"/>
    </location>
</feature>
<feature type="mutagenesis site" description="No change. No change; when associated with R-816 and R-830. Insensitive to MYLIP-triggered degradation; when associated with R-816; R-830 and A-839." evidence="39">
    <original>K</original>
    <variation>R</variation>
    <location>
        <position position="811"/>
    </location>
</feature>
<feature type="mutagenesis site" description="No change. No change; when associated with R-830. No change; when associated with R-811 and R-830. Insensitive to MYLIP-triggered degradation; when associated with R-830 and A-839. Insensitive to MYLIP-triggered degradation; when associated with R-811; R-830 and A-839." evidence="39">
    <original>K</original>
    <variation>R</variation>
    <location>
        <position position="816"/>
    </location>
</feature>
<feature type="mutagenesis site" description="3-fold decreased affinity for LDLRAP1." evidence="43">
    <original>I</original>
    <variation>A</variation>
    <location>
        <position position="821"/>
    </location>
</feature>
<feature type="mutagenesis site" description="10-fold decreased affinity for LDLRAP1." evidence="43">
    <original>I</original>
    <variation>R</variation>
    <location>
        <position position="821"/>
    </location>
</feature>
<feature type="mutagenesis site" description="Abolishes interaction with ARRB2." evidence="26">
    <original>Y</original>
    <variation>A</variation>
    <location>
        <position position="828"/>
    </location>
</feature>
<feature type="mutagenesis site" description="Decreased affinity for LDLRAP1." evidence="43">
    <original>Q</original>
    <variation>A</variation>
    <location>
        <position position="829"/>
    </location>
</feature>
<feature type="mutagenesis site" description="No change. No change; when associated with R-816. No change; when associated with R-811 and R-816. Insensitive to MYLIP-triggered degradation; when associated with A-839. Insensitive to MYLIP-triggered degradation; when associated with R-816 and A-839. Insensitive to MYLIP-triggered degradation; when associated with R-811; R-816 and A-839." evidence="39">
    <original>K</original>
    <variation>R</variation>
    <location>
        <position position="830"/>
    </location>
</feature>
<feature type="mutagenesis site" description="No change. Insensitive to MYLIP-triggered degradation; when associated with R-830. Insensitive to MYLIP-triggered degradation; when associated with R-816 and R-830. Insensitive to MYLIP-triggered degradation; when associated with R-811; R-816 and R-830." evidence="39">
    <original>C</original>
    <variation>A</variation>
    <location>
        <position position="839"/>
    </location>
</feature>
<feature type="mutagenesis site" description="No effect on receptor internalization." evidence="26">
    <original>S</original>
    <variation>A</variation>
    <location>
        <position position="854"/>
    </location>
</feature>
<feature type="mutagenesis site" description="Enhances interaction with ARRB2 and receptor internalization." evidence="26">
    <original>S</original>
    <variation>D</variation>
    <location>
        <position position="854"/>
    </location>
</feature>
<feature type="sequence conflict" description="In Ref. 4; BAG58495." evidence="87" ref="4">
    <original>E</original>
    <variation>D</variation>
    <location>
        <position position="31"/>
    </location>
</feature>
<feature type="strand" evidence="90">
    <location>
        <begin position="29"/>
        <end position="33"/>
    </location>
</feature>
<feature type="strand" evidence="90">
    <location>
        <begin position="35"/>
        <end position="37"/>
    </location>
</feature>
<feature type="strand" evidence="95">
    <location>
        <begin position="39"/>
        <end position="41"/>
    </location>
</feature>
<feature type="turn" evidence="90">
    <location>
        <begin position="42"/>
        <end position="46"/>
    </location>
</feature>
<feature type="strand" evidence="90">
    <location>
        <begin position="47"/>
        <end position="49"/>
    </location>
</feature>
<feature type="strand" evidence="90">
    <location>
        <begin position="51"/>
        <end position="55"/>
    </location>
</feature>
<feature type="helix" evidence="90">
    <location>
        <begin position="56"/>
        <end position="58"/>
    </location>
</feature>
<feature type="turn" evidence="95">
    <location>
        <begin position="60"/>
        <end position="62"/>
    </location>
</feature>
<feature type="strand" evidence="103">
    <location>
        <begin position="65"/>
        <end position="67"/>
    </location>
</feature>
<feature type="strand" evidence="96">
    <location>
        <begin position="70"/>
        <end position="72"/>
    </location>
</feature>
<feature type="strand" evidence="103">
    <location>
        <begin position="77"/>
        <end position="79"/>
    </location>
</feature>
<feature type="helix" evidence="103">
    <location>
        <begin position="85"/>
        <end position="87"/>
    </location>
</feature>
<feature type="strand" evidence="103">
    <location>
        <begin position="90"/>
        <end position="93"/>
    </location>
</feature>
<feature type="strand" evidence="90">
    <location>
        <begin position="95"/>
        <end position="97"/>
    </location>
</feature>
<feature type="helix" evidence="103">
    <location>
        <begin position="99"/>
        <end position="101"/>
    </location>
</feature>
<feature type="strand" evidence="103">
    <location>
        <begin position="102"/>
        <end position="104"/>
    </location>
</feature>
<feature type="strand" evidence="98">
    <location>
        <begin position="113"/>
        <end position="115"/>
    </location>
</feature>
<feature type="strand" evidence="98">
    <location>
        <begin position="121"/>
        <end position="123"/>
    </location>
</feature>
<feature type="helix" evidence="98">
    <location>
        <begin position="124"/>
        <end position="126"/>
    </location>
</feature>
<feature type="strand" evidence="98">
    <location>
        <begin position="129"/>
        <end position="131"/>
    </location>
</feature>
<feature type="turn" evidence="98">
    <location>
        <begin position="138"/>
        <end position="142"/>
    </location>
</feature>
<feature type="helix" evidence="98">
    <location>
        <begin position="143"/>
        <end position="147"/>
    </location>
</feature>
<feature type="strand" evidence="99">
    <location>
        <begin position="148"/>
        <end position="151"/>
    </location>
</feature>
<feature type="strand" evidence="98">
    <location>
        <begin position="152"/>
        <end position="154"/>
    </location>
</feature>
<feature type="turn" evidence="99">
    <location>
        <begin position="156"/>
        <end position="158"/>
    </location>
</feature>
<feature type="strand" evidence="98">
    <location>
        <begin position="160"/>
        <end position="162"/>
    </location>
</feature>
<feature type="helix" evidence="98">
    <location>
        <begin position="163"/>
        <end position="165"/>
    </location>
</feature>
<feature type="strand" evidence="98">
    <location>
        <begin position="168"/>
        <end position="170"/>
    </location>
</feature>
<feature type="strand" evidence="99">
    <location>
        <begin position="173"/>
        <end position="176"/>
    </location>
</feature>
<feature type="helix" evidence="98">
    <location>
        <begin position="177"/>
        <end position="179"/>
    </location>
</feature>
<feature type="helix" evidence="98">
    <location>
        <begin position="181"/>
        <end position="183"/>
    </location>
</feature>
<feature type="turn" evidence="99">
    <location>
        <begin position="189"/>
        <end position="191"/>
    </location>
</feature>
<feature type="strand" evidence="99">
    <location>
        <begin position="201"/>
        <end position="204"/>
    </location>
</feature>
<feature type="turn" evidence="99">
    <location>
        <begin position="205"/>
        <end position="207"/>
    </location>
</feature>
<feature type="strand" evidence="99">
    <location>
        <begin position="208"/>
        <end position="211"/>
    </location>
</feature>
<feature type="helix" evidence="88">
    <location>
        <begin position="212"/>
        <end position="214"/>
    </location>
</feature>
<feature type="strand" evidence="88">
    <location>
        <begin position="217"/>
        <end position="219"/>
    </location>
</feature>
<feature type="strand" evidence="99">
    <location>
        <begin position="222"/>
        <end position="224"/>
    </location>
</feature>
<feature type="helix" evidence="88">
    <location>
        <begin position="226"/>
        <end position="228"/>
    </location>
</feature>
<feature type="strand" evidence="89">
    <location>
        <begin position="241"/>
        <end position="243"/>
    </location>
</feature>
<feature type="turn" evidence="89">
    <location>
        <begin position="244"/>
        <end position="246"/>
    </location>
</feature>
<feature type="strand" evidence="89">
    <location>
        <begin position="247"/>
        <end position="249"/>
    </location>
</feature>
<feature type="helix" evidence="89">
    <location>
        <begin position="251"/>
        <end position="253"/>
    </location>
</feature>
<feature type="strand" evidence="89">
    <location>
        <begin position="254"/>
        <end position="258"/>
    </location>
</feature>
<feature type="strand" evidence="89">
    <location>
        <begin position="260"/>
        <end position="264"/>
    </location>
</feature>
<feature type="helix" evidence="91">
    <location>
        <begin position="265"/>
        <end position="267"/>
    </location>
</feature>
<feature type="strand" evidence="91">
    <location>
        <begin position="268"/>
        <end position="270"/>
    </location>
</feature>
<feature type="strand" evidence="97">
    <location>
        <begin position="281"/>
        <end position="283"/>
    </location>
</feature>
<feature type="strand" evidence="97">
    <location>
        <begin position="289"/>
        <end position="292"/>
    </location>
</feature>
<feature type="turn" evidence="97">
    <location>
        <begin position="293"/>
        <end position="296"/>
    </location>
</feature>
<feature type="strand" evidence="97">
    <location>
        <begin position="306"/>
        <end position="308"/>
    </location>
</feature>
<feature type="turn" evidence="97">
    <location>
        <begin position="310"/>
        <end position="312"/>
    </location>
</feature>
<feature type="helix" evidence="100">
    <location>
        <begin position="317"/>
        <end position="319"/>
    </location>
</feature>
<feature type="helix" evidence="100">
    <location>
        <begin position="321"/>
        <end position="324"/>
    </location>
</feature>
<feature type="strand" evidence="100">
    <location>
        <begin position="326"/>
        <end position="330"/>
    </location>
</feature>
<feature type="strand" evidence="100">
    <location>
        <begin position="333"/>
        <end position="335"/>
    </location>
</feature>
<feature type="strand" evidence="100">
    <location>
        <begin position="337"/>
        <end position="339"/>
    </location>
</feature>
<feature type="strand" evidence="93">
    <location>
        <begin position="341"/>
        <end position="343"/>
    </location>
</feature>
<feature type="strand" evidence="100">
    <location>
        <begin position="345"/>
        <end position="347"/>
    </location>
</feature>
<feature type="turn" evidence="100">
    <location>
        <begin position="348"/>
        <end position="350"/>
    </location>
</feature>
<feature type="strand" evidence="100">
    <location>
        <begin position="351"/>
        <end position="353"/>
    </location>
</feature>
<feature type="helix" evidence="92">
    <location>
        <begin position="357"/>
        <end position="359"/>
    </location>
</feature>
<feature type="strand" evidence="92">
    <location>
        <begin position="363"/>
        <end position="369"/>
    </location>
</feature>
<feature type="strand" evidence="101">
    <location>
        <begin position="372"/>
        <end position="374"/>
    </location>
</feature>
<feature type="strand" evidence="92">
    <location>
        <begin position="376"/>
        <end position="378"/>
    </location>
</feature>
<feature type="strand" evidence="93">
    <location>
        <begin position="381"/>
        <end position="385"/>
    </location>
</feature>
<feature type="turn" evidence="101">
    <location>
        <begin position="387"/>
        <end position="389"/>
    </location>
</feature>
<feature type="strand" evidence="93">
    <location>
        <begin position="392"/>
        <end position="394"/>
    </location>
</feature>
<feature type="strand" evidence="94">
    <location>
        <begin position="400"/>
        <end position="404"/>
    </location>
</feature>
<feature type="strand" evidence="94">
    <location>
        <begin position="406"/>
        <end position="413"/>
    </location>
</feature>
<feature type="strand" evidence="94">
    <location>
        <begin position="420"/>
        <end position="423"/>
    </location>
</feature>
<feature type="strand" evidence="94">
    <location>
        <begin position="427"/>
        <end position="435"/>
    </location>
</feature>
<feature type="turn" evidence="94">
    <location>
        <begin position="436"/>
        <end position="439"/>
    </location>
</feature>
<feature type="strand" evidence="94">
    <location>
        <begin position="440"/>
        <end position="445"/>
    </location>
</feature>
<feature type="turn" evidence="94">
    <location>
        <begin position="446"/>
        <end position="449"/>
    </location>
</feature>
<feature type="strand" evidence="94">
    <location>
        <begin position="450"/>
        <end position="455"/>
    </location>
</feature>
<feature type="strand" evidence="94">
    <location>
        <begin position="466"/>
        <end position="469"/>
    </location>
</feature>
<feature type="strand" evidence="94">
    <location>
        <begin position="478"/>
        <end position="482"/>
    </location>
</feature>
<feature type="turn" evidence="94">
    <location>
        <begin position="483"/>
        <end position="486"/>
    </location>
</feature>
<feature type="strand" evidence="94">
    <location>
        <begin position="487"/>
        <end position="492"/>
    </location>
</feature>
<feature type="turn" evidence="94">
    <location>
        <begin position="493"/>
        <end position="496"/>
    </location>
</feature>
<feature type="strand" evidence="94">
    <location>
        <begin position="497"/>
        <end position="502"/>
    </location>
</feature>
<feature type="strand" evidence="94">
    <location>
        <begin position="505"/>
        <end position="513"/>
    </location>
</feature>
<feature type="strand" evidence="94">
    <location>
        <begin position="519"/>
        <end position="525"/>
    </location>
</feature>
<feature type="turn" evidence="94">
    <location>
        <begin position="526"/>
        <end position="529"/>
    </location>
</feature>
<feature type="strand" evidence="94">
    <location>
        <begin position="530"/>
        <end position="535"/>
    </location>
</feature>
<feature type="strand" evidence="94">
    <location>
        <begin position="537"/>
        <end position="539"/>
    </location>
</feature>
<feature type="strand" evidence="94">
    <location>
        <begin position="541"/>
        <end position="546"/>
    </location>
</feature>
<feature type="strand" evidence="94">
    <location>
        <begin position="552"/>
        <end position="556"/>
    </location>
</feature>
<feature type="strand" evidence="94">
    <location>
        <begin position="563"/>
        <end position="569"/>
    </location>
</feature>
<feature type="turn" evidence="94">
    <location>
        <begin position="570"/>
        <end position="573"/>
    </location>
</feature>
<feature type="strand" evidence="94">
    <location>
        <begin position="574"/>
        <end position="579"/>
    </location>
</feature>
<feature type="turn" evidence="94">
    <location>
        <begin position="580"/>
        <end position="583"/>
    </location>
</feature>
<feature type="strand" evidence="94">
    <location>
        <begin position="584"/>
        <end position="589"/>
    </location>
</feature>
<feature type="strand" evidence="94">
    <location>
        <begin position="596"/>
        <end position="600"/>
    </location>
</feature>
<feature type="turn" evidence="94">
    <location>
        <begin position="602"/>
        <end position="605"/>
    </location>
</feature>
<feature type="strand" evidence="94">
    <location>
        <begin position="606"/>
        <end position="614"/>
    </location>
</feature>
<feature type="strand" evidence="94">
    <location>
        <begin position="617"/>
        <end position="622"/>
    </location>
</feature>
<feature type="turn" evidence="94">
    <location>
        <begin position="623"/>
        <end position="626"/>
    </location>
</feature>
<feature type="strand" evidence="94">
    <location>
        <begin position="627"/>
        <end position="632"/>
    </location>
</feature>
<feature type="turn" evidence="94">
    <location>
        <begin position="633"/>
        <end position="635"/>
    </location>
</feature>
<feature type="strand" evidence="94">
    <location>
        <begin position="640"/>
        <end position="643"/>
    </location>
</feature>
<feature type="strand" evidence="94">
    <location>
        <begin position="652"/>
        <end position="656"/>
    </location>
</feature>
<feature type="helix" evidence="94">
    <location>
        <begin position="657"/>
        <end position="659"/>
    </location>
</feature>
<feature type="strand" evidence="94">
    <location>
        <begin position="668"/>
        <end position="672"/>
    </location>
</feature>
<feature type="helix" evidence="94">
    <location>
        <begin position="673"/>
        <end position="676"/>
    </location>
</feature>
<feature type="strand" evidence="94">
    <location>
        <begin position="678"/>
        <end position="683"/>
    </location>
</feature>
<feature type="strand" evidence="94">
    <location>
        <begin position="693"/>
        <end position="697"/>
    </location>
</feature>
<feature type="strand" evidence="101">
    <location>
        <begin position="708"/>
        <end position="713"/>
    </location>
</feature>
<feature type="strand" evidence="102">
    <location>
        <begin position="821"/>
        <end position="824"/>
    </location>
</feature>
<feature type="turn" evidence="102">
    <location>
        <begin position="826"/>
        <end position="829"/>
    </location>
</feature>
<accession>P01130</accession>
<accession>B4DII3</accession>
<accession>B4DJZ8</accession>
<accession>B4DR00</accession>
<accession>B4DTQ3</accession>
<accession>C0JYY8</accession>
<accession>H0YLU8</accession>
<accession>H0YNT7</accession>
<accession>Q53ZD9</accession>
<accession>Q59FQ1</accession>
<accession>Q9UDH7</accession>
<dbReference type="EMBL" id="L00352">
    <property type="protein sequence ID" value="AAA56833.1"/>
    <property type="molecule type" value="Genomic_DNA"/>
</dbReference>
<dbReference type="EMBL" id="L00336">
    <property type="protein sequence ID" value="AAA56833.1"/>
    <property type="status" value="JOINED"/>
    <property type="molecule type" value="Genomic_DNA"/>
</dbReference>
<dbReference type="EMBL" id="L00337">
    <property type="protein sequence ID" value="AAA56833.1"/>
    <property type="status" value="JOINED"/>
    <property type="molecule type" value="Genomic_DNA"/>
</dbReference>
<dbReference type="EMBL" id="L00338">
    <property type="protein sequence ID" value="AAA56833.1"/>
    <property type="status" value="JOINED"/>
    <property type="molecule type" value="Genomic_DNA"/>
</dbReference>
<dbReference type="EMBL" id="L00339">
    <property type="protein sequence ID" value="AAA56833.1"/>
    <property type="status" value="JOINED"/>
    <property type="molecule type" value="Genomic_DNA"/>
</dbReference>
<dbReference type="EMBL" id="L00340">
    <property type="protein sequence ID" value="AAA56833.1"/>
    <property type="status" value="JOINED"/>
    <property type="molecule type" value="Genomic_DNA"/>
</dbReference>
<dbReference type="EMBL" id="L00341">
    <property type="protein sequence ID" value="AAA56833.1"/>
    <property type="status" value="JOINED"/>
    <property type="molecule type" value="Genomic_DNA"/>
</dbReference>
<dbReference type="EMBL" id="L00343">
    <property type="protein sequence ID" value="AAA56833.1"/>
    <property type="status" value="JOINED"/>
    <property type="molecule type" value="Genomic_DNA"/>
</dbReference>
<dbReference type="EMBL" id="L00344">
    <property type="protein sequence ID" value="AAA56833.1"/>
    <property type="status" value="JOINED"/>
    <property type="molecule type" value="Genomic_DNA"/>
</dbReference>
<dbReference type="EMBL" id="L00345">
    <property type="protein sequence ID" value="AAA56833.1"/>
    <property type="status" value="JOINED"/>
    <property type="molecule type" value="Genomic_DNA"/>
</dbReference>
<dbReference type="EMBL" id="L00346">
    <property type="protein sequence ID" value="AAA56833.1"/>
    <property type="status" value="JOINED"/>
    <property type="molecule type" value="Genomic_DNA"/>
</dbReference>
<dbReference type="EMBL" id="L00347">
    <property type="protein sequence ID" value="AAA56833.1"/>
    <property type="status" value="JOINED"/>
    <property type="molecule type" value="Genomic_DNA"/>
</dbReference>
<dbReference type="EMBL" id="L00348">
    <property type="protein sequence ID" value="AAA56833.1"/>
    <property type="status" value="JOINED"/>
    <property type="molecule type" value="Genomic_DNA"/>
</dbReference>
<dbReference type="EMBL" id="L00349">
    <property type="protein sequence ID" value="AAA56833.1"/>
    <property type="status" value="JOINED"/>
    <property type="molecule type" value="Genomic_DNA"/>
</dbReference>
<dbReference type="EMBL" id="L00350">
    <property type="protein sequence ID" value="AAA56833.1"/>
    <property type="status" value="JOINED"/>
    <property type="molecule type" value="Genomic_DNA"/>
</dbReference>
<dbReference type="EMBL" id="L00351">
    <property type="protein sequence ID" value="AAA56833.1"/>
    <property type="status" value="JOINED"/>
    <property type="molecule type" value="Genomic_DNA"/>
</dbReference>
<dbReference type="EMBL" id="L29401">
    <property type="status" value="NOT_ANNOTATED_CDS"/>
    <property type="molecule type" value="Genomic_DNA"/>
</dbReference>
<dbReference type="EMBL" id="AY114155">
    <property type="protein sequence ID" value="AAM56036.1"/>
    <property type="molecule type" value="mRNA"/>
</dbReference>
<dbReference type="EMBL" id="AK295612">
    <property type="protein sequence ID" value="BAG58495.1"/>
    <property type="molecule type" value="mRNA"/>
</dbReference>
<dbReference type="EMBL" id="AK296312">
    <property type="protein sequence ID" value="BAG59010.1"/>
    <property type="molecule type" value="mRNA"/>
</dbReference>
<dbReference type="EMBL" id="AK299038">
    <property type="protein sequence ID" value="BAG61112.1"/>
    <property type="molecule type" value="mRNA"/>
</dbReference>
<dbReference type="EMBL" id="AK300313">
    <property type="protein sequence ID" value="BAG62065.1"/>
    <property type="molecule type" value="mRNA"/>
</dbReference>
<dbReference type="EMBL" id="BT007361">
    <property type="protein sequence ID" value="AAP36025.1"/>
    <property type="molecule type" value="mRNA"/>
</dbReference>
<dbReference type="EMBL" id="AY324609">
    <property type="protein sequence ID" value="AAP72971.1"/>
    <property type="molecule type" value="Genomic_DNA"/>
</dbReference>
<dbReference type="EMBL" id="AB209409">
    <property type="protein sequence ID" value="BAD92646.1"/>
    <property type="status" value="ALT_INIT"/>
    <property type="molecule type" value="mRNA"/>
</dbReference>
<dbReference type="EMBL" id="FJ525879">
    <property type="protein sequence ID" value="ACN81317.1"/>
    <property type="molecule type" value="Genomic_DNA"/>
</dbReference>
<dbReference type="EMBL" id="AC011485">
    <property type="status" value="NOT_ANNOTATED_CDS"/>
    <property type="molecule type" value="Genomic_DNA"/>
</dbReference>
<dbReference type="EMBL" id="CH471106">
    <property type="protein sequence ID" value="EAW84169.1"/>
    <property type="molecule type" value="Genomic_DNA"/>
</dbReference>
<dbReference type="EMBL" id="BC014514">
    <property type="protein sequence ID" value="AAH14514.1"/>
    <property type="molecule type" value="mRNA"/>
</dbReference>
<dbReference type="CCDS" id="CCDS12254.1">
    <molecule id="P01130-1"/>
</dbReference>
<dbReference type="CCDS" id="CCDS56083.1">
    <molecule id="P01130-2"/>
</dbReference>
<dbReference type="CCDS" id="CCDS56084.1">
    <molecule id="P01130-3"/>
</dbReference>
<dbReference type="CCDS" id="CCDS56085.1">
    <molecule id="P01130-4"/>
</dbReference>
<dbReference type="CCDS" id="CCDS58651.1">
    <molecule id="P01130-5"/>
</dbReference>
<dbReference type="PIR" id="A01383">
    <property type="entry name" value="QRHULD"/>
</dbReference>
<dbReference type="RefSeq" id="NP_000518.1">
    <molecule id="P01130-1"/>
    <property type="nucleotide sequence ID" value="NM_000527.5"/>
</dbReference>
<dbReference type="RefSeq" id="NP_001182727.1">
    <molecule id="P01130-5"/>
    <property type="nucleotide sequence ID" value="NM_001195798.2"/>
</dbReference>
<dbReference type="RefSeq" id="NP_001182728.1">
    <molecule id="P01130-4"/>
    <property type="nucleotide sequence ID" value="NM_001195799.2"/>
</dbReference>
<dbReference type="RefSeq" id="NP_001182729.1">
    <molecule id="P01130-3"/>
    <property type="nucleotide sequence ID" value="NM_001195800.2"/>
</dbReference>
<dbReference type="RefSeq" id="NP_001182732.1">
    <molecule id="P01130-2"/>
    <property type="nucleotide sequence ID" value="NM_001195803.2"/>
</dbReference>
<dbReference type="PDB" id="1AJJ">
    <property type="method" value="X-ray"/>
    <property type="resolution" value="1.70 A"/>
    <property type="chains" value="A=196-232"/>
</dbReference>
<dbReference type="PDB" id="1D2J">
    <property type="method" value="NMR"/>
    <property type="chains" value="A=233-272"/>
</dbReference>
<dbReference type="PDB" id="1F5Y">
    <property type="method" value="NMR"/>
    <property type="chains" value="A=22-104"/>
</dbReference>
<dbReference type="PDB" id="1F8Z">
    <property type="method" value="NMR"/>
    <property type="chains" value="A=234-272"/>
</dbReference>
<dbReference type="PDB" id="1HJ7">
    <property type="method" value="NMR"/>
    <property type="chains" value="A=314-393"/>
</dbReference>
<dbReference type="PDB" id="1HZ8">
    <property type="method" value="NMR"/>
    <property type="chains" value="A=314-395"/>
</dbReference>
<dbReference type="PDB" id="1I0U">
    <property type="method" value="NMR"/>
    <property type="chains" value="A=314-395"/>
</dbReference>
<dbReference type="PDB" id="1IJQ">
    <property type="method" value="X-ray"/>
    <property type="resolution" value="1.50 A"/>
    <property type="chains" value="A/B=398-713"/>
</dbReference>
<dbReference type="PDB" id="1LDL">
    <property type="method" value="NMR"/>
    <property type="chains" value="A=20-67"/>
</dbReference>
<dbReference type="PDB" id="1LDR">
    <property type="method" value="NMR"/>
    <property type="chains" value="A=64-104"/>
</dbReference>
<dbReference type="PDB" id="1N7D">
    <property type="method" value="X-ray"/>
    <property type="resolution" value="3.70 A"/>
    <property type="chains" value="A=22-720"/>
</dbReference>
<dbReference type="PDB" id="1XFE">
    <property type="method" value="NMR"/>
    <property type="chains" value="A=272-353"/>
</dbReference>
<dbReference type="PDB" id="2FCW">
    <property type="method" value="X-ray"/>
    <property type="resolution" value="1.26 A"/>
    <property type="chains" value="B=107-186"/>
</dbReference>
<dbReference type="PDB" id="2KRI">
    <property type="method" value="NMR"/>
    <property type="chains" value="B=147-186"/>
</dbReference>
<dbReference type="PDB" id="2LGP">
    <property type="method" value="NMR"/>
    <property type="chains" value="A=144-235"/>
</dbReference>
<dbReference type="PDB" id="2M7P">
    <property type="method" value="NMR"/>
    <property type="chains" value="A=82-104"/>
</dbReference>
<dbReference type="PDB" id="2MG9">
    <property type="method" value="NMR"/>
    <property type="chains" value="A=314-339"/>
</dbReference>
<dbReference type="PDB" id="2W2M">
    <property type="method" value="X-ray"/>
    <property type="resolution" value="2.40 A"/>
    <property type="chains" value="E=314-393"/>
</dbReference>
<dbReference type="PDB" id="2W2N">
    <property type="method" value="X-ray"/>
    <property type="resolution" value="2.30 A"/>
    <property type="chains" value="E=314-393"/>
</dbReference>
<dbReference type="PDB" id="2W2O">
    <property type="method" value="X-ray"/>
    <property type="resolution" value="2.62 A"/>
    <property type="chains" value="E=314-393"/>
</dbReference>
<dbReference type="PDB" id="2W2P">
    <property type="method" value="X-ray"/>
    <property type="resolution" value="2.62 A"/>
    <property type="chains" value="E=314-393"/>
</dbReference>
<dbReference type="PDB" id="2W2Q">
    <property type="method" value="X-ray"/>
    <property type="resolution" value="2.33 A"/>
    <property type="chains" value="E=314-393"/>
</dbReference>
<dbReference type="PDB" id="3BPS">
    <property type="method" value="X-ray"/>
    <property type="resolution" value="2.41 A"/>
    <property type="chains" value="E=314-393"/>
</dbReference>
<dbReference type="PDB" id="3GCW">
    <property type="method" value="X-ray"/>
    <property type="resolution" value="2.70 A"/>
    <property type="chains" value="E=314-393"/>
</dbReference>
<dbReference type="PDB" id="3GCX">
    <property type="method" value="X-ray"/>
    <property type="resolution" value="2.70 A"/>
    <property type="chains" value="E=314-393"/>
</dbReference>
<dbReference type="PDB" id="3M0C">
    <property type="method" value="X-ray"/>
    <property type="resolution" value="7.01 A"/>
    <property type="chains" value="C=4-788"/>
</dbReference>
<dbReference type="PDB" id="3P5B">
    <property type="method" value="X-ray"/>
    <property type="resolution" value="3.30 A"/>
    <property type="chains" value="L=316-715"/>
</dbReference>
<dbReference type="PDB" id="3P5C">
    <property type="method" value="X-ray"/>
    <property type="resolution" value="4.20 A"/>
    <property type="chains" value="L=276-715"/>
</dbReference>
<dbReference type="PDB" id="3SO6">
    <property type="method" value="X-ray"/>
    <property type="resolution" value="1.37 A"/>
    <property type="chains" value="Q=819-832"/>
</dbReference>
<dbReference type="PDB" id="4NE9">
    <property type="method" value="X-ray"/>
    <property type="resolution" value="2.60 A"/>
    <property type="chains" value="D=314-339"/>
</dbReference>
<dbReference type="PDB" id="5OY9">
    <property type="method" value="X-ray"/>
    <property type="resolution" value="3.60 A"/>
    <property type="chains" value="D=108-144"/>
</dbReference>
<dbReference type="PDB" id="5OYL">
    <property type="method" value="X-ray"/>
    <property type="resolution" value="2.25 A"/>
    <property type="chains" value="D=65-106"/>
</dbReference>
<dbReference type="PDB" id="9BD8">
    <property type="method" value="EM"/>
    <property type="resolution" value="4.80 A"/>
    <property type="chains" value="B=1-860"/>
</dbReference>
<dbReference type="PDB" id="9BDE">
    <property type="method" value="EM"/>
    <property type="resolution" value="4.18 A"/>
    <property type="chains" value="R=1-860"/>
</dbReference>
<dbReference type="PDB" id="9BDT">
    <property type="method" value="EM"/>
    <property type="resolution" value="5.40 A"/>
    <property type="chains" value="I/R=1-860"/>
</dbReference>
<dbReference type="PDB" id="9COO">
    <property type="method" value="EM"/>
    <property type="resolution" value="3.73 A"/>
    <property type="chains" value="R=66-860"/>
</dbReference>
<dbReference type="PDBsum" id="1AJJ"/>
<dbReference type="PDBsum" id="1D2J"/>
<dbReference type="PDBsum" id="1F5Y"/>
<dbReference type="PDBsum" id="1F8Z"/>
<dbReference type="PDBsum" id="1HJ7"/>
<dbReference type="PDBsum" id="1HZ8"/>
<dbReference type="PDBsum" id="1I0U"/>
<dbReference type="PDBsum" id="1IJQ"/>
<dbReference type="PDBsum" id="1LDL"/>
<dbReference type="PDBsum" id="1LDR"/>
<dbReference type="PDBsum" id="1N7D"/>
<dbReference type="PDBsum" id="1XFE"/>
<dbReference type="PDBsum" id="2FCW"/>
<dbReference type="PDBsum" id="2KRI"/>
<dbReference type="PDBsum" id="2LGP"/>
<dbReference type="PDBsum" id="2M7P"/>
<dbReference type="PDBsum" id="2MG9"/>
<dbReference type="PDBsum" id="2W2M"/>
<dbReference type="PDBsum" id="2W2N"/>
<dbReference type="PDBsum" id="2W2O"/>
<dbReference type="PDBsum" id="2W2P"/>
<dbReference type="PDBsum" id="2W2Q"/>
<dbReference type="PDBsum" id="3BPS"/>
<dbReference type="PDBsum" id="3GCW"/>
<dbReference type="PDBsum" id="3GCX"/>
<dbReference type="PDBsum" id="3M0C"/>
<dbReference type="PDBsum" id="3P5B"/>
<dbReference type="PDBsum" id="3P5C"/>
<dbReference type="PDBsum" id="3SO6"/>
<dbReference type="PDBsum" id="4NE9"/>
<dbReference type="PDBsum" id="5OY9"/>
<dbReference type="PDBsum" id="5OYL"/>
<dbReference type="PDBsum" id="9BD8"/>
<dbReference type="PDBsum" id="9BDE"/>
<dbReference type="PDBsum" id="9BDT"/>
<dbReference type="PDBsum" id="9COO"/>
<dbReference type="BMRB" id="P01130"/>
<dbReference type="EMDB" id="EMD-44446"/>
<dbReference type="EMDB" id="EMD-44450"/>
<dbReference type="EMDB" id="EMD-44469"/>
<dbReference type="EMDB" id="EMD-45787"/>
<dbReference type="SMR" id="P01130"/>
<dbReference type="BioGRID" id="110141">
    <property type="interactions" value="496"/>
</dbReference>
<dbReference type="ComplexPortal" id="CPX-128">
    <property type="entry name" value="LDLR-PCSK9 complex"/>
</dbReference>
<dbReference type="CORUM" id="P01130"/>
<dbReference type="DIP" id="DIP-29695N"/>
<dbReference type="ELM" id="P01130"/>
<dbReference type="FunCoup" id="P01130">
    <property type="interactions" value="842"/>
</dbReference>
<dbReference type="IntAct" id="P01130">
    <property type="interactions" value="95"/>
</dbReference>
<dbReference type="MINT" id="P01130"/>
<dbReference type="STRING" id="9606.ENSP00000454071"/>
<dbReference type="BindingDB" id="P01130"/>
<dbReference type="ChEMBL" id="CHEMBL3311"/>
<dbReference type="DrugBank" id="DB14003">
    <property type="generic name" value="alpha-Tocopherol acetate"/>
</dbReference>
<dbReference type="DrugBank" id="DB06772">
    <property type="generic name" value="Cabazitaxel"/>
</dbReference>
<dbReference type="DrugBank" id="DB00080">
    <property type="generic name" value="Daptomycin"/>
</dbReference>
<dbReference type="DrugBank" id="DB00707">
    <property type="generic name" value="Porfimer sodium"/>
</dbReference>
<dbReference type="DrugBank" id="DB11251">
    <property type="generic name" value="Tocopherol"/>
</dbReference>
<dbReference type="DrugBank" id="DB09270">
    <property type="generic name" value="Ubidecarenone"/>
</dbReference>
<dbReference type="TCDB" id="9.B.87.1.42">
    <property type="family name" value="the selenoprotein p receptor (selp-receptor) family"/>
</dbReference>
<dbReference type="GlyConnect" id="343">
    <property type="glycosylation" value="10 N-Linked glycans (4 sites), 4 O-Linked glycans"/>
</dbReference>
<dbReference type="GlyCosmos" id="P01130">
    <property type="glycosylation" value="11 sites, 19 glycans"/>
</dbReference>
<dbReference type="GlyGen" id="P01130">
    <property type="glycosylation" value="25 sites, 16 N-linked glycans (5 sites), 10 O-linked glycans (17 sites)"/>
</dbReference>
<dbReference type="iPTMnet" id="P01130"/>
<dbReference type="PhosphoSitePlus" id="P01130"/>
<dbReference type="SwissPalm" id="P01130"/>
<dbReference type="BioMuta" id="LDLR"/>
<dbReference type="DMDM" id="126073"/>
<dbReference type="jPOST" id="P01130"/>
<dbReference type="MassIVE" id="P01130"/>
<dbReference type="PaxDb" id="9606-ENSP00000454071"/>
<dbReference type="PeptideAtlas" id="P01130"/>
<dbReference type="ProteomicsDB" id="40062"/>
<dbReference type="ProteomicsDB" id="40658"/>
<dbReference type="ProteomicsDB" id="51326">
    <molecule id="P01130-1"/>
</dbReference>
<dbReference type="ProteomicsDB" id="51327">
    <molecule id="P01130-2"/>
</dbReference>
<dbReference type="ProteomicsDB" id="51328">
    <molecule id="P01130-3"/>
</dbReference>
<dbReference type="ProteomicsDB" id="51329">
    <molecule id="P01130-4"/>
</dbReference>
<dbReference type="Pumba" id="P01130"/>
<dbReference type="Antibodypedia" id="2424">
    <property type="antibodies" value="962 antibodies from 44 providers"/>
</dbReference>
<dbReference type="DNASU" id="3949"/>
<dbReference type="Ensembl" id="ENST00000455727.6">
    <molecule id="P01130-3"/>
    <property type="protein sequence ID" value="ENSP00000397829.2"/>
    <property type="gene ID" value="ENSG00000130164.16"/>
</dbReference>
<dbReference type="Ensembl" id="ENST00000535915.5">
    <molecule id="P01130-4"/>
    <property type="protein sequence ID" value="ENSP00000440520.1"/>
    <property type="gene ID" value="ENSG00000130164.16"/>
</dbReference>
<dbReference type="Ensembl" id="ENST00000545707.5">
    <molecule id="P01130-2"/>
    <property type="protein sequence ID" value="ENSP00000437639.1"/>
    <property type="gene ID" value="ENSG00000130164.16"/>
</dbReference>
<dbReference type="Ensembl" id="ENST00000558013.5">
    <molecule id="P01130-5"/>
    <property type="protein sequence ID" value="ENSP00000453346.1"/>
    <property type="gene ID" value="ENSG00000130164.16"/>
</dbReference>
<dbReference type="Ensembl" id="ENST00000558518.6">
    <molecule id="P01130-1"/>
    <property type="protein sequence ID" value="ENSP00000454071.1"/>
    <property type="gene ID" value="ENSG00000130164.16"/>
</dbReference>
<dbReference type="GeneID" id="3949"/>
<dbReference type="KEGG" id="hsa:3949"/>
<dbReference type="MANE-Select" id="ENST00000558518.6">
    <property type="protein sequence ID" value="ENSP00000454071.1"/>
    <property type="RefSeq nucleotide sequence ID" value="NM_000527.5"/>
    <property type="RefSeq protein sequence ID" value="NP_000518.1"/>
</dbReference>
<dbReference type="UCSC" id="uc002mqk.5">
    <molecule id="P01130-1"/>
    <property type="organism name" value="human"/>
</dbReference>
<dbReference type="AGR" id="HGNC:6547"/>
<dbReference type="CTD" id="3949"/>
<dbReference type="DisGeNET" id="3949"/>
<dbReference type="GeneCards" id="LDLR"/>
<dbReference type="GeneReviews" id="LDLR"/>
<dbReference type="HGNC" id="HGNC:6547">
    <property type="gene designation" value="LDLR"/>
</dbReference>
<dbReference type="HPA" id="ENSG00000130164">
    <property type="expression patterns" value="Tissue enhanced (adrenal)"/>
</dbReference>
<dbReference type="MalaCards" id="LDLR"/>
<dbReference type="MIM" id="143890">
    <property type="type" value="phenotype"/>
</dbReference>
<dbReference type="MIM" id="606945">
    <property type="type" value="gene"/>
</dbReference>
<dbReference type="neXtProt" id="NX_P01130"/>
<dbReference type="OpenTargets" id="ENSG00000130164"/>
<dbReference type="Orphanet" id="391665">
    <property type="disease" value="Homozygous familial hypercholesterolemia"/>
</dbReference>
<dbReference type="PharmGKB" id="PA227"/>
<dbReference type="VEuPathDB" id="HostDB:ENSG00000130164"/>
<dbReference type="eggNOG" id="KOG1215">
    <property type="taxonomic scope" value="Eukaryota"/>
</dbReference>
<dbReference type="GeneTree" id="ENSGT00940000161046"/>
<dbReference type="HOGENOM" id="CLU_008163_4_0_1"/>
<dbReference type="InParanoid" id="P01130"/>
<dbReference type="OMA" id="KWICDGK"/>
<dbReference type="OrthoDB" id="664115at2759"/>
<dbReference type="PAN-GO" id="P01130">
    <property type="GO annotations" value="6 GO annotations based on evolutionary models"/>
</dbReference>
<dbReference type="PhylomeDB" id="P01130"/>
<dbReference type="TreeFam" id="TF351700"/>
<dbReference type="PathwayCommons" id="P01130"/>
<dbReference type="Reactome" id="R-HSA-8856825">
    <property type="pathway name" value="Cargo recognition for clathrin-mediated endocytosis"/>
</dbReference>
<dbReference type="Reactome" id="R-HSA-8856828">
    <property type="pathway name" value="Clathrin-mediated endocytosis"/>
</dbReference>
<dbReference type="Reactome" id="R-HSA-8964026">
    <property type="pathway name" value="Chylomicron clearance"/>
</dbReference>
<dbReference type="Reactome" id="R-HSA-8964038">
    <property type="pathway name" value="LDL clearance"/>
</dbReference>
<dbReference type="Reactome" id="R-HSA-975634">
    <property type="pathway name" value="Retinoid metabolism and transport"/>
</dbReference>
<dbReference type="SignaLink" id="P01130"/>
<dbReference type="SIGNOR" id="P01130"/>
<dbReference type="BioGRID-ORCS" id="3949">
    <property type="hits" value="65 hits in 1186 CRISPR screens"/>
</dbReference>
<dbReference type="ChiTaRS" id="LDLR">
    <property type="organism name" value="human"/>
</dbReference>
<dbReference type="EvolutionaryTrace" id="P01130"/>
<dbReference type="GeneWiki" id="LDL_receptor"/>
<dbReference type="GenomeRNAi" id="3949"/>
<dbReference type="Pharos" id="P01130">
    <property type="development level" value="Tchem"/>
</dbReference>
<dbReference type="PRO" id="PR:P01130"/>
<dbReference type="Proteomes" id="UP000005640">
    <property type="component" value="Chromosome 19"/>
</dbReference>
<dbReference type="RNAct" id="P01130">
    <property type="molecule type" value="protein"/>
</dbReference>
<dbReference type="Bgee" id="ENSG00000130164">
    <property type="expression patterns" value="Expressed in adrenal tissue and 196 other cell types or tissues"/>
</dbReference>
<dbReference type="ExpressionAtlas" id="P01130">
    <property type="expression patterns" value="baseline and differential"/>
</dbReference>
<dbReference type="GO" id="GO:0045177">
    <property type="term" value="C:apical part of cell"/>
    <property type="evidence" value="ECO:0000250"/>
    <property type="project" value="BHF-UCL"/>
</dbReference>
<dbReference type="GO" id="GO:0016323">
    <property type="term" value="C:basolateral plasma membrane"/>
    <property type="evidence" value="ECO:0000250"/>
    <property type="project" value="BHF-UCL"/>
</dbReference>
<dbReference type="GO" id="GO:0009986">
    <property type="term" value="C:cell surface"/>
    <property type="evidence" value="ECO:0000314"/>
    <property type="project" value="UniProtKB"/>
</dbReference>
<dbReference type="GO" id="GO:0030669">
    <property type="term" value="C:clathrin-coated endocytic vesicle membrane"/>
    <property type="evidence" value="ECO:0000304"/>
    <property type="project" value="Reactome"/>
</dbReference>
<dbReference type="GO" id="GO:0005905">
    <property type="term" value="C:clathrin-coated pit"/>
    <property type="evidence" value="ECO:0000314"/>
    <property type="project" value="BHF-UCL"/>
</dbReference>
<dbReference type="GO" id="GO:0005769">
    <property type="term" value="C:early endosome"/>
    <property type="evidence" value="ECO:0000314"/>
    <property type="project" value="UniProtKB"/>
</dbReference>
<dbReference type="GO" id="GO:0036020">
    <property type="term" value="C:endolysosome membrane"/>
    <property type="evidence" value="ECO:0000304"/>
    <property type="project" value="Reactome"/>
</dbReference>
<dbReference type="GO" id="GO:0010008">
    <property type="term" value="C:endosome membrane"/>
    <property type="evidence" value="ECO:0000304"/>
    <property type="project" value="Reactome"/>
</dbReference>
<dbReference type="GO" id="GO:0009897">
    <property type="term" value="C:external side of plasma membrane"/>
    <property type="evidence" value="ECO:0000314"/>
    <property type="project" value="BHF-UCL"/>
</dbReference>
<dbReference type="GO" id="GO:0005794">
    <property type="term" value="C:Golgi apparatus"/>
    <property type="evidence" value="ECO:0000314"/>
    <property type="project" value="UniProtKB"/>
</dbReference>
<dbReference type="GO" id="GO:0043231">
    <property type="term" value="C:intracellular membrane-bounded organelle"/>
    <property type="evidence" value="ECO:0000314"/>
    <property type="project" value="HPA"/>
</dbReference>
<dbReference type="GO" id="GO:0005770">
    <property type="term" value="C:late endosome"/>
    <property type="evidence" value="ECO:0000314"/>
    <property type="project" value="UniProtKB"/>
</dbReference>
<dbReference type="GO" id="GO:0034362">
    <property type="term" value="C:low-density lipoprotein particle"/>
    <property type="evidence" value="ECO:0007669"/>
    <property type="project" value="UniProtKB-KW"/>
</dbReference>
<dbReference type="GO" id="GO:0005764">
    <property type="term" value="C:lysosome"/>
    <property type="evidence" value="ECO:0000314"/>
    <property type="project" value="UniProtKB"/>
</dbReference>
<dbReference type="GO" id="GO:0016020">
    <property type="term" value="C:membrane"/>
    <property type="evidence" value="ECO:0007005"/>
    <property type="project" value="UniProtKB"/>
</dbReference>
<dbReference type="GO" id="GO:1990666">
    <property type="term" value="C:PCSK9-LDLR complex"/>
    <property type="evidence" value="ECO:0000314"/>
    <property type="project" value="BHF-UCL"/>
</dbReference>
<dbReference type="GO" id="GO:0005886">
    <property type="term" value="C:plasma membrane"/>
    <property type="evidence" value="ECO:0000250"/>
    <property type="project" value="ARUK-UCL"/>
</dbReference>
<dbReference type="GO" id="GO:0043235">
    <property type="term" value="C:receptor complex"/>
    <property type="evidence" value="ECO:0000314"/>
    <property type="project" value="MGI"/>
</dbReference>
<dbReference type="GO" id="GO:0036477">
    <property type="term" value="C:somatodendritic compartment"/>
    <property type="evidence" value="ECO:0007669"/>
    <property type="project" value="Ensembl"/>
</dbReference>
<dbReference type="GO" id="GO:0097443">
    <property type="term" value="C:sorting endosome"/>
    <property type="evidence" value="ECO:0007669"/>
    <property type="project" value="Ensembl"/>
</dbReference>
<dbReference type="GO" id="GO:0001540">
    <property type="term" value="F:amyloid-beta binding"/>
    <property type="evidence" value="ECO:0000250"/>
    <property type="project" value="ARUK-UCL"/>
</dbReference>
<dbReference type="GO" id="GO:0005509">
    <property type="term" value="F:calcium ion binding"/>
    <property type="evidence" value="ECO:0007669"/>
    <property type="project" value="InterPro"/>
</dbReference>
<dbReference type="GO" id="GO:0032050">
    <property type="term" value="F:clathrin heavy chain binding"/>
    <property type="evidence" value="ECO:0000304"/>
    <property type="project" value="BHF-UCL"/>
</dbReference>
<dbReference type="GO" id="GO:0042802">
    <property type="term" value="F:identical protein binding"/>
    <property type="evidence" value="ECO:0000353"/>
    <property type="project" value="IntAct"/>
</dbReference>
<dbReference type="GO" id="GO:0071813">
    <property type="term" value="F:lipoprotein particle binding"/>
    <property type="evidence" value="ECO:0000318"/>
    <property type="project" value="GO_Central"/>
</dbReference>
<dbReference type="GO" id="GO:0030169">
    <property type="term" value="F:low-density lipoprotein particle binding"/>
    <property type="evidence" value="ECO:0000315"/>
    <property type="project" value="BHF-UCL"/>
</dbReference>
<dbReference type="GO" id="GO:0005041">
    <property type="term" value="F:low-density lipoprotein particle receptor activity"/>
    <property type="evidence" value="ECO:0000314"/>
    <property type="project" value="BHF-UCL"/>
</dbReference>
<dbReference type="GO" id="GO:0060090">
    <property type="term" value="F:molecular adaptor activity"/>
    <property type="evidence" value="ECO:0000269"/>
    <property type="project" value="DisProt"/>
</dbReference>
<dbReference type="GO" id="GO:0002020">
    <property type="term" value="F:protease binding"/>
    <property type="evidence" value="ECO:0000353"/>
    <property type="project" value="BHF-UCL"/>
</dbReference>
<dbReference type="GO" id="GO:0030229">
    <property type="term" value="F:very-low-density lipoprotein particle receptor activity"/>
    <property type="evidence" value="ECO:0000314"/>
    <property type="project" value="BHF-UCL"/>
</dbReference>
<dbReference type="GO" id="GO:0001618">
    <property type="term" value="F:virus receptor activity"/>
    <property type="evidence" value="ECO:0007669"/>
    <property type="project" value="UniProtKB-KW"/>
</dbReference>
<dbReference type="GO" id="GO:0097242">
    <property type="term" value="P:amyloid-beta clearance"/>
    <property type="evidence" value="ECO:0000250"/>
    <property type="project" value="ARUK-UCL"/>
</dbReference>
<dbReference type="GO" id="GO:0150094">
    <property type="term" value="P:amyloid-beta clearance by cellular catabolic process"/>
    <property type="evidence" value="ECO:0000250"/>
    <property type="project" value="ARUK-UCL"/>
</dbReference>
<dbReference type="GO" id="GO:0048844">
    <property type="term" value="P:artery morphogenesis"/>
    <property type="evidence" value="ECO:0007669"/>
    <property type="project" value="Ensembl"/>
</dbReference>
<dbReference type="GO" id="GO:0071398">
    <property type="term" value="P:cellular response to fatty acid"/>
    <property type="evidence" value="ECO:0007669"/>
    <property type="project" value="Ensembl"/>
</dbReference>
<dbReference type="GO" id="GO:0071404">
    <property type="term" value="P:cellular response to low-density lipoprotein particle stimulus"/>
    <property type="evidence" value="ECO:0000315"/>
    <property type="project" value="BHF-UCL"/>
</dbReference>
<dbReference type="GO" id="GO:0042632">
    <property type="term" value="P:cholesterol homeostasis"/>
    <property type="evidence" value="ECO:0000315"/>
    <property type="project" value="BHF-UCL"/>
</dbReference>
<dbReference type="GO" id="GO:0070508">
    <property type="term" value="P:cholesterol import"/>
    <property type="evidence" value="ECO:0000315"/>
    <property type="project" value="BHF-UCL"/>
</dbReference>
<dbReference type="GO" id="GO:0008203">
    <property type="term" value="P:cholesterol metabolic process"/>
    <property type="evidence" value="ECO:0007669"/>
    <property type="project" value="UniProtKB-KW"/>
</dbReference>
<dbReference type="GO" id="GO:0030301">
    <property type="term" value="P:cholesterol transport"/>
    <property type="evidence" value="ECO:0000315"/>
    <property type="project" value="HGNC-UCL"/>
</dbReference>
<dbReference type="GO" id="GO:0006897">
    <property type="term" value="P:endocytosis"/>
    <property type="evidence" value="ECO:0000304"/>
    <property type="project" value="ProtInc"/>
</dbReference>
<dbReference type="GO" id="GO:0034384">
    <property type="term" value="P:high-density lipoprotein particle clearance"/>
    <property type="evidence" value="ECO:0007669"/>
    <property type="project" value="Ensembl"/>
</dbReference>
<dbReference type="GO" id="GO:0030299">
    <property type="term" value="P:intestinal cholesterol absorption"/>
    <property type="evidence" value="ECO:0000315"/>
    <property type="project" value="HGNC-UCL"/>
</dbReference>
<dbReference type="GO" id="GO:0006629">
    <property type="term" value="P:lipid metabolic process"/>
    <property type="evidence" value="ECO:0000304"/>
    <property type="project" value="ProtInc"/>
</dbReference>
<dbReference type="GO" id="GO:0042159">
    <property type="term" value="P:lipoprotein catabolic process"/>
    <property type="evidence" value="ECO:0007669"/>
    <property type="project" value="Ensembl"/>
</dbReference>
<dbReference type="GO" id="GO:0007616">
    <property type="term" value="P:long-term memory"/>
    <property type="evidence" value="ECO:0000316"/>
    <property type="project" value="ARUK-UCL"/>
</dbReference>
<dbReference type="GO" id="GO:0034383">
    <property type="term" value="P:low-density lipoprotein particle clearance"/>
    <property type="evidence" value="ECO:0000315"/>
    <property type="project" value="BHF-UCL"/>
</dbReference>
<dbReference type="GO" id="GO:1905907">
    <property type="term" value="P:negative regulation of amyloid fibril formation"/>
    <property type="evidence" value="ECO:0000250"/>
    <property type="project" value="ARUK-UCL"/>
</dbReference>
<dbReference type="GO" id="GO:0061889">
    <property type="term" value="P:negative regulation of astrocyte activation"/>
    <property type="evidence" value="ECO:0000250"/>
    <property type="project" value="ARUK-UCL"/>
</dbReference>
<dbReference type="GO" id="GO:0010629">
    <property type="term" value="P:negative regulation of gene expression"/>
    <property type="evidence" value="ECO:0007669"/>
    <property type="project" value="Ensembl"/>
</dbReference>
<dbReference type="GO" id="GO:0010989">
    <property type="term" value="P:negative regulation of low-density lipoprotein particle clearance"/>
    <property type="evidence" value="ECO:0000314"/>
    <property type="project" value="ComplexPortal"/>
</dbReference>
<dbReference type="GO" id="GO:1903979">
    <property type="term" value="P:negative regulation of microglial cell activation"/>
    <property type="evidence" value="ECO:0000250"/>
    <property type="project" value="ARUK-UCL"/>
</dbReference>
<dbReference type="GO" id="GO:0051248">
    <property type="term" value="P:negative regulation of protein metabolic process"/>
    <property type="evidence" value="ECO:0000250"/>
    <property type="project" value="ARUK-UCL"/>
</dbReference>
<dbReference type="GO" id="GO:0001920">
    <property type="term" value="P:negative regulation of receptor recycling"/>
    <property type="evidence" value="ECO:0000314"/>
    <property type="project" value="ComplexPortal"/>
</dbReference>
<dbReference type="GO" id="GO:0006909">
    <property type="term" value="P:phagocytosis"/>
    <property type="evidence" value="ECO:0000250"/>
    <property type="project" value="ARUK-UCL"/>
</dbReference>
<dbReference type="GO" id="GO:0015914">
    <property type="term" value="P:phospholipid transport"/>
    <property type="evidence" value="ECO:0000250"/>
    <property type="project" value="BHF-UCL"/>
</dbReference>
<dbReference type="GO" id="GO:0034381">
    <property type="term" value="P:plasma lipoprotein particle clearance"/>
    <property type="evidence" value="ECO:0000250"/>
    <property type="project" value="ARUK-UCL"/>
</dbReference>
<dbReference type="GO" id="GO:0010628">
    <property type="term" value="P:positive regulation of gene expression"/>
    <property type="evidence" value="ECO:0007669"/>
    <property type="project" value="Ensembl"/>
</dbReference>
<dbReference type="GO" id="GO:0050729">
    <property type="term" value="P:positive regulation of inflammatory response"/>
    <property type="evidence" value="ECO:0007669"/>
    <property type="project" value="Ensembl"/>
</dbReference>
<dbReference type="GO" id="GO:1905167">
    <property type="term" value="P:positive regulation of lysosomal protein catabolic process"/>
    <property type="evidence" value="ECO:0000250"/>
    <property type="project" value="ARUK-UCL"/>
</dbReference>
<dbReference type="GO" id="GO:0010867">
    <property type="term" value="P:positive regulation of triglyceride biosynthetic process"/>
    <property type="evidence" value="ECO:0000250"/>
    <property type="project" value="BHF-UCL"/>
</dbReference>
<dbReference type="GO" id="GO:0006898">
    <property type="term" value="P:receptor-mediated endocytosis"/>
    <property type="evidence" value="ECO:0000250"/>
    <property type="project" value="ARUK-UCL"/>
</dbReference>
<dbReference type="GO" id="GO:0090118">
    <property type="term" value="P:receptor-mediated endocytosis involved in cholesterol transport"/>
    <property type="evidence" value="ECO:0000315"/>
    <property type="project" value="BHF-UCL"/>
</dbReference>
<dbReference type="GO" id="GO:0090181">
    <property type="term" value="P:regulation of cholesterol metabolic process"/>
    <property type="evidence" value="ECO:0007669"/>
    <property type="project" value="Ensembl"/>
</dbReference>
<dbReference type="GO" id="GO:0010899">
    <property type="term" value="P:regulation of phosphatidylcholine catabolic process"/>
    <property type="evidence" value="ECO:0000250"/>
    <property type="project" value="BHF-UCL"/>
</dbReference>
<dbReference type="GO" id="GO:0051246">
    <property type="term" value="P:regulation of protein metabolic process"/>
    <property type="evidence" value="ECO:0000316"/>
    <property type="project" value="ARUK-UCL"/>
</dbReference>
<dbReference type="GO" id="GO:0061771">
    <property type="term" value="P:response to caloric restriction"/>
    <property type="evidence" value="ECO:0000316"/>
    <property type="project" value="ARUK-UCL"/>
</dbReference>
<dbReference type="GO" id="GO:0001523">
    <property type="term" value="P:retinoid metabolic process"/>
    <property type="evidence" value="ECO:0007669"/>
    <property type="project" value="Ensembl"/>
</dbReference>
<dbReference type="CDD" id="cd00054">
    <property type="entry name" value="EGF_CA"/>
    <property type="match status" value="1"/>
</dbReference>
<dbReference type="CDD" id="cd00112">
    <property type="entry name" value="LDLa"/>
    <property type="match status" value="7"/>
</dbReference>
<dbReference type="DisProt" id="DP01396"/>
<dbReference type="FunFam" id="4.10.400.10:FF:000072">
    <property type="entry name" value="Low density lipoprotein receptor"/>
    <property type="match status" value="1"/>
</dbReference>
<dbReference type="FunFam" id="4.10.400.10:FF:000084">
    <property type="entry name" value="Low density lipoprotein receptor"/>
    <property type="match status" value="1"/>
</dbReference>
<dbReference type="FunFam" id="4.10.400.10:FF:000111">
    <property type="entry name" value="Low density lipoprotein receptor"/>
    <property type="match status" value="1"/>
</dbReference>
<dbReference type="FunFam" id="4.10.400.10:FF:000124">
    <property type="entry name" value="Low density lipoprotein receptor"/>
    <property type="match status" value="1"/>
</dbReference>
<dbReference type="FunFam" id="4.10.400.10:FF:000116">
    <property type="entry name" value="Low-density lipoprotein receptor"/>
    <property type="match status" value="1"/>
</dbReference>
<dbReference type="FunFam" id="2.10.25.10:FF:000009">
    <property type="entry name" value="Low-density lipoprotein receptor isoform 1"/>
    <property type="match status" value="1"/>
</dbReference>
<dbReference type="FunFam" id="2.10.25.10:FF:000052">
    <property type="entry name" value="low-density lipoprotein receptor isoform X1"/>
    <property type="match status" value="1"/>
</dbReference>
<dbReference type="FunFam" id="2.120.10.30:FF:000002">
    <property type="entry name" value="low-density lipoprotein receptor isoform X1"/>
    <property type="match status" value="1"/>
</dbReference>
<dbReference type="FunFam" id="4.10.1220.10:FF:000001">
    <property type="entry name" value="Prolow-density lipoprotein receptor-related protein 1"/>
    <property type="match status" value="1"/>
</dbReference>
<dbReference type="FunFam" id="4.10.400.10:FF:000006">
    <property type="entry name" value="Putative low-density lipoprotein receptor"/>
    <property type="match status" value="1"/>
</dbReference>
<dbReference type="Gene3D" id="4.10.1220.10">
    <property type="entry name" value="EGF-type module"/>
    <property type="match status" value="1"/>
</dbReference>
<dbReference type="Gene3D" id="2.10.25.10">
    <property type="entry name" value="Laminin"/>
    <property type="match status" value="3"/>
</dbReference>
<dbReference type="Gene3D" id="4.10.400.10">
    <property type="entry name" value="Low-density Lipoprotein Receptor"/>
    <property type="match status" value="6"/>
</dbReference>
<dbReference type="Gene3D" id="2.120.10.30">
    <property type="entry name" value="TolB, C-terminal domain"/>
    <property type="match status" value="1"/>
</dbReference>
<dbReference type="IDEAL" id="IID00646"/>
<dbReference type="InterPro" id="IPR011042">
    <property type="entry name" value="6-blade_b-propeller_TolB-like"/>
</dbReference>
<dbReference type="InterPro" id="IPR001881">
    <property type="entry name" value="EGF-like_Ca-bd_dom"/>
</dbReference>
<dbReference type="InterPro" id="IPR000742">
    <property type="entry name" value="EGF-like_dom"/>
</dbReference>
<dbReference type="InterPro" id="IPR000152">
    <property type="entry name" value="EGF-type_Asp/Asn_hydroxyl_site"/>
</dbReference>
<dbReference type="InterPro" id="IPR018097">
    <property type="entry name" value="EGF_Ca-bd_CS"/>
</dbReference>
<dbReference type="InterPro" id="IPR009030">
    <property type="entry name" value="Growth_fac_rcpt_cys_sf"/>
</dbReference>
<dbReference type="InterPro" id="IPR036055">
    <property type="entry name" value="LDL_receptor-like_sf"/>
</dbReference>
<dbReference type="InterPro" id="IPR051221">
    <property type="entry name" value="LDLR-related"/>
</dbReference>
<dbReference type="InterPro" id="IPR023415">
    <property type="entry name" value="LDLR_class-A_CS"/>
</dbReference>
<dbReference type="InterPro" id="IPR000033">
    <property type="entry name" value="LDLR_classB_rpt"/>
</dbReference>
<dbReference type="InterPro" id="IPR002172">
    <property type="entry name" value="LDrepeatLR_classA_rpt"/>
</dbReference>
<dbReference type="InterPro" id="IPR049883">
    <property type="entry name" value="NOTCH1_EGF-like"/>
</dbReference>
<dbReference type="PANTHER" id="PTHR22722:SF15">
    <property type="entry name" value="LOW-DENSITY LIPOPROTEIN RECEPTOR-RELATED"/>
    <property type="match status" value="1"/>
</dbReference>
<dbReference type="PANTHER" id="PTHR22722">
    <property type="entry name" value="LOW-DENSITY LIPOPROTEIN RECEPTOR-RELATED PROTEIN 2-RELATED"/>
    <property type="match status" value="1"/>
</dbReference>
<dbReference type="Pfam" id="PF07645">
    <property type="entry name" value="EGF_CA"/>
    <property type="match status" value="1"/>
</dbReference>
<dbReference type="Pfam" id="PF14670">
    <property type="entry name" value="FXa_inhibition"/>
    <property type="match status" value="2"/>
</dbReference>
<dbReference type="Pfam" id="PF00057">
    <property type="entry name" value="Ldl_recept_a"/>
    <property type="match status" value="7"/>
</dbReference>
<dbReference type="Pfam" id="PF00058">
    <property type="entry name" value="Ldl_recept_b"/>
    <property type="match status" value="5"/>
</dbReference>
<dbReference type="PRINTS" id="PR00261">
    <property type="entry name" value="LDLRECEPTOR"/>
</dbReference>
<dbReference type="SMART" id="SM00181">
    <property type="entry name" value="EGF"/>
    <property type="match status" value="3"/>
</dbReference>
<dbReference type="SMART" id="SM00179">
    <property type="entry name" value="EGF_CA"/>
    <property type="match status" value="2"/>
</dbReference>
<dbReference type="SMART" id="SM00192">
    <property type="entry name" value="LDLa"/>
    <property type="match status" value="7"/>
</dbReference>
<dbReference type="SMART" id="SM00135">
    <property type="entry name" value="LY"/>
    <property type="match status" value="5"/>
</dbReference>
<dbReference type="SUPFAM" id="SSF57184">
    <property type="entry name" value="Growth factor receptor domain"/>
    <property type="match status" value="1"/>
</dbReference>
<dbReference type="SUPFAM" id="SSF57424">
    <property type="entry name" value="LDL receptor-like module"/>
    <property type="match status" value="7"/>
</dbReference>
<dbReference type="SUPFAM" id="SSF63825">
    <property type="entry name" value="YWTD domain"/>
    <property type="match status" value="1"/>
</dbReference>
<dbReference type="PROSITE" id="PS00010">
    <property type="entry name" value="ASX_HYDROXYL"/>
    <property type="match status" value="2"/>
</dbReference>
<dbReference type="PROSITE" id="PS01186">
    <property type="entry name" value="EGF_2"/>
    <property type="match status" value="2"/>
</dbReference>
<dbReference type="PROSITE" id="PS50026">
    <property type="entry name" value="EGF_3"/>
    <property type="match status" value="2"/>
</dbReference>
<dbReference type="PROSITE" id="PS01187">
    <property type="entry name" value="EGF_CA"/>
    <property type="match status" value="1"/>
</dbReference>
<dbReference type="PROSITE" id="PS01209">
    <property type="entry name" value="LDLRA_1"/>
    <property type="match status" value="7"/>
</dbReference>
<dbReference type="PROSITE" id="PS50068">
    <property type="entry name" value="LDLRA_2"/>
    <property type="match status" value="7"/>
</dbReference>
<dbReference type="PROSITE" id="PS51120">
    <property type="entry name" value="LDLRB"/>
    <property type="match status" value="5"/>
</dbReference>
<protein>
    <recommendedName>
        <fullName>Low-density lipoprotein receptor</fullName>
        <shortName>LDL receptor</shortName>
    </recommendedName>
</protein>
<gene>
    <name type="primary">LDLR</name>
</gene>
<proteinExistence type="evidence at protein level"/>
<reference key="1">
    <citation type="journal article" date="1984" name="Cell">
        <title>The human LDL receptor: a cysteine-rich protein with multiple Alu sequences in its mRNA.</title>
        <authorList>
            <person name="Yamamoto T."/>
            <person name="Davis C.G."/>
            <person name="Brown M.S."/>
            <person name="Schneider W.J."/>
            <person name="Casey M.L."/>
            <person name="Goldstein J.L."/>
            <person name="Russell D.W."/>
        </authorList>
    </citation>
    <scope>NUCLEOTIDE SEQUENCE [MRNA] (ISOFORM 1)</scope>
    <scope>SUBCELLULAR LOCATION</scope>
    <scope>FUNCTION</scope>
</reference>
<reference key="2">
    <citation type="journal article" date="1985" name="Science">
        <title>The LDL receptor gene: a mosaic of exons shared with different proteins.</title>
        <authorList>
            <person name="Suedhof T.C."/>
            <person name="Goldstein J.L."/>
            <person name="Brown M.S."/>
            <person name="Russell D.W."/>
        </authorList>
    </citation>
    <scope>NUCLEOTIDE SEQUENCE [GENOMIC DNA]</scope>
</reference>
<reference key="3">
    <citation type="submission" date="2002-05" db="EMBL/GenBank/DDBJ databases">
        <authorList>
            <person name="Jia S."/>
            <person name="Lv L."/>
            <person name="Sun H."/>
            <person name="Wang Q."/>
            <person name="Wang H."/>
            <person name="Zhan L."/>
            <person name="Yang Z."/>
        </authorList>
    </citation>
    <scope>NUCLEOTIDE SEQUENCE [MRNA] (ISOFORM 1)</scope>
    <source>
        <tissue>Liver</tissue>
    </source>
</reference>
<reference key="4">
    <citation type="journal article" date="2004" name="Nat. Genet.">
        <title>Complete sequencing and characterization of 21,243 full-length human cDNAs.</title>
        <authorList>
            <person name="Ota T."/>
            <person name="Suzuki Y."/>
            <person name="Nishikawa T."/>
            <person name="Otsuki T."/>
            <person name="Sugiyama T."/>
            <person name="Irie R."/>
            <person name="Wakamatsu A."/>
            <person name="Hayashi K."/>
            <person name="Sato H."/>
            <person name="Nagai K."/>
            <person name="Kimura K."/>
            <person name="Makita H."/>
            <person name="Sekine M."/>
            <person name="Obayashi M."/>
            <person name="Nishi T."/>
            <person name="Shibahara T."/>
            <person name="Tanaka T."/>
            <person name="Ishii S."/>
            <person name="Yamamoto J."/>
            <person name="Saito K."/>
            <person name="Kawai Y."/>
            <person name="Isono Y."/>
            <person name="Nakamura Y."/>
            <person name="Nagahari K."/>
            <person name="Murakami K."/>
            <person name="Yasuda T."/>
            <person name="Iwayanagi T."/>
            <person name="Wagatsuma M."/>
            <person name="Shiratori A."/>
            <person name="Sudo H."/>
            <person name="Hosoiri T."/>
            <person name="Kaku Y."/>
            <person name="Kodaira H."/>
            <person name="Kondo H."/>
            <person name="Sugawara M."/>
            <person name="Takahashi M."/>
            <person name="Kanda K."/>
            <person name="Yokoi T."/>
            <person name="Furuya T."/>
            <person name="Kikkawa E."/>
            <person name="Omura Y."/>
            <person name="Abe K."/>
            <person name="Kamihara K."/>
            <person name="Katsuta N."/>
            <person name="Sato K."/>
            <person name="Tanikawa M."/>
            <person name="Yamazaki M."/>
            <person name="Ninomiya K."/>
            <person name="Ishibashi T."/>
            <person name="Yamashita H."/>
            <person name="Murakawa K."/>
            <person name="Fujimori K."/>
            <person name="Tanai H."/>
            <person name="Kimata M."/>
            <person name="Watanabe M."/>
            <person name="Hiraoka S."/>
            <person name="Chiba Y."/>
            <person name="Ishida S."/>
            <person name="Ono Y."/>
            <person name="Takiguchi S."/>
            <person name="Watanabe S."/>
            <person name="Yosida M."/>
            <person name="Hotuta T."/>
            <person name="Kusano J."/>
            <person name="Kanehori K."/>
            <person name="Takahashi-Fujii A."/>
            <person name="Hara H."/>
            <person name="Tanase T.-O."/>
            <person name="Nomura Y."/>
            <person name="Togiya S."/>
            <person name="Komai F."/>
            <person name="Hara R."/>
            <person name="Takeuchi K."/>
            <person name="Arita M."/>
            <person name="Imose N."/>
            <person name="Musashino K."/>
            <person name="Yuuki H."/>
            <person name="Oshima A."/>
            <person name="Sasaki N."/>
            <person name="Aotsuka S."/>
            <person name="Yoshikawa Y."/>
            <person name="Matsunawa H."/>
            <person name="Ichihara T."/>
            <person name="Shiohata N."/>
            <person name="Sano S."/>
            <person name="Moriya S."/>
            <person name="Momiyama H."/>
            <person name="Satoh N."/>
            <person name="Takami S."/>
            <person name="Terashima Y."/>
            <person name="Suzuki O."/>
            <person name="Nakagawa S."/>
            <person name="Senoh A."/>
            <person name="Mizoguchi H."/>
            <person name="Goto Y."/>
            <person name="Shimizu F."/>
            <person name="Wakebe H."/>
            <person name="Hishigaki H."/>
            <person name="Watanabe T."/>
            <person name="Sugiyama A."/>
            <person name="Takemoto M."/>
            <person name="Kawakami B."/>
            <person name="Yamazaki M."/>
            <person name="Watanabe K."/>
            <person name="Kumagai A."/>
            <person name="Itakura S."/>
            <person name="Fukuzumi Y."/>
            <person name="Fujimori Y."/>
            <person name="Komiyama M."/>
            <person name="Tashiro H."/>
            <person name="Tanigami A."/>
            <person name="Fujiwara T."/>
            <person name="Ono T."/>
            <person name="Yamada K."/>
            <person name="Fujii Y."/>
            <person name="Ozaki K."/>
            <person name="Hirao M."/>
            <person name="Ohmori Y."/>
            <person name="Kawabata A."/>
            <person name="Hikiji T."/>
            <person name="Kobatake N."/>
            <person name="Inagaki H."/>
            <person name="Ikema Y."/>
            <person name="Okamoto S."/>
            <person name="Okitani R."/>
            <person name="Kawakami T."/>
            <person name="Noguchi S."/>
            <person name="Itoh T."/>
            <person name="Shigeta K."/>
            <person name="Senba T."/>
            <person name="Matsumura K."/>
            <person name="Nakajima Y."/>
            <person name="Mizuno T."/>
            <person name="Morinaga M."/>
            <person name="Sasaki M."/>
            <person name="Togashi T."/>
            <person name="Oyama M."/>
            <person name="Hata H."/>
            <person name="Watanabe M."/>
            <person name="Komatsu T."/>
            <person name="Mizushima-Sugano J."/>
            <person name="Satoh T."/>
            <person name="Shirai Y."/>
            <person name="Takahashi Y."/>
            <person name="Nakagawa K."/>
            <person name="Okumura K."/>
            <person name="Nagase T."/>
            <person name="Nomura N."/>
            <person name="Kikuchi H."/>
            <person name="Masuho Y."/>
            <person name="Yamashita R."/>
            <person name="Nakai K."/>
            <person name="Yada T."/>
            <person name="Nakamura Y."/>
            <person name="Ohara O."/>
            <person name="Isogai T."/>
            <person name="Sugano S."/>
        </authorList>
    </citation>
    <scope>NUCLEOTIDE SEQUENCE [LARGE SCALE MRNA] (ISOFORMS 2; 3; 4 AND 6)</scope>
    <source>
        <tissue>Hippocampus</tissue>
        <tissue>Placenta</tissue>
        <tissue>Thalamus</tissue>
    </source>
</reference>
<reference key="5">
    <citation type="submission" date="2004-10" db="EMBL/GenBank/DDBJ databases">
        <title>Cloning of human full-length CDSs in BD Creator(TM) system donor vector.</title>
        <authorList>
            <person name="Kalnine N."/>
            <person name="Chen X."/>
            <person name="Rolfs A."/>
            <person name="Halleck A."/>
            <person name="Hines L."/>
            <person name="Eisenstein S."/>
            <person name="Koundinya M."/>
            <person name="Raphael J."/>
            <person name="Moreira D."/>
            <person name="Kelley T."/>
            <person name="LaBaer J."/>
            <person name="Lin Y."/>
            <person name="Phelan M."/>
            <person name="Farmer A."/>
        </authorList>
    </citation>
    <scope>NUCLEOTIDE SEQUENCE [LARGE SCALE MRNA] (ISOFORM 1)</scope>
</reference>
<reference key="6">
    <citation type="submission" date="2003-06" db="EMBL/GenBank/DDBJ databases">
        <authorList>
            <person name="Rieder M.J."/>
            <person name="da Ponte S.H."/>
            <person name="Kuldanek S.A."/>
            <person name="Rajkumar N."/>
            <person name="Smith J.D."/>
            <person name="Toth E.J."/>
            <person name="Krauss R.M."/>
            <person name="Nickerson D.A."/>
        </authorList>
    </citation>
    <scope>NUCLEOTIDE SEQUENCE [GENOMIC DNA]</scope>
</reference>
<reference key="7">
    <citation type="submission" date="2005-03" db="EMBL/GenBank/DDBJ databases">
        <title>Homo sapiens protein coding cDNA.</title>
        <authorList>
            <person name="Totoki Y."/>
            <person name="Toyoda A."/>
            <person name="Takeda T."/>
            <person name="Sakaki Y."/>
            <person name="Tanaka A."/>
            <person name="Yokoyama S."/>
            <person name="Ohara O."/>
            <person name="Nagase T."/>
            <person name="Kikuno R.F."/>
        </authorList>
    </citation>
    <scope>NUCLEOTIDE SEQUENCE [LARGE SCALE MRNA] (ISOFORM 5)</scope>
    <source>
        <tissue>Brain</tissue>
    </source>
</reference>
<reference key="8">
    <citation type="submission" date="2008-12" db="EMBL/GenBank/DDBJ databases">
        <authorList>
            <consortium name="NHLBI resequencing and genotyping service (RS&amp;G)"/>
        </authorList>
    </citation>
    <scope>NUCLEOTIDE SEQUENCE [GENOMIC DNA]</scope>
</reference>
<reference key="9">
    <citation type="journal article" date="2004" name="Nature">
        <title>The DNA sequence and biology of human chromosome 19.</title>
        <authorList>
            <person name="Grimwood J."/>
            <person name="Gordon L.A."/>
            <person name="Olsen A.S."/>
            <person name="Terry A."/>
            <person name="Schmutz J."/>
            <person name="Lamerdin J.E."/>
            <person name="Hellsten U."/>
            <person name="Goodstein D."/>
            <person name="Couronne O."/>
            <person name="Tran-Gyamfi M."/>
            <person name="Aerts A."/>
            <person name="Altherr M."/>
            <person name="Ashworth L."/>
            <person name="Bajorek E."/>
            <person name="Black S."/>
            <person name="Branscomb E."/>
            <person name="Caenepeel S."/>
            <person name="Carrano A.V."/>
            <person name="Caoile C."/>
            <person name="Chan Y.M."/>
            <person name="Christensen M."/>
            <person name="Cleland C.A."/>
            <person name="Copeland A."/>
            <person name="Dalin E."/>
            <person name="Dehal P."/>
            <person name="Denys M."/>
            <person name="Detter J.C."/>
            <person name="Escobar J."/>
            <person name="Flowers D."/>
            <person name="Fotopulos D."/>
            <person name="Garcia C."/>
            <person name="Georgescu A.M."/>
            <person name="Glavina T."/>
            <person name="Gomez M."/>
            <person name="Gonzales E."/>
            <person name="Groza M."/>
            <person name="Hammon N."/>
            <person name="Hawkins T."/>
            <person name="Haydu L."/>
            <person name="Ho I."/>
            <person name="Huang W."/>
            <person name="Israni S."/>
            <person name="Jett J."/>
            <person name="Kadner K."/>
            <person name="Kimball H."/>
            <person name="Kobayashi A."/>
            <person name="Larionov V."/>
            <person name="Leem S.-H."/>
            <person name="Lopez F."/>
            <person name="Lou Y."/>
            <person name="Lowry S."/>
            <person name="Malfatti S."/>
            <person name="Martinez D."/>
            <person name="McCready P.M."/>
            <person name="Medina C."/>
            <person name="Morgan J."/>
            <person name="Nelson K."/>
            <person name="Nolan M."/>
            <person name="Ovcharenko I."/>
            <person name="Pitluck S."/>
            <person name="Pollard M."/>
            <person name="Popkie A.P."/>
            <person name="Predki P."/>
            <person name="Quan G."/>
            <person name="Ramirez L."/>
            <person name="Rash S."/>
            <person name="Retterer J."/>
            <person name="Rodriguez A."/>
            <person name="Rogers S."/>
            <person name="Salamov A."/>
            <person name="Salazar A."/>
            <person name="She X."/>
            <person name="Smith D."/>
            <person name="Slezak T."/>
            <person name="Solovyev V."/>
            <person name="Thayer N."/>
            <person name="Tice H."/>
            <person name="Tsai M."/>
            <person name="Ustaszewska A."/>
            <person name="Vo N."/>
            <person name="Wagner M."/>
            <person name="Wheeler J."/>
            <person name="Wu K."/>
            <person name="Xie G."/>
            <person name="Yang J."/>
            <person name="Dubchak I."/>
            <person name="Furey T.S."/>
            <person name="DeJong P."/>
            <person name="Dickson M."/>
            <person name="Gordon D."/>
            <person name="Eichler E.E."/>
            <person name="Pennacchio L.A."/>
            <person name="Richardson P."/>
            <person name="Stubbs L."/>
            <person name="Rokhsar D.S."/>
            <person name="Myers R.M."/>
            <person name="Rubin E.M."/>
            <person name="Lucas S.M."/>
        </authorList>
    </citation>
    <scope>NUCLEOTIDE SEQUENCE [LARGE SCALE GENOMIC DNA]</scope>
</reference>
<reference key="10">
    <citation type="submission" date="2005-07" db="EMBL/GenBank/DDBJ databases">
        <authorList>
            <person name="Mural R.J."/>
            <person name="Istrail S."/>
            <person name="Sutton G.G."/>
            <person name="Florea L."/>
            <person name="Halpern A.L."/>
            <person name="Mobarry C.M."/>
            <person name="Lippert R."/>
            <person name="Walenz B."/>
            <person name="Shatkay H."/>
            <person name="Dew I."/>
            <person name="Miller J.R."/>
            <person name="Flanigan M.J."/>
            <person name="Edwards N.J."/>
            <person name="Bolanos R."/>
            <person name="Fasulo D."/>
            <person name="Halldorsson B.V."/>
            <person name="Hannenhalli S."/>
            <person name="Turner R."/>
            <person name="Yooseph S."/>
            <person name="Lu F."/>
            <person name="Nusskern D.R."/>
            <person name="Shue B.C."/>
            <person name="Zheng X.H."/>
            <person name="Zhong F."/>
            <person name="Delcher A.L."/>
            <person name="Huson D.H."/>
            <person name="Kravitz S.A."/>
            <person name="Mouchard L."/>
            <person name="Reinert K."/>
            <person name="Remington K.A."/>
            <person name="Clark A.G."/>
            <person name="Waterman M.S."/>
            <person name="Eichler E.E."/>
            <person name="Adams M.D."/>
            <person name="Hunkapiller M.W."/>
            <person name="Myers E.W."/>
            <person name="Venter J.C."/>
        </authorList>
    </citation>
    <scope>NUCLEOTIDE SEQUENCE [LARGE SCALE GENOMIC DNA]</scope>
</reference>
<reference key="11">
    <citation type="journal article" date="2004" name="Genome Res.">
        <title>The status, quality, and expansion of the NIH full-length cDNA project: the Mammalian Gene Collection (MGC).</title>
        <authorList>
            <consortium name="The MGC Project Team"/>
        </authorList>
    </citation>
    <scope>NUCLEOTIDE SEQUENCE [LARGE SCALE MRNA] (ISOFORM 1)</scope>
    <source>
        <tissue>Lymph</tissue>
    </source>
</reference>
<reference key="12">
    <citation type="journal article" date="1994" name="Proc. Natl. Acad. Sci. U.S.A.">
        <title>Members of the low density lipoprotein receptor family mediate cell entry of a minor-group common cold virus.</title>
        <authorList>
            <person name="Hofer F."/>
            <person name="Gruenberger M."/>
            <person name="Kowalski H."/>
            <person name="Machat H."/>
            <person name="Huettinger M."/>
            <person name="Kuechler E."/>
            <person name="Blaas D."/>
        </authorList>
    </citation>
    <scope>PROTEIN SEQUENCE OF 186-210; 394-405; 441-449; 472-495; 521-541 AND 605-617</scope>
    <source>
        <tissue>Cervix carcinoma</tissue>
    </source>
</reference>
<reference key="13">
    <citation type="journal article" date="1986" name="J. Biol. Chem.">
        <title>Deletion of clustered O-linked carbohydrates does not impair function of low density lipoprotein receptor in transfected fibroblasts.</title>
        <authorList>
            <person name="Davis C.G."/>
            <person name="Elhammer A."/>
            <person name="Russell D.W."/>
            <person name="Schneider W.J."/>
            <person name="Kornfeld S."/>
            <person name="Brown M.S."/>
            <person name="Goldstein J.L."/>
        </authorList>
    </citation>
    <scope>FUNCTION</scope>
    <scope>GLYCOSYLATION</scope>
</reference>
<reference key="14">
    <citation type="journal article" date="1987" name="J. Biol. Chem.">
        <title>The low density lipoprotein receptor. Identification of amino acids in cytoplasmic domain required for rapid endocytosis.</title>
        <authorList>
            <person name="Davis C.G."/>
            <person name="van Driel I.R."/>
            <person name="Russell D.W."/>
            <person name="Brown M.S."/>
            <person name="Goldstein J.L."/>
        </authorList>
    </citation>
    <scope>MUTAGENESIS OF CYTOPLASMIC DOMAIN</scope>
    <scope>SUBCELLULAR LOCATION</scope>
</reference>
<reference key="15">
    <citation type="journal article" date="1999" name="Proc. Natl. Acad. Sci. U.S.A.">
        <title>Hepatitis C virus and other flaviviridae viruses enter cells via low density lipoprotein receptor.</title>
        <authorList>
            <person name="Agnello V."/>
            <person name="Abel G."/>
            <person name="Elfahal M."/>
            <person name="Knight G.B."/>
            <person name="Zhang Q.X."/>
        </authorList>
    </citation>
    <scope>FUNCTION (MICROBIAL INFECTION) AS RECEPTOR OF HEPATITIS C VIRUS</scope>
</reference>
<reference key="16">
    <citation type="journal article" date="2000" name="Nat. Med.">
        <title>Uptake of HIV-1 tat protein mediated by low-density lipoprotein receptor-related protein disrupts the neuronal metabolic balance of the receptor ligands.</title>
        <authorList>
            <person name="Liu Y."/>
            <person name="Jones M."/>
            <person name="Hingtgen C.M."/>
            <person name="Bu G."/>
            <person name="Laribee N."/>
            <person name="Tanzi R.E."/>
            <person name="Moir R.D."/>
            <person name="Nath A."/>
            <person name="He J.J."/>
        </authorList>
    </citation>
    <scope>FUNCTION (MICROBIAL INFECTION)</scope>
    <scope>INTERACTION WITH HIV-1 TAT</scope>
</reference>
<reference key="17">
    <citation type="journal article" date="2002" name="J. Biol. Chem.">
        <title>ARH is a modular adaptor protein that interacts with the LDL receptor, clathrin, and AP-2.</title>
        <authorList>
            <person name="He G."/>
            <person name="Gupta S."/>
            <person name="Yi M."/>
            <person name="Michaely P."/>
            <person name="Hobbs H.H."/>
            <person name="Cohen J.C."/>
        </authorList>
    </citation>
    <scope>INTERACTION WITH LDLRAP1</scope>
</reference>
<reference key="18">
    <citation type="journal article" date="2003" name="J. Biol. Chem.">
        <title>The adaptor protein beta-arrestin2 enhances endocytosis of the low density lipoprotein receptor.</title>
        <authorList>
            <person name="Wu J.-H."/>
            <person name="Peppel K."/>
            <person name="Nelson C.D."/>
            <person name="Lin F.-T."/>
            <person name="Kohout T.A."/>
            <person name="Miller W.E."/>
            <person name="Exum S.T."/>
            <person name="Freedman N.J."/>
        </authorList>
    </citation>
    <scope>INTERACTION WITH ARRB1</scope>
    <scope>MUTAGENESIS OF TYR-828 AND SER-854</scope>
</reference>
<reference key="19">
    <citation type="journal article" date="2003" name="Nat. Biotechnol.">
        <title>Identification and quantification of N-linked glycoproteins using hydrazide chemistry, stable isotope labeling and mass spectrometry.</title>
        <authorList>
            <person name="Zhang H."/>
            <person name="Li X.-J."/>
            <person name="Martin D.B."/>
            <person name="Aebersold R."/>
        </authorList>
    </citation>
    <scope>GLYCOSYLATION AT ASN-657</scope>
</reference>
<reference key="20">
    <citation type="journal article" date="2003" name="J. Exp. Med.">
        <title>Infectious hepatitis C virus pseudo-particles containing functional E1-E2 envelope protein complexes.</title>
        <authorList>
            <person name="Bartosch B."/>
            <person name="Dubuisson J."/>
            <person name="Cosset F.-L."/>
        </authorList>
    </citation>
    <scope>FUNCTION (MICROBIAL INFECTION) AS RECEPTOR OF HEPATITIS C VIRUS</scope>
</reference>
<reference key="21">
    <citation type="journal article" date="2004" name="J. Biol. Chem.">
        <title>Sorting motifs in the intracellular domain of the low density lipoprotein receptor interact with a novel domain of sorting nexin-17.</title>
        <authorList>
            <person name="Burden J.J."/>
            <person name="Sun X.-M."/>
            <person name="Garcia Garcia A.B."/>
            <person name="Soutar A.K."/>
        </authorList>
    </citation>
    <scope>INTERACTION WITH SNX17</scope>
</reference>
<reference key="22">
    <citation type="journal article" date="2005" name="J. Proteome Res.">
        <title>Human plasma N-glycoproteome analysis by immunoaffinity subtraction, hydrazide chemistry, and mass spectrometry.</title>
        <authorList>
            <person name="Liu T."/>
            <person name="Qian W.-J."/>
            <person name="Gritsenko M.A."/>
            <person name="Camp D.G. II"/>
            <person name="Monroe M.E."/>
            <person name="Moore R.J."/>
            <person name="Smith R.D."/>
        </authorList>
    </citation>
    <scope>GLYCOSYLATION [LARGE SCALE ANALYSIS] AT ASN-657</scope>
    <source>
        <tissue>Plasma</tissue>
    </source>
</reference>
<reference key="23">
    <citation type="journal article" date="2005" name="Nat. Biotechnol.">
        <title>Immunoaffinity profiling of tyrosine phosphorylation in cancer cells.</title>
        <authorList>
            <person name="Rush J."/>
            <person name="Moritz A."/>
            <person name="Lee K.A."/>
            <person name="Guo A."/>
            <person name="Goss V.L."/>
            <person name="Spek E.J."/>
            <person name="Zhang H."/>
            <person name="Zha X.-M."/>
            <person name="Polakiewicz R.D."/>
            <person name="Comb M.J."/>
        </authorList>
    </citation>
    <scope>IDENTIFICATION BY MASS SPECTROMETRY [LARGE SCALE ANALYSIS]</scope>
</reference>
<reference key="24">
    <citation type="journal article" date="2007" name="Traffic">
        <title>The cellular trafficking of the secretory proprotein convertase PCSK9 and its dependence on the LDLR.</title>
        <authorList>
            <person name="Nassoury N."/>
            <person name="Blasiole D.A."/>
            <person name="Tebon Oler A."/>
            <person name="Benjannet S."/>
            <person name="Hamelin J."/>
            <person name="Poupon V."/>
            <person name="McPherson P.S."/>
            <person name="Attie A.D."/>
            <person name="Prat A."/>
            <person name="Seidah N.G."/>
        </authorList>
    </citation>
    <scope>SUBCELLULAR LOCATION</scope>
    <scope>INTERACTION WITH PCSK9</scope>
</reference>
<reference key="25">
    <citation type="journal article" date="2009" name="J. Proteome Res.">
        <title>Glycoproteomics analysis of human liver tissue by combination of multiple enzyme digestion and hydrazide chemistry.</title>
        <authorList>
            <person name="Chen R."/>
            <person name="Jiang X."/>
            <person name="Sun D."/>
            <person name="Han G."/>
            <person name="Wang F."/>
            <person name="Ye M."/>
            <person name="Wang L."/>
            <person name="Zou H."/>
        </authorList>
    </citation>
    <scope>GLYCOSYLATION [LARGE SCALE ANALYSIS] AT ASN-657</scope>
    <source>
        <tissue>Liver</tissue>
    </source>
</reference>
<reference key="26">
    <citation type="journal article" date="2009" name="Science">
        <title>LXR regulates cholesterol uptake through Idol-dependent ubiquitination of the LDL receptor.</title>
        <authorList>
            <person name="Zelcer N."/>
            <person name="Hong C."/>
            <person name="Boyadjian R."/>
            <person name="Tontonoz P."/>
        </authorList>
    </citation>
    <scope>SUBCELLULAR LOCATION</scope>
    <scope>GLYCOSYLATION</scope>
    <scope>CHARACTERIZATION OF VARIANT SAINT OMER ASP-546</scope>
    <scope>MUTAGENESIS OF LYS-811; LYS-816; LYS-830 AND CYS-839</scope>
    <scope>UBIQUITINATION</scope>
    <scope>REGION</scope>
</reference>
<reference key="27">
    <citation type="journal article" date="2011" name="BMC Syst. Biol.">
        <title>Initial characterization of the human central proteome.</title>
        <authorList>
            <person name="Burkard T.R."/>
            <person name="Planyavsky M."/>
            <person name="Kaupe I."/>
            <person name="Breitwieser F.P."/>
            <person name="Buerckstuemmer T."/>
            <person name="Bennett K.L."/>
            <person name="Superti-Furga G."/>
            <person name="Colinge J."/>
        </authorList>
    </citation>
    <scope>IDENTIFICATION BY MASS SPECTROMETRY [LARGE SCALE ANALYSIS]</scope>
</reference>
<reference key="28">
    <citation type="journal article" date="2011" name="J. Biol. Chem.">
        <title>A two-step binding model of PCSK9 interaction with the low density lipoprotein receptor.</title>
        <authorList>
            <person name="Yamamoto T."/>
            <person name="Lu C."/>
            <person name="Ryan R.O."/>
        </authorList>
    </citation>
    <scope>INTERACTION WITH PCSK9</scope>
</reference>
<reference key="29">
    <citation type="journal article" date="2013" name="Proc. Natl. Acad. Sci. U.S.A.">
        <title>LDL receptor and its family members serve as the cellular receptors for vesicular stomatitis virus.</title>
        <authorList>
            <person name="Finkelshtein D."/>
            <person name="Werman A."/>
            <person name="Novick D."/>
            <person name="Barak S."/>
            <person name="Rubinstein M."/>
        </authorList>
    </citation>
    <scope>FUNCTION (MICROBIAL INFECTION)</scope>
    <scope>INTERACTION WITH VESICULAR STOMATITIS VIRUS GLYCOPROTEIN</scope>
</reference>
<reference key="30">
    <citation type="journal article" date="2014" name="J. Proteomics">
        <title>An enzyme assisted RP-RPLC approach for in-depth analysis of human liver phosphoproteome.</title>
        <authorList>
            <person name="Bian Y."/>
            <person name="Song C."/>
            <person name="Cheng K."/>
            <person name="Dong M."/>
            <person name="Wang F."/>
            <person name="Huang J."/>
            <person name="Sun D."/>
            <person name="Wang L."/>
            <person name="Ye M."/>
            <person name="Zou H."/>
        </authorList>
    </citation>
    <scope>IDENTIFICATION BY MASS SPECTROMETRY [LARGE SCALE ANALYSIS]</scope>
    <source>
        <tissue>Liver</tissue>
    </source>
</reference>
<reference key="31">
    <citation type="journal article" date="2015" name="Proteomics">
        <title>N-terminome analysis of the human mitochondrial proteome.</title>
        <authorList>
            <person name="Vaca Jacome A.S."/>
            <person name="Rabilloud T."/>
            <person name="Schaeffer-Reiss C."/>
            <person name="Rompais M."/>
            <person name="Ayoub D."/>
            <person name="Lane L."/>
            <person name="Bairoch A."/>
            <person name="Van Dorsselaer A."/>
            <person name="Carapito C."/>
        </authorList>
    </citation>
    <scope>IDENTIFICATION BY MASS SPECTROMETRY [LARGE SCALE ANALYSIS]</scope>
</reference>
<reference key="32">
    <citation type="journal article" date="2018" name="Sci. Rep.">
        <title>Sigma-2 Receptor/TMEM97 and PGRMC-1 Increase the Rate of Internalization of LDL by LDL Receptor through the Formation of a Ternary Complex.</title>
        <authorList>
            <person name="Riad A."/>
            <person name="Zeng C."/>
            <person name="Weng C.C."/>
            <person name="Winters H."/>
            <person name="Xu K."/>
            <person name="Makvandi M."/>
            <person name="Metz T."/>
            <person name="Carlin S."/>
            <person name="Mach R.H."/>
        </authorList>
    </citation>
    <scope>FUNCTION</scope>
    <scope>SUBCELLULAR LOCATION</scope>
    <scope>INTERACTION WITH PGRMC1 AND TMEM97</scope>
</reference>
<reference key="33">
    <citation type="journal article" date="2019" name="Nat. Microbiol.">
        <title>Sulfated glycosaminoglycans and low-density lipoprotein receptor contribute to Clostridium difficile toxin A entry into cells.</title>
        <authorList>
            <person name="Tao L."/>
            <person name="Tian S."/>
            <person name="Zhang J."/>
            <person name="Liu Z."/>
            <person name="Robinson-McCarthy L."/>
            <person name="Miyashita S.I."/>
            <person name="Breault D.T."/>
            <person name="Gerhard R."/>
            <person name="Oottamasathien S."/>
            <person name="Whelan S.P.J."/>
            <person name="Dong M."/>
        </authorList>
    </citation>
    <scope>INTERACTION WITH C.DIFFICILE TCDA (MICROBIAL INFECTION)</scope>
</reference>
<reference key="34">
    <citation type="journal article" date="2024" name="Cell Res.">
        <title>LDLR is an entry receptor for Crimean-Congo hemorrhagic fever virus.</title>
        <authorList>
            <person name="Xu Z.S."/>
            <person name="Du W.T."/>
            <person name="Wang S.Y."/>
            <person name="Wang M.Y."/>
            <person name="Yang Y.N."/>
            <person name="Li Y.H."/>
            <person name="Li Z.Q."/>
            <person name="Zhao L.X."/>
            <person name="Yang Y."/>
            <person name="Luo W.W."/>
            <person name="Wang Y.Y."/>
        </authorList>
    </citation>
    <scope>FUNCTION (MICROBIAL INFECTION) AS A RECEPTOR OF CRIMEAN-CONGO HEMORRHAGIC FEVER VIRUS (CCHFV)</scope>
    <scope>INTERACTION WITH CRIMEAN-CONGO HEMORRHAGIC FEVER VIRUS (CCHFV) E2-E1 SPIKE GLYCOPROTEINS</scope>
</reference>
<reference key="35">
    <citation type="journal article" date="2024" name="Nat. Commun.">
        <title>LDLR is used as a cell entry receptor by multiple alphaviruses.</title>
        <authorList>
            <person name="Zhai X."/>
            <person name="Li X."/>
            <person name="Veit M."/>
            <person name="Wang N."/>
            <person name="Wang Y."/>
            <person name="Merits A."/>
            <person name="Jiang Z."/>
            <person name="Qin Y."/>
            <person name="Zhang X."/>
            <person name="Qi K."/>
            <person name="Jiao H."/>
            <person name="He W.T."/>
            <person name="Chen Y."/>
            <person name="Mao Y."/>
            <person name="Su S."/>
        </authorList>
    </citation>
    <scope>FUNCTION (MICROBIAL INFECTION) AS RECEPTOR OF GETAH VIRUS (GETV)</scope>
    <scope>ROSS RIVER VIRUS (RRV) AND SEMLIKI FOREST VIRUS (SFV)</scope>
    <scope>MUTAGENESIS OF TRP-165; ASP-168; ASP-175; GLU-208; TRP-214; ASP-217 AND ASP-224</scope>
    <scope>INTERACTION WITH GETAH VIRUS (GETV) GLYCOPROTEIN C</scope>
</reference>
<reference key="36">
    <citation type="journal article" date="1995" name="Proc. Natl. Acad. Sci. U.S.A.">
        <title>Three-dimensional structure of a cysteine-rich repeat from the low-density lipoprotein receptor.</title>
        <authorList>
            <person name="Daly N.L."/>
            <person name="Scanlon M.J."/>
            <person name="Djordjevic J.T."/>
            <person name="Kroon P.A."/>
            <person name="Smith R."/>
        </authorList>
    </citation>
    <scope>STRUCTURE BY NMR OF 20-67</scope>
</reference>
<reference key="37">
    <citation type="journal article" date="1995" name="Biochemistry">
        <title>Three-dimensional structure of the second cysteine-rich repeat from the human low-density lipoprotein receptor.</title>
        <authorList>
            <person name="Daly N.L."/>
            <person name="Djordjevic J.T."/>
            <person name="Kroon P.A."/>
            <person name="Smith R."/>
        </authorList>
    </citation>
    <scope>STRUCTURE BY NMR OF 65-104</scope>
</reference>
<reference key="38">
    <citation type="journal article" date="1997" name="Nature">
        <title>Molecular basis of familial hypercholesterolaemia from structure of LDL receptor module.</title>
        <authorList>
            <person name="Fass D."/>
            <person name="Blacklow S.C."/>
            <person name="Kim P.S."/>
            <person name="Berger J.M."/>
        </authorList>
    </citation>
    <scope>X-RAY CRYSTALLOGRAPHY (1.7 ANGSTROMS) OF 196-232</scope>
</reference>
<reference key="39">
    <citation type="journal article" date="2000" name="Protein Sci.">
        <title>NMR structure of a concatemer of the first and second ligand-binding modules of the human low-density lipoprotein receptor.</title>
        <authorList>
            <person name="Kurniawan N.D."/>
            <person name="Atkins A.R."/>
            <person name="Bieri S."/>
            <person name="Brown C.J."/>
            <person name="Brereton I.M."/>
            <person name="Kroon P.A."/>
            <person name="Smith R."/>
        </authorList>
    </citation>
    <scope>STRUCTURE BY NMR OF 20-104</scope>
    <scope>DISULFIDE BONDS</scope>
</reference>
<reference key="40">
    <citation type="journal article" date="2002" name="Science">
        <title>Structure of the LDL receptor extracellular domain at endosomal pH.</title>
        <authorList>
            <person name="Rudenko G."/>
            <person name="Henry L."/>
            <person name="Henderson K."/>
            <person name="Ichtchenko K."/>
            <person name="Brown M.S."/>
            <person name="Goldstein J.L."/>
            <person name="Deisenhofer J."/>
        </authorList>
    </citation>
    <scope>X-RAY CRYSTALLOGRAPHY (3.7 ANGSTROMS) OF 22-720</scope>
    <scope>DISULFIDE BONDS</scope>
</reference>
<reference key="41">
    <citation type="journal article" date="2012" name="Proc. Natl. Acad. Sci. U.S.A.">
        <title>Atomic structure of the autosomal recessive hypercholesterolemia phosphotyrosine-binding domain in complex with the LDL-receptor tail.</title>
        <authorList>
            <person name="Dvir H."/>
            <person name="Shah M."/>
            <person name="Girardi E."/>
            <person name="Guo L."/>
            <person name="Farquhar M.G."/>
            <person name="Zajonc D.M."/>
        </authorList>
    </citation>
    <scope>X-RAY CRYSTALLOGRAPHY (1.37 ANGSTROMS) OF 819-832 IN COMPLEX WITH LDLRAP1</scope>
    <scope>INTERACTION WITH LDLRAP1</scope>
    <scope>CHARACTERIZATION OF VARIANT FHCL1 CYS-828</scope>
    <scope>MUTAGENESIS OF ILE-821 AND GLN-829</scope>
    <scope>TOPOLOGY</scope>
    <scope>MOTIF</scope>
</reference>
<reference key="42">
    <citation type="journal article" date="1997" name="Nucleic Acids Res.">
        <title>Software and database for the analysis of mutations in the human LDL receptor gene.</title>
        <authorList>
            <person name="Varret M."/>
            <person name="Rabes J.-P."/>
            <person name="Collod-Beroud G."/>
            <person name="Junien J."/>
            <person name="Boileau C."/>
            <person name="Beroud C."/>
        </authorList>
    </citation>
    <scope>REVIEW ON FHCL1 VARIANTS</scope>
</reference>
<reference key="43">
    <citation type="journal article" date="1986" name="Cell">
        <title>The J.D. mutation in familial hypercholesterolemia: amino acid substitution in cytoplasmic domain impedes internalization of LDL receptors.</title>
        <authorList>
            <person name="Davis C.G."/>
            <person name="Lehrman M.A."/>
            <person name="Russell D.W."/>
            <person name="Anderson R.G.W."/>
            <person name="Brown M.S."/>
            <person name="Goldstein J.L."/>
        </authorList>
    </citation>
    <scope>VARIANT FHCL1 CYS-828</scope>
</reference>
<reference key="44">
    <citation type="journal article" date="1988" name="Proc. Natl. Acad. Sci. U.S.A.">
        <title>Deletion in the first cysteine-rich repeat of low density lipoprotein receptor impairs its transport but not lipoprotein binding in fibroblasts from a subject with familial hypercholesterolemia.</title>
        <authorList>
            <person name="Leitersdorf E."/>
            <person name="Hobbs H.H."/>
            <person name="Fourie A.M."/>
            <person name="Jacobs M."/>
            <person name="van der Westhuyzen D.R."/>
            <person name="Coetzee G.A."/>
        </authorList>
    </citation>
    <scope>VARIANT FHCL1 47-ASP-GLY-48 DEL</scope>
</reference>
<reference key="45">
    <citation type="journal article" date="1989" name="J. Clin. Invest.">
        <title>Two common low density lipoprotein receptor gene mutations cause familial hypercholesterolemia in Afrikaners.</title>
        <authorList>
            <person name="Leitersdorf E."/>
            <person name="van der Westhuyzen D.R."/>
            <person name="Coetzee G.A."/>
            <person name="Hobbs H.H."/>
        </authorList>
    </citation>
    <scope>VARIANTS FHCL1 ASN-175; GLU-227 AND MET-429</scope>
</reference>
<reference key="46">
    <citation type="journal article" date="1989" name="Proc. Natl. Acad. Sci. U.S.A.">
        <title>Identification of a point mutation in growth factor repeat C of the low density lipoprotein-receptor gene in a patient with homozygous familial hypercholesterolemia that affects ligand binding and intracellular movement of receptors.</title>
        <authorList>
            <person name="Soutar A.K."/>
            <person name="Knight B.L."/>
            <person name="Patel D.D."/>
        </authorList>
    </citation>
    <scope>VARIANT FHCL1 LEU-685</scope>
</reference>
<reference key="47">
    <citation type="journal article" date="1990" name="J. Clin. Invest.">
        <title>Common low-density lipoprotein receptor mutations in the French Canadian population.</title>
        <authorList>
            <person name="Leitersdorf E."/>
            <person name="Tobin E.J."/>
            <person name="Davignon J."/>
            <person name="Hobbs H.H."/>
        </authorList>
    </citation>
    <scope>VARIANTS FHCL1 GLY-87; LYS-228 AND TYR-667</scope>
</reference>
<reference key="48">
    <citation type="journal article" date="1991" name="Am. J. Hum. Genet.">
        <title>A common Lithuanian mutation causing familial hypercholesterolemia in Ashkenazi Jews.</title>
        <authorList>
            <person name="Meiner V."/>
            <person name="Landsberger D."/>
            <person name="Berkman N."/>
            <person name="Reshef A."/>
            <person name="Segal P."/>
            <person name="Seftel H.C."/>
            <person name="van der Westhuyzen D.R."/>
            <person name="Jeenah M.S."/>
            <person name="Coetzee G.A."/>
            <person name="Leitersdorf E."/>
        </authorList>
    </citation>
    <scope>VARIANT FHCL1 GLY-218 DEL</scope>
</reference>
<reference key="49">
    <citation type="journal article" date="1992" name="Eur. J. Biochem.">
        <title>A point mutation of low-density-lipoprotein receptor causing rapid degradation of the receptor.</title>
        <authorList>
            <person name="Miyake Y."/>
            <person name="Tajima S."/>
            <person name="Funahashi T."/>
            <person name="Yamamura T."/>
            <person name="Yamamoto A."/>
        </authorList>
    </citation>
    <scope>VARIANT FHCL1 HIS-433</scope>
</reference>
<reference key="50">
    <citation type="journal article" date="1992" name="Hum. Mutat.">
        <title>Molecular genetics of the LDL receptor gene in familial hypercholesterolemia.</title>
        <authorList>
            <person name="Hobbs H.H."/>
            <person name="Brown M.S."/>
            <person name="Goldstein J.L."/>
        </authorList>
    </citation>
    <scope>VARIANTS FHCL1 TYR-52; ARG-109; GLY-155; ARG-173; PHE-197; TYR-197; ASN-224; GLY-224; PRO-226; LYS-240; PHE-248; GLY-256; GLU-266; TYR-270; ARG-286; ASN-304; GLU-304; TYR-318; SER-335; GLU-342; SER-343; TYR-352; VAL-354; GLY-354; LYS-357; ARG-364; ARG-379; ASN-441; MET-441; CYS-443; ARG-478; ARG-485; VAL-565; SER-599; PRO-682; PHE-792 AND ILE-827</scope>
</reference>
<reference key="51">
    <citation type="journal article" date="1992" name="J. Lipid Res.">
        <title>Identification and properties of the proline664-leucine mutant LDL receptor in South Africans of Indian origin.</title>
        <authorList>
            <person name="Rubinsztein D.C."/>
            <person name="Coetzee G.A."/>
            <person name="Marais A.D."/>
            <person name="Leitersdorf E."/>
            <person name="Seftel H.C."/>
            <person name="van der Westhuyzen D.R."/>
        </authorList>
    </citation>
    <scope>VARIANT FHCL1 LEU-685</scope>
</reference>
<reference key="52">
    <citation type="journal article" date="1993" name="Biochim. Biophys. Acta">
        <title>Identification of two new LDL-receptor mutations causing homozygous familial hypercholesterolemia in a South African of Indian origin.</title>
        <authorList>
            <person name="Rubinsztein D.C."/>
            <person name="Jialal I."/>
            <person name="Leitersdorf E."/>
            <person name="Coetzee G.A."/>
            <person name="van der Westhuyzen D.R."/>
        </authorList>
    </citation>
    <scope>VARIANTS FHCL1 TYR-90 AND LYS-140</scope>
</reference>
<reference key="53">
    <citation type="journal article" date="1993" name="Hum. Genet.">
        <title>A missense mutation in the low density lipoprotein receptor gene causes familial hypercholesterolemia in Sephardic Jews.</title>
        <authorList>
            <person name="Leitersdorf E."/>
            <person name="Reshef A."/>
            <person name="Meiner V."/>
            <person name="Dann E.J."/>
            <person name="Beigel Y."/>
            <person name="van Roggen F.G."/>
            <person name="van der Westhuyzen D.R."/>
            <person name="Coetzee G.A."/>
        </authorList>
    </citation>
    <scope>VARIANT FHCL1 HIS-168</scope>
</reference>
<reference key="54">
    <citation type="journal article" date="1994" name="Hum. Genet.">
        <title>A new missense mutation (Cys297--&gt;Phe) of the low density lipoprotein receptor in Italian patients with familial hypercholesterolemia (FHTrieste).</title>
        <authorList>
            <person name="Lelli N."/>
            <person name="Garuti R."/>
            <person name="Pedrazzi P."/>
            <person name="Ghisellini M."/>
            <person name="Simone M.L."/>
            <person name="Tiozzo R."/>
            <person name="Cattin L."/>
            <person name="Valenti M."/>
            <person name="Rolleri M."/>
            <person name="Bertolini S."/>
            <person name="Stefanutti C."/>
            <person name="Calandra S."/>
        </authorList>
    </citation>
    <scope>VARIANT FHCL1 PHE-318</scope>
</reference>
<reference key="55">
    <citation type="journal article" date="1995" name="Am. J. Hum. Genet.">
        <title>Molecular characterization of minor gene rearrangements in Finnish patients with heterozygous familial hypercholesterolemia: identification of two common missense mutations (Gly823--&gt;Asp and Leu380--&gt;His) and eight rare mutations of the LDL receptor gene.</title>
        <authorList>
            <person name="Koivisto U.-M."/>
            <person name="Viikari J.S."/>
            <person name="Kontula K."/>
        </authorList>
    </citation>
    <scope>VARIANTS FHCL1 HIS-401 AND ASP-844</scope>
</reference>
<reference key="56">
    <citation type="journal article" date="1995" name="Arterioscler. Thromb. Vasc. Biol.">
        <title>Common mutations in the low-density-lipoprotein-receptor gene causing familial hypercholesterolemia in the Japanese population.</title>
        <authorList>
            <person name="Maruyama T."/>
            <person name="Miyake Y."/>
            <person name="Tajima S."/>
            <person name="Harada-Shiba M."/>
            <person name="Yamamura T."/>
            <person name="Tsushima M."/>
            <person name="Kishino B."/>
            <person name="Horiguchi Y."/>
            <person name="Funahashi T."/>
            <person name="Matsuzawa Y."/>
            <person name="Yamamoto A."/>
        </authorList>
    </citation>
    <scope>VARIANTS FHCL1 LYS-140; SER-338 AND LEU-685</scope>
</reference>
<reference key="57">
    <citation type="journal article" date="1995" name="Hum. Mutat.">
        <title>Identification of a mutation, N543H, in exon 11 of the low-density lipoprotein receptor gene in a French family with familial hypercholesterolemia.</title>
        <authorList>
            <person name="Tricot-Guerber F."/>
            <person name="Saint-Jore B."/>
            <person name="Valenti K."/>
            <person name="Foulon T."/>
            <person name="Bost M."/>
            <person name="Hadjian A.J."/>
        </authorList>
    </citation>
    <scope>VARIANT FHCL1 FRENCH HIS-564</scope>
</reference>
<reference key="58">
    <citation type="journal article" date="1995" name="Hum. Genet.">
        <title>An efficient screening procedure detecting six novel mutations in the LDL receptor gene in Swedish children with hypercholesterolemia.</title>
        <authorList>
            <person name="Ekstroem U."/>
            <person name="Abrahamson M."/>
            <person name="Sveger T."/>
            <person name="Lombardi P."/>
            <person name="Nilsson-Ehle P."/>
        </authorList>
    </citation>
    <scope>VARIANTS FHCL1 LYS-277; THR-423 AND ASN-579</scope>
</reference>
<reference key="59">
    <citation type="journal article" date="1995" name="Hum. Genet.">
        <title>Two novel point mutations in the EGF precursor homology domain of the LDL receptor gene causing familial hypercholesterolemia.</title>
        <authorList>
            <person name="Leren T.P."/>
            <person name="Solberg K."/>
            <person name="Rodningen O.K."/>
            <person name="Tonstad S."/>
            <person name="Ose L."/>
        </authorList>
    </citation>
    <scope>VARIANT FHCL1 NORWEGIAN ASN-487 DEL</scope>
</reference>
<reference key="60">
    <citation type="journal article" date="1995" name="Hum. Genet.">
        <title>Screening for mutations in exon 4 of the LDL receptor gene in a German population with severe hypercholesterolemia.</title>
        <authorList>
            <person name="Geisel J."/>
            <person name="Holzem G."/>
            <person name="Oette K."/>
        </authorList>
    </citation>
    <scope>VARIANTS FHCL1 COLOGNE GLY-221; TYR-221 AND VAL-224</scope>
</reference>
<reference key="61">
    <citation type="journal article" date="1995" name="Hum. Genet.">
        <title>Recurrent and novel LDL receptor gene mutations causing heterozygous familial hypercholesterolemia in La Habana.</title>
        <authorList>
            <person name="Pereira E."/>
            <person name="Ferreira R."/>
            <person name="Hermelin B."/>
            <person name="Thomas G."/>
            <person name="Bernard C."/>
            <person name="Bertrand V."/>
            <person name="Nassiff H."/>
            <person name="Mendez del Castillo D."/>
            <person name="Bereziat G."/>
            <person name="Benlian P."/>
        </authorList>
    </citation>
    <scope>VARIANTS FHCL1 LA HABANA LYS-277; MET-429 AND MET-797</scope>
</reference>
<reference key="62">
    <citation type="journal article" date="1996" name="Clin. Genet.">
        <title>Two novel missense mutations in the LDL receptor gene causing familial hypercholesterolemia.</title>
        <authorList>
            <person name="Gundersen K.E."/>
            <person name="Solberg K."/>
            <person name="Rodningen O.K."/>
            <person name="Tonstad S."/>
            <person name="Ose L."/>
            <person name="Berg K."/>
            <person name="Leren T.P."/>
        </authorList>
    </citation>
    <scope>VARIANTS FHCL1 TYR-168 AND ARG-366</scope>
</reference>
<reference key="63">
    <citation type="journal article" date="1996" name="Hum. Mutat.">
        <title>A common missense mutation (C210G) in the LDL receptor gene among Norwegian familial hypercholesterolemia subjects.</title>
        <authorList>
            <person name="Sundvold H."/>
            <person name="Solberg K."/>
            <person name="Tonstad S."/>
            <person name="Rodningen O.K."/>
            <person name="Ose L."/>
            <person name="Berg K."/>
            <person name="Leren T.P."/>
        </authorList>
    </citation>
    <scope>VARIANT FHCL1 GLY-231</scope>
</reference>
<reference key="64">
    <citation type="journal article" date="1996" name="J. Lipid Res.">
        <title>Characterization of mutations in the low density lipoprotein (LDL)-receptor gene in patients with homozygous familial hypercholesterolemia, and frequency of these mutations in FH patients in the United Kingdom.</title>
        <authorList>
            <person name="Webb J.C."/>
            <person name="Sun X.-M."/>
            <person name="McCarthy S.N."/>
            <person name="Neuwirth C."/>
            <person name="Thompson G.R."/>
            <person name="Knigh B."/>
            <person name="Soutar A.K."/>
        </authorList>
    </citation>
    <scope>VARIANTS FHCL1 ARG-197; TYR-248; ALA-301; TRP-302 AND PRO-350</scope>
</reference>
<reference key="65">
    <citation type="journal article" date="1997" name="Hum. Genet.">
        <title>Mutational and genetic origin of LDL receptor gene mutations detected in both Belgian and Dutch familial hypercholesterolemics.</title>
        <authorList>
            <person name="Peeters A.V."/>
            <person name="van Gaal L.F."/>
            <person name="du Plessis L."/>
            <person name="Lombardi M.P.R."/>
            <person name="Havekes L.M."/>
            <person name="Kotze M.J."/>
        </authorList>
    </citation>
    <scope>VARIANT FHCL1 LEU-685</scope>
</reference>
<reference key="66">
    <citation type="journal article" date="1997" name="Hum. Mutat.">
        <title>Two mutations in the same low-density lipoprotein receptor allele act in synergy to reduce receptor function in heterozygous familial hypercholesterolemia.</title>
        <authorList>
            <person name="Jensen H.K."/>
            <person name="Jensen T.G."/>
            <person name="Faergeman O."/>
            <person name="Jensen L.G."/>
            <person name="Andresen B.S."/>
            <person name="Corydon M.J."/>
            <person name="Andreasen P.H."/>
            <person name="Hansen P.S."/>
            <person name="Heath F."/>
            <person name="Bolund L."/>
            <person name="Gregersen N."/>
        </authorList>
    </citation>
    <scope>VARIANTS FHCL1 HIS-564 AND 799-LEU--PHE-801 DEL</scope>
</reference>
<reference key="67">
    <citation type="journal article" date="1997" name="Hum. Mutat.">
        <title>Spectrum of LDL receptor gene mutations in heterozygous familial hypercholesterolemia.</title>
        <authorList>
            <person name="Day I.N.M."/>
            <person name="Whittall R.A."/>
            <person name="O'Dell S.D."/>
            <person name="Haddad L."/>
            <person name="Bolla M.K."/>
            <person name="Gudnason V."/>
            <person name="Humphries S.E."/>
        </authorList>
    </citation>
    <scope>VARIANTS FHCL1 TRP-27; CYS-78; GLY-87; TYR-89; ASN-90; GLY-90; LYS-101; TYR-160; ASN-168; LEU-177; GLY-221; GLU-227; ARG-286; TYR-313; TYR-327; ASN-342; PRO-350; ASP-399; TRP-416; HIS-482; ARG-483; SER-526; ASP-549; CYS-633; LEU-649 AND ILE-726</scope>
</reference>
<reference key="68">
    <citation type="journal article" date="1997" name="J. Intern. Med.">
        <title>Molecular genetics of familial hypercholesterolaemia in Norway.</title>
        <authorList>
            <person name="Leren T.P."/>
            <person name="Tonstad S."/>
            <person name="Gundersen K.E."/>
            <person name="Bakken K.S."/>
            <person name="Rodningen O.K."/>
            <person name="Sundvold H."/>
            <person name="Ose L."/>
            <person name="Berg K."/>
        </authorList>
    </citation>
    <scope>VARIANTS FHCL1 PRO-56; TYR-175; TYR-356; VAL-401 AND TRP-416</scope>
</reference>
<reference key="69">
    <citation type="journal article" date="1998" name="Hum. Genet.">
        <title>LDL-R and Apo-B-100 gene mutations in Polish familial hypercholesterolemias.</title>
        <authorList>
            <person name="Gorski B."/>
            <person name="Kubalska J."/>
            <person name="Naruszewicz M."/>
            <person name="Lubinski J."/>
        </authorList>
    </citation>
    <scope>VARIANTS FHCL1 LEU-177; GLY-218 DEL; SER-564 AND GLU-592</scope>
</reference>
<reference key="70">
    <citation type="journal article" date="1998" name="Hum. Mutat. Suppl.">
        <title>Identification of three mutations in the low-density lipoprotein receptor gene causing familial hypercholesterolemia among French Canadians.</title>
        <authorList>
            <person name="Couture P."/>
            <person name="Vohl M.-C."/>
            <person name="Gagne C."/>
            <person name="Gaudet D."/>
            <person name="Torres A.L."/>
            <person name="Lupien P.J."/>
            <person name="Despres J.-P."/>
            <person name="Labrie F."/>
            <person name="Simard J."/>
            <person name="Moorjani S."/>
        </authorList>
    </citation>
    <scope>VARIANTS FHCL1 TRP-173 AND ARG-368</scope>
</reference>
<reference key="71">
    <citation type="journal article" date="1998" name="Hum. Mutat. Suppl.">
        <title>Two novel and two known low-density lipoprotein receptor gene mutations in German patients with familial hypercholesterolemia.</title>
        <authorList>
            <person name="Thiart R."/>
            <person name="Loubser O."/>
            <person name="de Villiers J.N.P."/>
            <person name="Marx M.P."/>
            <person name="Zaire R."/>
            <person name="Raal F.J."/>
            <person name="Kotze M.J."/>
        </authorList>
    </citation>
    <scope>VARIANTS FHCL1 GLN-416 AND MET-429</scope>
</reference>
<reference key="72">
    <citation type="journal article" date="1998" name="Hum. Mutat. Suppl.">
        <title>Possible common mutations in the low density lipoprotein receptor gene in Chinese.</title>
        <authorList>
            <person name="Mak Y.T."/>
            <person name="Zhang J."/>
            <person name="Chan Y.S."/>
            <person name="Mak T.W.L."/>
            <person name="Tomlinson B."/>
            <person name="Masarei J.R.L."/>
            <person name="Pang C.P."/>
        </authorList>
    </citation>
    <scope>VARIANTS FHCL1 TYR-329; ARG-414 AND MET-429</scope>
</reference>
<reference key="73">
    <citation type="journal article" date="1998" name="Hum. Mutat.">
        <title>Identification of recurrent and novel mutations in the LDL receptor gene in Spanish patients with familial hypercholesterolemia.</title>
        <authorList>
            <person name="Cenarro A."/>
            <person name="Jensen H.K."/>
            <person name="Casao E."/>
            <person name="Civeira F."/>
            <person name="Gonzalez-Bonillo J."/>
            <person name="Rodriguez-Rey J.C."/>
            <person name="Gregersen N."/>
            <person name="Pocovi M."/>
        </authorList>
    </citation>
    <scope>VARIANTS FHCL1 GLU-92; GLY-95; ARG-116; LEU-177; GLY-221; TYR-221; LYS-277; TYR-302; LYS-434; TYR-667 AND GLU-700</scope>
</reference>
<reference key="74">
    <citation type="journal article" date="1998" name="Hum. Mutat.">
        <title>Two novel mutations consisting in minor gene rearrangements in the human low density lipoprotein receptor gene in Italian patients affected by familial hypercholesterolemia.</title>
        <authorList>
            <person name="Motti C."/>
            <person name="Bertolini S."/>
            <person name="Rampa P."/>
            <person name="Trovatello G."/>
            <person name="Liberatoscioli L."/>
            <person name="Calandra S."/>
            <person name="Federici G."/>
            <person name="Cortese C."/>
        </authorList>
    </citation>
    <scope>VARIANT FHCL1 CHIETI-3 GLU-228 DELINS CYS-LYS</scope>
</reference>
<reference key="75">
    <citation type="journal article" date="1998" name="Hum. Mutat.">
        <title>A novel single amino acid substitution in exon 6 of the low-density lipoprotein receptor gene in a Syrian family.</title>
        <authorList>
            <person name="Vergopoulos A."/>
            <person name="Bajari T."/>
            <person name="Jouma M."/>
            <person name="Aydin A."/>
            <person name="Boehring S."/>
            <person name="Luft F.C."/>
            <person name="Schuster H."/>
        </authorList>
    </citation>
    <scope>VARIANT FHCL1 TYR-276</scope>
</reference>
<reference key="76">
    <citation type="journal article" date="1998" name="J. Hum. Genet.">
        <title>Five familial hypercholesterolemic kindreds in Japan with novel mutations of the LDL receptor gene.</title>
        <authorList>
            <person name="Hirayama T."/>
            <person name="Yamaki E."/>
            <person name="Hata A."/>
            <person name="Tsuji M."/>
            <person name="Hashimoto K."/>
            <person name="Yamamoto M."/>
            <person name="Emi M."/>
        </authorList>
    </citation>
    <scope>VARIANTS FHCL1 TYR-379 AND SER-608</scope>
</reference>
<reference key="77">
    <citation type="journal article" date="1998" name="J. Med. Genet.">
        <title>Identification of a common low density lipoprotein receptor mutation (C163Y) in the west of Scotland.</title>
        <authorList>
            <person name="Lee W.K."/>
            <person name="Haddad L."/>
            <person name="Macleod M.J."/>
            <person name="Dorrance A.M."/>
            <person name="Wilson D.J."/>
            <person name="Gaffney D."/>
            <person name="Dominiczak M.H."/>
            <person name="Packard C.J."/>
            <person name="Day I.N."/>
            <person name="Humphries S.E."/>
            <person name="Dominiczak A.F."/>
        </authorList>
    </citation>
    <scope>VARIANT FHCL1 GLASCO TYR-184</scope>
</reference>
<reference key="78">
    <citation type="journal article" date="1999" name="Atherosclerosis">
        <title>Spectrum of LDL receptor gene mutations in Denmark: implications for molecular diagnostic strategy in heterozygous familial hypercholesterolemia.</title>
        <authorList>
            <person name="Jensen H.K."/>
            <person name="Jensen L.G."/>
            <person name="Meinertz H."/>
            <person name="Hansen P.S."/>
            <person name="Gregersen N."/>
            <person name="Faergeman O."/>
        </authorList>
    </citation>
    <scope>VARIANTS FHCL1 GLY-87; LYS-140; ASN-172; ARG-243; LEU-306; PRO-404; HIS-564; SER-577; ASN-579; ILE-726 AND LYS-825</scope>
</reference>
<reference key="79">
    <citation type="journal article" date="1999" name="Clin. Genet.">
        <title>An individual with a healthy phenotype in spite of a pathogenic LDL receptor mutation (C240F).</title>
        <authorList>
            <person name="Ekstroem U."/>
            <person name="Abrahamson M."/>
            <person name="Floren C.-H."/>
            <person name="Tollig H."/>
            <person name="Wettrell G."/>
            <person name="Nilsson G."/>
            <person name="Sun X.-M."/>
            <person name="Soutar A.K."/>
            <person name="Nilsson-Ehle P."/>
        </authorList>
    </citation>
    <scope>VARIANT FHCL1 PHE-261</scope>
</reference>
<reference key="80">
    <citation type="journal article" date="1999" name="Hum. Mutat.">
        <title>Mutation analysis in 46 German families with familial hypercholesterolemia: identification of 8 new mutations.</title>
        <authorList>
            <person name="Ebhardt M."/>
            <person name="Schmidt H."/>
            <person name="Doerk T."/>
            <person name="Tietge U."/>
            <person name="Haas R."/>
            <person name="Manns M.-P."/>
            <person name="Schmidtke J."/>
            <person name="Stuhrmann M."/>
        </authorList>
    </citation>
    <scope>VARIANTS FHCL1 SER-50; ASN-221; LYS-288; VAL-432 AND HIS-564</scope>
</reference>
<reference key="81">
    <citation type="journal article" date="1999" name="Hum. Mutat.">
        <title>Identification of recurrent and novel mutations in the LDL receptor gene in Japanese familial hypercholesterolemia.</title>
        <authorList>
            <person name="Hattori H."/>
            <person name="Nagano M."/>
            <person name="Iwata F."/>
            <person name="Homma Y."/>
            <person name="Egashira T."/>
            <person name="Okada T."/>
        </authorList>
    </citation>
    <scope>VARIANTS FHCL1 SER-338; LEU-403; THR-431; VAL-568 AND LYS-714</scope>
</reference>
<reference key="82">
    <citation type="journal article" date="1999" name="Nat. Genet.">
        <title>Characterization of single-nucleotide polymorphisms in coding regions of human genes.</title>
        <authorList>
            <person name="Cargill M."/>
            <person name="Altshuler D."/>
            <person name="Ireland J."/>
            <person name="Sklar P."/>
            <person name="Ardlie K."/>
            <person name="Patil N."/>
            <person name="Shaw N."/>
            <person name="Lane C.R."/>
            <person name="Lim E.P."/>
            <person name="Kalyanaraman N."/>
            <person name="Nemesh J."/>
            <person name="Ziaugra L."/>
            <person name="Friedland L."/>
            <person name="Rolfe A."/>
            <person name="Warrington J."/>
            <person name="Lipshutz R."/>
            <person name="Daley G.Q."/>
            <person name="Lander E.S."/>
        </authorList>
    </citation>
    <scope>VARIANTS ARG-2; ILE-468 AND GLN-814</scope>
</reference>
<reference key="83">
    <citation type="journal article" date="1999" name="Nat. Genet.">
        <authorList>
            <person name="Cargill M."/>
            <person name="Altshuler D."/>
            <person name="Ireland J."/>
            <person name="Sklar P."/>
            <person name="Ardlie K."/>
            <person name="Patil N."/>
            <person name="Shaw N."/>
            <person name="Lane C.R."/>
            <person name="Lim E.P."/>
            <person name="Kalyanaraman N."/>
            <person name="Nemesh J."/>
            <person name="Ziaugra L."/>
            <person name="Friedland L."/>
            <person name="Rolfe A."/>
            <person name="Warrington J."/>
            <person name="Lipshutz R."/>
            <person name="Daley G.Q."/>
            <person name="Lander E.S."/>
        </authorList>
    </citation>
    <scope>ERRATUM OF PUBMED:10391209</scope>
</reference>
<reference key="84">
    <citation type="journal article" date="2000" name="Arterioscler. Thromb. Vasc. Biol.">
        <title>Clinical expression of familial hypercholesterolemia in clusters of mutations of the LDL receptor gene that cause a receptor-defective or receptor-negative phenotype.</title>
        <authorList>
            <person name="Bertolini S."/>
            <person name="Cantafora A."/>
            <person name="Averna M."/>
            <person name="Cortese C."/>
            <person name="Motti C."/>
            <person name="Martini S."/>
            <person name="Pes G."/>
            <person name="Postiglione A."/>
            <person name="Stefanutti C."/>
            <person name="Blotta I."/>
            <person name="Pisciotta L."/>
            <person name="Rolleri M."/>
            <person name="Langheim S."/>
            <person name="Ghisellini M."/>
            <person name="Rabbone I."/>
            <person name="Calandra S."/>
        </authorList>
    </citation>
    <scope>VARIANTS FHCL1 PHE-134; TRP-134; TYR-222; PRO-254; ARG-276; ARG-318; THR-370; GLY-415 AND TYR-579</scope>
</reference>
<reference key="85">
    <citation type="journal article" date="2000" name="Hum. Mutat.">
        <title>Segregation of a novel LDLR gene mutation (I430T) with familial hypercholesterolaemia in a Greek pedigree.</title>
        <authorList>
            <person name="Miltiadous G."/>
            <person name="Elisaf M."/>
            <person name="Xenophontos S."/>
            <person name="Manoli P."/>
            <person name="Cariolou M.A."/>
        </authorList>
    </citation>
    <scope>VARIANT FHCL1 THR-451</scope>
</reference>
<reference key="86">
    <citation type="journal article" date="2000" name="J. Med. Genet.">
        <title>Predominance of a 6 bp deletion in exon 2 of the LDL receptor gene in Africans with familial hypercholesterolaemia.</title>
        <authorList>
            <person name="Thiart R."/>
            <person name="Scholtz C.L."/>
            <person name="Vergotine J."/>
            <person name="Hoogendijk C.F."/>
            <person name="de Villiers J.N.P."/>
            <person name="Nissen H."/>
            <person name="Brusgaard K."/>
            <person name="Gaffney D."/>
            <person name="Hoffs M.S."/>
            <person name="Vermaak W.J.H."/>
            <person name="Kotze M.J."/>
        </authorList>
    </citation>
    <scope>VARIANTS FHCL1 47-ASP-GLY-48 DEL; TRP-253; GLN-406; LYS-408; LEU-699 AND GLN-814</scope>
    <scope>VARIANT HIS-172</scope>
</reference>
<reference key="87">
    <citation type="journal article" date="2001" name="Clin. Genet.">
        <title>A novel mutation in exon 2 of the low-density lipoprotein-receptor gene in a patient with homozygous familial hypercholesterolemia.</title>
        <authorList>
            <person name="Takahashi M."/>
            <person name="Ikeda U."/>
            <person name="Takahashi S."/>
            <person name="Hattori H."/>
            <person name="Iwasaki T."/>
            <person name="Ishihara M."/>
            <person name="Egashira T."/>
            <person name="Honma S."/>
            <person name="Asano Y."/>
            <person name="Shimada K.A."/>
        </authorList>
    </citation>
    <scope>VARIANT FHCL1 SER-46</scope>
</reference>
<reference key="88">
    <citation type="journal article" date="2001" name="Hum. Mutat.">
        <title>Identification of recurrent and novel mutations in the LDL receptor gene in German patients with familial hypercholesterolemia.</title>
        <authorList>
            <person name="Nauck M.S."/>
            <person name="Koester W."/>
            <person name="Doerfer K."/>
            <person name="Eckes J."/>
            <person name="Scharnagl H."/>
            <person name="Gierens H."/>
            <person name="Nissen H."/>
            <person name="Nauck M.A."/>
            <person name="Wieland H."/>
            <person name="Maerz W."/>
        </authorList>
    </citation>
    <scope>INVOLVEMENT IN FHCL1</scope>
    <scope>VARIANTS FHCL1 ARG-143; TYR-148; TRP-184; CYS-574; ASP-639 AND ASP-806</scope>
    <scope>VARIANTS TRP-257 AND ILE-742</scope>
</reference>
<reference key="89">
    <citation type="journal article" date="2006" name="J. Med. Genet.">
        <title>Genetic causes of familial hypercholesterolaemia in patients in the UK: relation to plasma lipid levels and coronary heart disease risk.</title>
        <authorList>
            <consortium name="Simon Broome familial hyperlipidemia register group and scientific steering committee"/>
            <person name="Humphries S.E."/>
            <person name="Whittall R.A."/>
            <person name="Hubbart C.S."/>
            <person name="Maplebeck S."/>
            <person name="Cooper J.A."/>
            <person name="Soutar A.K."/>
            <person name="Naoumova R."/>
            <person name="Thompson G.R."/>
            <person name="Seed M."/>
            <person name="Durrington P.N."/>
            <person name="Miller J.P."/>
            <person name="Betteridge D.J.B."/>
            <person name="Neil H.A.W."/>
        </authorList>
    </citation>
    <scope>VARIANTS FHCL1 TYR-89; LYS-101; GLY-218 DEL; GLY-221; ASN-221; TYR-358; PRO-479; HIS-482; ARG-677 AND LEU-685</scope>
    <scope>FUNCTION</scope>
</reference>
<reference key="90">
    <citation type="journal article" date="2007" name="J. Inherit. Metab. Dis.">
        <title>Diagnosis of families with familial hypercholesterolaemia and/or Apo B-100 defect by means of DNA analysis of LDL-receptor gene mutations.</title>
        <authorList>
            <person name="Widhalm K."/>
            <person name="Dirisamer A."/>
            <person name="Lindemayr A."/>
            <person name="Kostner G."/>
        </authorList>
    </citation>
    <scope>VARIANTS FHCL1 THR-50; LEU-211; GLY-221; GLU-266; LYS-277; ARG-286; ARG-314; ARG-352; LYS-408; THR-431; HIS-442; MET-523; GLY-577; THR-585 AND LEU-685</scope>
</reference>
<reference key="91">
    <citation type="journal article" date="2009" name="Clin. Biochem.">
        <title>Genetic diagnosis of familial hypercholesterolemia using a DNA-array based platform.</title>
        <authorList>
            <person name="Alonso R."/>
            <person name="Defesche J.C."/>
            <person name="Tejedor D."/>
            <person name="Castillo S."/>
            <person name="Stef M."/>
            <person name="Mata N."/>
            <person name="Gomez-Enterria P."/>
            <person name="Martinez-Faedo C."/>
            <person name="Forga L."/>
            <person name="Mata P."/>
        </authorList>
    </citation>
    <scope>VARIANTS FHCL1 TYR-155; GLY-300; GLY-301; TRP-416 AND ASN-454</scope>
</reference>
<reference key="92">
    <citation type="journal article" date="2009" name="Hum. Mutat.">
        <title>The molecular basis of familial hypercholesterolemia in Lebanon: spectrum of LDLR mutations and role of PCSK9 as a modifier gene.</title>
        <authorList>
            <person name="Abifadel M."/>
            <person name="Rabes J.-P."/>
            <person name="Jambart S."/>
            <person name="Halaby G."/>
            <person name="Gannage-Yared M.-H."/>
            <person name="Sarkis A."/>
            <person name="Beaino G."/>
            <person name="Varret M."/>
            <person name="Salem N."/>
            <person name="Corbani S."/>
            <person name="Aydenian H."/>
            <person name="Junien C."/>
            <person name="Munnich A."/>
            <person name="Boileau C."/>
        </authorList>
    </citation>
    <scope>VARIANTS FHCL1 PRO-254; TYR-356; TYR-358; THR-451 AND SER-826</scope>
</reference>
<reference key="93">
    <citation type="journal article" date="2011" name="BMC Med. Genet.">
        <title>Analysis of sequence variations in low-density lipoprotein receptor gene among Malaysian patients with familial hypercholesterolemia.</title>
        <authorList>
            <person name="Al-Khateeb A."/>
            <person name="Zahri M.K."/>
            <person name="Mohamed M.S."/>
            <person name="Sasongko T.H."/>
            <person name="Ibrahim S."/>
            <person name="Yusof Z."/>
            <person name="Zilfalil B.A."/>
        </authorList>
    </citation>
    <scope>VARIANTS FHCL1 HIS-139; LYS-201; SER-255; ASN-304 AND GLY-471</scope>
</reference>
<reference key="94">
    <citation type="journal article" date="2012" name="Mol. Biol. Rep.">
        <title>A novel mutation (Cys308Phe) of the LDL receptor gene in families from the South-Eastern part of Poland.</title>
        <authorList>
            <person name="Walus-Miarka M."/>
            <person name="Sanak M."/>
            <person name="Idzior-Walus B."/>
            <person name="Miarka P."/>
            <person name="Witek P."/>
            <person name="Malecki M.T."/>
            <person name="Czarnecka D."/>
        </authorList>
    </citation>
    <scope>VARIANT FHCL1 PHE-329</scope>
</reference>
<reference key="95">
    <citation type="journal article" date="2014" name="Atherosclerosis">
        <title>Presence and type of low density lipoprotein receptor (LDLR) mutation influences the lipid profile and response to lipid-lowering therapy in Brazilian patients with heterozygous familial hypercholesterolemia.</title>
        <authorList>
            <person name="Santos P.C."/>
            <person name="Morgan A.C."/>
            <person name="Jannes C.E."/>
            <person name="Turolla L."/>
            <person name="Krieger J.E."/>
            <person name="Santos R.D."/>
            <person name="Pereira A.C."/>
        </authorList>
    </citation>
    <scope>VARIANTS FHCL1 TYR-160; ALA-168; LEU-177; TYR-184; GLY-221; GLN-228; LYS-228; TRP-276; TYR-285; GLY-301; PHE-318; CYS-326; SER-343; TYR-368; ASP-373; TRP-406; MET-429; ASN-492; ASP-549; HIS-564; HIS-574; TRP-595; HIS-601; LEU-685; LEU-699; MET-797 AND GLN-814</scope>
</reference>
<reference key="96">
    <citation type="journal article" date="2015" name="Atherosclerosis">
        <title>Activity-associated effect of LDL receptor missense variants located in the cysteine-rich repeats.</title>
        <authorList>
            <person name="Etxebarria A."/>
            <person name="Benito-Vicente A."/>
            <person name="Stef M."/>
            <person name="Ostolaza H."/>
            <person name="Palacios L."/>
            <person name="Martin C."/>
        </authorList>
    </citation>
    <scope>CHARACTERIZATION OF VARIANTS FHCL1 ARG-116; ASN-168; ASN-172; GLY-300 AND GLY-301</scope>
    <scope>CHARACTERIZATION OF VARIANT TRP-257</scope>
</reference>
<reference key="97">
    <citation type="journal article" date="2015" name="Hum. Mutat.">
        <title>Functional characterization and classification of frequent low-density lipoprotein receptor variants.</title>
        <authorList>
            <person name="Etxebarria A."/>
            <person name="Benito-Vicente A."/>
            <person name="Palacios L."/>
            <person name="Stef M."/>
            <person name="Cenarro A."/>
            <person name="Civeira F."/>
            <person name="Ostolaza H."/>
            <person name="Martin C."/>
        </authorList>
    </citation>
    <scope>CHARACTERIZATION OF VARIANTS FHCL1 TYR-155; TRP-416; ASN-454; GLY-577 AND LYS-825</scope>
</reference>